<evidence type="ECO:0000250" key="1"/>
<evidence type="ECO:0000250" key="2">
    <source>
        <dbReference type="UniProtKB" id="Q8BTM8"/>
    </source>
</evidence>
<evidence type="ECO:0000255" key="3">
    <source>
        <dbReference type="PROSITE-ProRule" id="PRU00044"/>
    </source>
</evidence>
<evidence type="ECO:0000256" key="4">
    <source>
        <dbReference type="SAM" id="MobiDB-lite"/>
    </source>
</evidence>
<evidence type="ECO:0000269" key="5">
    <source>
    </source>
</evidence>
<evidence type="ECO:0000269" key="6">
    <source>
    </source>
</evidence>
<evidence type="ECO:0000269" key="7">
    <source>
    </source>
</evidence>
<evidence type="ECO:0000269" key="8">
    <source>
    </source>
</evidence>
<evidence type="ECO:0000269" key="9">
    <source>
    </source>
</evidence>
<evidence type="ECO:0000269" key="10">
    <source>
    </source>
</evidence>
<evidence type="ECO:0000269" key="11">
    <source>
    </source>
</evidence>
<evidence type="ECO:0000269" key="12">
    <source>
    </source>
</evidence>
<evidence type="ECO:0000269" key="13">
    <source>
    </source>
</evidence>
<evidence type="ECO:0000269" key="14">
    <source>
    </source>
</evidence>
<evidence type="ECO:0000269" key="15">
    <source>
    </source>
</evidence>
<evidence type="ECO:0000269" key="16">
    <source>
    </source>
</evidence>
<evidence type="ECO:0000269" key="17">
    <source>
    </source>
</evidence>
<evidence type="ECO:0000269" key="18">
    <source>
    </source>
</evidence>
<evidence type="ECO:0000269" key="19">
    <source>
    </source>
</evidence>
<evidence type="ECO:0000269" key="20">
    <source>
    </source>
</evidence>
<evidence type="ECO:0000269" key="21">
    <source>
    </source>
</evidence>
<evidence type="ECO:0000269" key="22">
    <source>
    </source>
</evidence>
<evidence type="ECO:0000269" key="23">
    <source>
    </source>
</evidence>
<evidence type="ECO:0000269" key="24">
    <source>
    </source>
</evidence>
<evidence type="ECO:0000269" key="25">
    <source>
    </source>
</evidence>
<evidence type="ECO:0000269" key="26">
    <source>
    </source>
</evidence>
<evidence type="ECO:0000269" key="27">
    <source>
    </source>
</evidence>
<evidence type="ECO:0000269" key="28">
    <source>
    </source>
</evidence>
<evidence type="ECO:0000269" key="29">
    <source>
    </source>
</evidence>
<evidence type="ECO:0000269" key="30">
    <source>
    </source>
</evidence>
<evidence type="ECO:0000269" key="31">
    <source>
    </source>
</evidence>
<evidence type="ECO:0000269" key="32">
    <source>
    </source>
</evidence>
<evidence type="ECO:0000269" key="33">
    <source>
    </source>
</evidence>
<evidence type="ECO:0000269" key="34">
    <source>
    </source>
</evidence>
<evidence type="ECO:0000269" key="35">
    <source>
    </source>
</evidence>
<evidence type="ECO:0000269" key="36">
    <source>
    </source>
</evidence>
<evidence type="ECO:0000269" key="37">
    <source>
    </source>
</evidence>
<evidence type="ECO:0000269" key="38">
    <source>
    </source>
</evidence>
<evidence type="ECO:0000269" key="39">
    <source>
    </source>
</evidence>
<evidence type="ECO:0000269" key="40">
    <source>
    </source>
</evidence>
<evidence type="ECO:0000269" key="41">
    <source>
    </source>
</evidence>
<evidence type="ECO:0000269" key="42">
    <source>
    </source>
</evidence>
<evidence type="ECO:0000269" key="43">
    <source>
    </source>
</evidence>
<evidence type="ECO:0000269" key="44">
    <source>
    </source>
</evidence>
<evidence type="ECO:0000269" key="45">
    <source>
    </source>
</evidence>
<evidence type="ECO:0000269" key="46">
    <source>
    </source>
</evidence>
<evidence type="ECO:0000269" key="47">
    <source>
    </source>
</evidence>
<evidence type="ECO:0000269" key="48">
    <source>
    </source>
</evidence>
<evidence type="ECO:0000269" key="49">
    <source>
    </source>
</evidence>
<evidence type="ECO:0000269" key="50">
    <source>
    </source>
</evidence>
<evidence type="ECO:0000269" key="51">
    <source ref="9"/>
</evidence>
<evidence type="ECO:0000303" key="52">
    <source>
    </source>
</evidence>
<evidence type="ECO:0000303" key="53">
    <source>
    </source>
</evidence>
<evidence type="ECO:0000305" key="54"/>
<evidence type="ECO:0007744" key="55">
    <source>
    </source>
</evidence>
<evidence type="ECO:0007744" key="56">
    <source>
    </source>
</evidence>
<evidence type="ECO:0007744" key="57">
    <source>
    </source>
</evidence>
<evidence type="ECO:0007744" key="58">
    <source>
    </source>
</evidence>
<evidence type="ECO:0007744" key="59">
    <source>
    </source>
</evidence>
<evidence type="ECO:0007744" key="60">
    <source>
    </source>
</evidence>
<evidence type="ECO:0007744" key="61">
    <source>
    </source>
</evidence>
<evidence type="ECO:0007744" key="62">
    <source>
    </source>
</evidence>
<evidence type="ECO:0007744" key="63">
    <source>
    </source>
</evidence>
<evidence type="ECO:0007744" key="64">
    <source>
    </source>
</evidence>
<evidence type="ECO:0007744" key="65">
    <source>
    </source>
</evidence>
<evidence type="ECO:0007744" key="66">
    <source>
    </source>
</evidence>
<evidence type="ECO:0007744" key="67">
    <source>
    </source>
</evidence>
<evidence type="ECO:0007744" key="68">
    <source>
    </source>
</evidence>
<evidence type="ECO:0007744" key="69">
    <source>
    </source>
</evidence>
<evidence type="ECO:0007744" key="70">
    <source>
    </source>
</evidence>
<evidence type="ECO:0007744" key="71">
    <source>
    </source>
</evidence>
<evidence type="ECO:0007744" key="72">
    <source>
    </source>
</evidence>
<evidence type="ECO:0007744" key="73">
    <source>
    </source>
</evidence>
<evidence type="ECO:0007744" key="74">
    <source>
    </source>
</evidence>
<evidence type="ECO:0007744" key="75">
    <source>
    </source>
</evidence>
<evidence type="ECO:0007829" key="76">
    <source>
        <dbReference type="PDB" id="2AAV"/>
    </source>
</evidence>
<evidence type="ECO:0007829" key="77">
    <source>
        <dbReference type="PDB" id="2BP3"/>
    </source>
</evidence>
<evidence type="ECO:0007829" key="78">
    <source>
        <dbReference type="PDB" id="2J3S"/>
    </source>
</evidence>
<evidence type="ECO:0007829" key="79">
    <source>
        <dbReference type="PDB" id="2K3T"/>
    </source>
</evidence>
<evidence type="ECO:0007829" key="80">
    <source>
        <dbReference type="PDB" id="2K7P"/>
    </source>
</evidence>
<evidence type="ECO:0007829" key="81">
    <source>
        <dbReference type="PDB" id="2K7Q"/>
    </source>
</evidence>
<evidence type="ECO:0007829" key="82">
    <source>
        <dbReference type="PDB" id="3CNK"/>
    </source>
</evidence>
<evidence type="ECO:0007829" key="83">
    <source>
        <dbReference type="PDB" id="3HOC"/>
    </source>
</evidence>
<evidence type="ECO:0007829" key="84">
    <source>
        <dbReference type="PDB" id="3HOP"/>
    </source>
</evidence>
<evidence type="ECO:0007829" key="85">
    <source>
        <dbReference type="PDB" id="3HOR"/>
    </source>
</evidence>
<evidence type="ECO:0007829" key="86">
    <source>
        <dbReference type="PDB" id="3RGH"/>
    </source>
</evidence>
<evidence type="ECO:0007829" key="87">
    <source>
        <dbReference type="PDB" id="4M9P"/>
    </source>
</evidence>
<evidence type="ECO:0007829" key="88">
    <source>
        <dbReference type="PDB" id="4P3W"/>
    </source>
</evidence>
<evidence type="ECO:0007829" key="89">
    <source>
        <dbReference type="PDB" id="5XR1"/>
    </source>
</evidence>
<evidence type="ECO:0007829" key="90">
    <source>
        <dbReference type="PDB" id="7SC4"/>
    </source>
</evidence>
<name>FLNA_HUMAN</name>
<gene>
    <name type="primary">FLNA</name>
    <name type="synonym">FLN</name>
    <name type="synonym">FLN1</name>
</gene>
<accession>P21333</accession>
<accession>E9KL45</accession>
<accession>Q5HY53</accession>
<accession>Q5HY55</accession>
<accession>Q8NF52</accession>
<organism>
    <name type="scientific">Homo sapiens</name>
    <name type="common">Human</name>
    <dbReference type="NCBI Taxonomy" id="9606"/>
    <lineage>
        <taxon>Eukaryota</taxon>
        <taxon>Metazoa</taxon>
        <taxon>Chordata</taxon>
        <taxon>Craniata</taxon>
        <taxon>Vertebrata</taxon>
        <taxon>Euteleostomi</taxon>
        <taxon>Mammalia</taxon>
        <taxon>Eutheria</taxon>
        <taxon>Euarchontoglires</taxon>
        <taxon>Primates</taxon>
        <taxon>Haplorrhini</taxon>
        <taxon>Catarrhini</taxon>
        <taxon>Hominidae</taxon>
        <taxon>Homo</taxon>
    </lineage>
</organism>
<feature type="initiator methionine" description="Removed" evidence="51 63 74">
    <location>
        <position position="1"/>
    </location>
</feature>
<feature type="chain" id="PRO_0000087296" description="Filamin-A">
    <location>
        <begin position="2"/>
        <end position="2647"/>
    </location>
</feature>
<feature type="domain" description="Calponin-homology (CH) 1" evidence="3">
    <location>
        <begin position="43"/>
        <end position="149"/>
    </location>
</feature>
<feature type="domain" description="Calponin-homology (CH) 2" evidence="3">
    <location>
        <begin position="166"/>
        <end position="269"/>
    </location>
</feature>
<feature type="repeat" description="Filamin 1">
    <location>
        <begin position="276"/>
        <end position="374"/>
    </location>
</feature>
<feature type="repeat" description="Filamin 2">
    <location>
        <begin position="376"/>
        <end position="474"/>
    </location>
</feature>
<feature type="repeat" description="Filamin 3">
    <location>
        <begin position="475"/>
        <end position="570"/>
    </location>
</feature>
<feature type="repeat" description="Filamin 4">
    <location>
        <begin position="571"/>
        <end position="663"/>
    </location>
</feature>
<feature type="repeat" description="Filamin 5">
    <location>
        <begin position="667"/>
        <end position="763"/>
    </location>
</feature>
<feature type="repeat" description="Filamin 6">
    <location>
        <begin position="764"/>
        <end position="866"/>
    </location>
</feature>
<feature type="repeat" description="Filamin 7">
    <location>
        <begin position="867"/>
        <end position="965"/>
    </location>
</feature>
<feature type="repeat" description="Filamin 8">
    <location>
        <begin position="966"/>
        <end position="1061"/>
    </location>
</feature>
<feature type="repeat" description="Filamin 9">
    <location>
        <begin position="1062"/>
        <end position="1154"/>
    </location>
</feature>
<feature type="repeat" description="Filamin 10">
    <location>
        <begin position="1155"/>
        <end position="1249"/>
    </location>
</feature>
<feature type="repeat" description="Filamin 11">
    <location>
        <begin position="1250"/>
        <end position="1349"/>
    </location>
</feature>
<feature type="repeat" description="Filamin 12">
    <location>
        <begin position="1350"/>
        <end position="1442"/>
    </location>
</feature>
<feature type="repeat" description="Filamin 13">
    <location>
        <begin position="1443"/>
        <end position="1539"/>
    </location>
</feature>
<feature type="repeat" description="Filamin 14">
    <location>
        <begin position="1540"/>
        <end position="1636"/>
    </location>
</feature>
<feature type="repeat" description="Filamin 15">
    <location>
        <begin position="1649"/>
        <end position="1740"/>
    </location>
</feature>
<feature type="repeat" description="Filamin 16">
    <location>
        <begin position="1779"/>
        <end position="1860"/>
    </location>
</feature>
<feature type="repeat" description="Filamin 17">
    <location>
        <begin position="1861"/>
        <end position="1950"/>
    </location>
</feature>
<feature type="repeat" description="Filamin 18">
    <location>
        <begin position="1951"/>
        <end position="2039"/>
    </location>
</feature>
<feature type="repeat" description="Filamin 19">
    <location>
        <begin position="2042"/>
        <end position="2131"/>
    </location>
</feature>
<feature type="repeat" description="Filamin 20">
    <location>
        <begin position="2132"/>
        <end position="2230"/>
    </location>
</feature>
<feature type="repeat" description="Filamin 21">
    <location>
        <begin position="2233"/>
        <end position="2325"/>
    </location>
</feature>
<feature type="repeat" description="Filamin 22">
    <location>
        <begin position="2327"/>
        <end position="2420"/>
    </location>
</feature>
<feature type="repeat" description="Filamin 23">
    <location>
        <begin position="2424"/>
        <end position="2516"/>
    </location>
</feature>
<feature type="repeat" description="Filamin 24">
    <location>
        <begin position="2552"/>
        <end position="2646"/>
    </location>
</feature>
<feature type="region of interest" description="Disordered" evidence="4">
    <location>
        <begin position="1"/>
        <end position="39"/>
    </location>
</feature>
<feature type="region of interest" description="Actin-binding">
    <location>
        <begin position="2"/>
        <end position="274"/>
    </location>
</feature>
<feature type="region of interest" description="Disordered" evidence="4">
    <location>
        <begin position="271"/>
        <end position="294"/>
    </location>
</feature>
<feature type="region of interest" description="Disordered" evidence="4">
    <location>
        <begin position="1361"/>
        <end position="1382"/>
    </location>
</feature>
<feature type="region of interest" description="Interaction with furin" evidence="1">
    <location>
        <begin position="1490"/>
        <end position="1607"/>
    </location>
</feature>
<feature type="region of interest" description="Hinge 1">
    <location>
        <begin position="1741"/>
        <end position="1778"/>
    </location>
</feature>
<feature type="region of interest" description="Self-association site, tail">
    <location>
        <begin position="2517"/>
        <end position="2647"/>
    </location>
</feature>
<feature type="region of interest" description="Hinge 2">
    <location>
        <begin position="2517"/>
        <end position="2551"/>
    </location>
</feature>
<feature type="compositionally biased region" description="Low complexity" evidence="4">
    <location>
        <begin position="1"/>
        <end position="15"/>
    </location>
</feature>
<feature type="compositionally biased region" description="Basic and acidic residues" evidence="4">
    <location>
        <begin position="22"/>
        <end position="39"/>
    </location>
</feature>
<feature type="site" description="Cleavage; by calpain">
    <location>
        <begin position="1761"/>
        <end position="1762"/>
    </location>
</feature>
<feature type="modified residue" description="N-acetylserine" evidence="51 63 74">
    <location>
        <position position="2"/>
    </location>
</feature>
<feature type="modified residue" description="Phosphoserine" evidence="67">
    <location>
        <position position="11"/>
    </location>
</feature>
<feature type="modified residue" description="N6-acetyllysine" evidence="2">
    <location>
        <position position="376"/>
    </location>
</feature>
<feature type="modified residue" description="N6-acetyllysine" evidence="64">
    <location>
        <position position="508"/>
    </location>
</feature>
<feature type="modified residue" description="N6-acetyllysine" evidence="64">
    <location>
        <position position="700"/>
    </location>
</feature>
<feature type="modified residue" description="N6-acetyllysine" evidence="64">
    <location>
        <position position="781"/>
    </location>
</feature>
<feature type="modified residue" description="N6-acetyllysine" evidence="64">
    <location>
        <position position="837"/>
    </location>
</feature>
<feature type="modified residue" description="N6-acetyllysine" evidence="2">
    <location>
        <position position="865"/>
    </location>
</feature>
<feature type="modified residue" description="N6-acetyllysine" evidence="2">
    <location>
        <position position="906"/>
    </location>
</feature>
<feature type="modified residue" description="Phosphoserine" evidence="2">
    <location>
        <position position="968"/>
    </location>
</feature>
<feature type="modified residue" description="Phosphoserine" evidence="69">
    <location>
        <position position="1055"/>
    </location>
</feature>
<feature type="modified residue" description="N6-acetyllysine; alternate" evidence="2">
    <location>
        <position position="1071"/>
    </location>
</feature>
<feature type="modified residue" description="N6-succinyllysine; alternate" evidence="2">
    <location>
        <position position="1071"/>
    </location>
</feature>
<feature type="modified residue" description="Phosphoserine" evidence="61 66 67 68 69">
    <location>
        <position position="1081"/>
    </location>
</feature>
<feature type="modified residue" description="Phosphoserine" evidence="55 57 58 59 60 65 66 67 68">
    <location>
        <position position="1084"/>
    </location>
</feature>
<feature type="modified residue" description="Phosphothreonine" evidence="56">
    <location>
        <position position="1089"/>
    </location>
</feature>
<feature type="modified residue" description="Phosphoserine" evidence="68">
    <location>
        <position position="1301"/>
    </location>
</feature>
<feature type="modified residue" description="Phosphoserine" evidence="60">
    <location>
        <position position="1338"/>
    </location>
</feature>
<feature type="modified residue" description="N6-acetyllysine" evidence="2">
    <location>
        <position position="1372"/>
    </location>
</feature>
<feature type="modified residue" description="Phosphoserine" evidence="55 56 58 60 62 66 67 68 69">
    <location>
        <position position="1459"/>
    </location>
</feature>
<feature type="modified residue" description="Phosphoserine" evidence="60 66 68">
    <location>
        <position position="1533"/>
    </location>
</feature>
<feature type="modified residue" description="N6-acetyllysine" evidence="2">
    <location>
        <position position="1538"/>
    </location>
</feature>
<feature type="modified residue" description="Phosphoserine" evidence="60 68">
    <location>
        <position position="1630"/>
    </location>
</feature>
<feature type="modified residue" description="Phosphoserine" evidence="66 69">
    <location>
        <position position="1734"/>
    </location>
</feature>
<feature type="modified residue" description="Phosphoserine" evidence="68">
    <location>
        <position position="1835"/>
    </location>
</feature>
<feature type="modified residue" description="Phosphoserine" evidence="69">
    <location>
        <position position="1967"/>
    </location>
</feature>
<feature type="modified residue" description="Phosphoserine" evidence="60 66">
    <location>
        <position position="2053"/>
    </location>
</feature>
<feature type="modified residue" description="Phosphoserine" evidence="68">
    <location>
        <position position="2128"/>
    </location>
</feature>
<feature type="modified residue" description="Phosphoserine" evidence="44 45 56 58 60 66 67 68 69">
    <location>
        <position position="2152"/>
    </location>
</feature>
<feature type="modified residue" description="Phosphoserine" evidence="58 68 69">
    <location>
        <position position="2158"/>
    </location>
</feature>
<feature type="modified residue" description="Phosphoserine" evidence="69">
    <location>
        <position position="2163"/>
    </location>
</feature>
<feature type="modified residue" description="Phosphoserine" evidence="2">
    <location>
        <position position="2180"/>
    </location>
</feature>
<feature type="modified residue" description="Phosphoserine" evidence="56 66 68">
    <location>
        <position position="2284"/>
    </location>
</feature>
<feature type="modified residue" description="Phosphoserine" evidence="60 66 67 68">
    <location>
        <position position="2327"/>
    </location>
</feature>
<feature type="modified residue" description="Phosphoserine" evidence="2">
    <location>
        <position position="2329"/>
    </location>
</feature>
<feature type="modified residue" description="Phosphothreonine" evidence="44 66 68">
    <location>
        <position position="2336"/>
    </location>
</feature>
<feature type="modified residue" description="Phosphoserine" evidence="68">
    <location>
        <position position="2338"/>
    </location>
</feature>
<feature type="modified residue" description="Phosphoserine" evidence="2">
    <location>
        <position position="2370"/>
    </location>
</feature>
<feature type="modified residue" description="Phosphoserine" evidence="60 66">
    <location>
        <position position="2414"/>
    </location>
</feature>
<feature type="modified residue" description="Phosphoserine" evidence="60 68">
    <location>
        <position position="2510"/>
    </location>
</feature>
<feature type="modified residue" description="Phosphoserine" evidence="2">
    <location>
        <position position="2523"/>
    </location>
</feature>
<feature type="modified residue" description="Phosphoserine" evidence="2">
    <location>
        <position position="2526"/>
    </location>
</feature>
<feature type="modified residue" description="N6-acetyllysine; alternate" evidence="2">
    <location>
        <position position="2569"/>
    </location>
</feature>
<feature type="modified residue" description="N6-succinyllysine; alternate" evidence="2">
    <location>
        <position position="2569"/>
    </location>
</feature>
<feature type="modified residue" description="N6-acetyllysine" evidence="2">
    <location>
        <position position="2575"/>
    </location>
</feature>
<feature type="modified residue" description="Phosphothreonine" evidence="2">
    <location>
        <position position="2599"/>
    </location>
</feature>
<feature type="modified residue" description="N6-acetyllysine" evidence="64">
    <location>
        <position position="2607"/>
    </location>
</feature>
<feature type="modified residue" description="N6-acetyllysine" evidence="64">
    <location>
        <position position="2621"/>
    </location>
</feature>
<feature type="cross-link" description="Glycyl lysine isopeptide (Lys-Gly) (interchain with G-Cter in ubiquitin)" evidence="42">
    <location>
        <position position="42"/>
    </location>
</feature>
<feature type="cross-link" description="Glycyl lysine isopeptide (Lys-Gly) (interchain with G-Cter in ubiquitin)" evidence="42">
    <location>
        <position position="43"/>
    </location>
</feature>
<feature type="cross-link" description="Glycyl lysine isopeptide (Lys-Gly) (interchain with G-Cter in ubiquitin)" evidence="42">
    <location>
        <position position="135"/>
    </location>
</feature>
<feature type="cross-link" description="Glycyl lysine isopeptide (Lys-Gly) (interchain with G-Cter in SUMO1); alternate" evidence="70">
    <location>
        <position position="299"/>
    </location>
</feature>
<feature type="cross-link" description="Glycyl lysine isopeptide (Lys-Gly) (interchain with G-Cter in SUMO2); alternate" evidence="70 71 72 73 75">
    <location>
        <position position="299"/>
    </location>
</feature>
<feature type="splice variant" id="VSP_035454" description="In isoform 2." evidence="53">
    <location>
        <begin position="1649"/>
        <end position="1656"/>
    </location>
</feature>
<feature type="splice variant" id="VSP_062479" description="In isoform 3." evidence="8">
    <location>
        <begin position="2127"/>
        <end position="2167"/>
    </location>
</feature>
<feature type="sequence variant" id="VAR_022734" description="In PVNH1; dbSNP:rs137853313." evidence="15">
    <original>A</original>
    <variation>G</variation>
    <location>
        <position position="39"/>
    </location>
</feature>
<feature type="sequence variant" id="VAR_015699" description="In PVNH1; dbSNP:rs28935169." evidence="9">
    <original>E</original>
    <variation>V</variation>
    <location>
        <position position="82"/>
    </location>
</feature>
<feature type="sequence variant" id="VAR_031305" description="In PVNH1." evidence="13">
    <original>M</original>
    <variation>V</variation>
    <location>
        <position position="102"/>
    </location>
</feature>
<feature type="sequence variant" id="VAR_031306" description="In PVNH1; dbSNP:rs137853315." evidence="18">
    <original>A</original>
    <variation>V</variation>
    <location>
        <position position="128"/>
    </location>
</feature>
<feature type="sequence variant" id="VAR_031307" description="In PVNH1." evidence="13">
    <original>S</original>
    <variation>F</variation>
    <location>
        <position position="149"/>
    </location>
</feature>
<feature type="sequence variant" id="VAR_015713" description="In OPD2; dbSNP:rs863223628." evidence="12">
    <original>Q</original>
    <variation>P</variation>
    <location>
        <position position="170"/>
    </location>
</feature>
<feature type="sequence variant" id="VAR_015714" description="In OPD1; dbSNP:rs2148119399." evidence="12">
    <original>L</original>
    <variation>F</variation>
    <location>
        <position position="172"/>
    </location>
</feature>
<feature type="sequence variant" id="VAR_076500" description="In OPD2; uncertain significance." evidence="47">
    <original>N</original>
    <variation>S</variation>
    <location>
        <position position="187"/>
    </location>
</feature>
<feature type="sequence variant" id="VAR_015715" description="In OPD2." evidence="12 47">
    <original>R</original>
    <variation>G</variation>
    <location>
        <position position="196"/>
    </location>
</feature>
<feature type="sequence variant" id="VAR_015716" description="In OPD1; dbSNP:rs137853317." evidence="12">
    <original>R</original>
    <variation>W</variation>
    <location>
        <position position="196"/>
    </location>
</feature>
<feature type="sequence variant" id="VAR_015717" description="In OPD2." evidence="12">
    <original>A</original>
    <variation>S</variation>
    <location>
        <position position="200"/>
    </location>
</feature>
<feature type="sequence variant" id="VAR_031308" description="In OPD1; dbSNP:rs137853314." evidence="17">
    <original>D</original>
    <variation>Y</variation>
    <location>
        <position position="203"/>
    </location>
</feature>
<feature type="sequence variant" id="VAR_015700" description="In OPD1; dbSNP:rs28935469." evidence="12 47">
    <original>P</original>
    <variation>L</variation>
    <location>
        <position position="207"/>
    </location>
</feature>
<feature type="sequence variant" id="VAR_058720" description="In OPD2; dbSNP:rs137853318." evidence="26">
    <original>C</original>
    <variation>F</variation>
    <location>
        <position position="210"/>
    </location>
</feature>
<feature type="sequence variant" id="VAR_015701" description="In OPD2; dbSNP:rs28935470." evidence="12">
    <original>E</original>
    <variation>K</variation>
    <location>
        <position position="254"/>
    </location>
</feature>
<feature type="sequence variant" id="VAR_076501" description="In OPD1; uncertain significance." evidence="47">
    <original>A</original>
    <variation>T</variation>
    <location>
        <position position="267"/>
    </location>
</feature>
<feature type="sequence variant" id="VAR_015718" description="In OPD2." evidence="12">
    <original>A</original>
    <variation>P</variation>
    <location>
        <position position="273"/>
    </location>
</feature>
<feature type="sequence variant" id="VAR_064156" description="In CVDPX; dbSNP:rs267606816." evidence="24">
    <original>G</original>
    <variation>R</variation>
    <location>
        <position position="288"/>
    </location>
</feature>
<feature type="sequence variant" id="VAR_012831" description="In dbSNP:rs1064816.">
    <original>V</original>
    <variation>A</variation>
    <location>
        <position position="320"/>
    </location>
</feature>
<feature type="sequence variant" id="VAR_012832" description="In dbSNP:rs1064817.">
    <original>F</original>
    <variation>L</variation>
    <location>
        <position position="370"/>
    </location>
</feature>
<feature type="sequence variant" id="VAR_069803" description="In dbSNP:rs36051194." evidence="12">
    <original>T</original>
    <variation>M</variation>
    <location>
        <position position="429"/>
    </location>
</feature>
<feature type="sequence variant" id="VAR_031309" description="In dbSNP:rs143873938." evidence="11 35">
    <original>V</original>
    <variation>M</variation>
    <location>
        <position position="528"/>
    </location>
</feature>
<feature type="sequence variant" id="VAR_012833" description="In dbSNP:rs730319.">
    <original>V</original>
    <variation>A</variation>
    <location>
        <position position="552"/>
    </location>
</feature>
<feature type="sequence variant" id="VAR_015719" description="In OPD2; dbSNP:rs782611953." evidence="12">
    <original>T</original>
    <variation>K</variation>
    <location>
        <position position="555"/>
    </location>
</feature>
<feature type="sequence variant" id="VAR_085766" description="Found in a child with developmental disabilities; uncertain significance." evidence="48">
    <original>V</original>
    <variation>L</variation>
    <location>
        <position position="606"/>
    </location>
</feature>
<feature type="sequence variant" id="VAR_064157" description="In CVDPX; dbSNP:rs267606815." evidence="24">
    <original>P</original>
    <variation>Q</variation>
    <location>
        <position position="637"/>
    </location>
</feature>
<feature type="sequence variant" id="VAR_012834" description="In PVNH1; dbSNP:rs137853311." evidence="6">
    <original>L</original>
    <variation>F</variation>
    <location>
        <position position="656"/>
    </location>
</feature>
<feature type="sequence variant" id="VAR_064158" description="In CVDPX; dbSNP:rs267606817." evidence="24">
    <original>V</original>
    <variation>D</variation>
    <location>
        <position position="711"/>
    </location>
</feature>
<feature type="sequence variant" id="VAR_076502" description="In OPD1; uncertain significance." evidence="47">
    <original>V</original>
    <variation>D</variation>
    <location>
        <position position="804"/>
    </location>
</feature>
<feature type="sequence variant" id="VAR_031310" description="In dbSNP:rs17091204.">
    <original>S</original>
    <variation>L</variation>
    <location>
        <position position="1012"/>
    </location>
</feature>
<feature type="sequence variant" id="VAR_076503" description="In FMD1; uncertain significance." evidence="47">
    <original>D</original>
    <variation>V</variation>
    <location>
        <position position="1142"/>
    </location>
</feature>
<feature type="sequence variant" id="VAR_015702" description="In FMD1; does not inhibit interaction with MIS18BP1; dbSNP:rs28935471." evidence="12 36">
    <original>D</original>
    <variation>A</variation>
    <location>
        <position position="1159"/>
    </location>
</feature>
<feature type="sequence variant" id="VAR_076504" description="In MNS; uncertain significance; dbSNP:rs2148112185." evidence="47">
    <original>V</original>
    <variation>L</variation>
    <location>
        <position position="1163"/>
    </location>
</feature>
<feature type="sequence variant" id="VAR_015720" description="In MNS; dbSNP:rs80338837." evidence="12">
    <original>D</original>
    <variation>E</variation>
    <location>
        <position position="1184"/>
    </location>
</feature>
<feature type="sequence variant" id="VAR_015721" description="In FMD1; dbSNP:rs137853312." evidence="12 22 47">
    <original>S</original>
    <variation>L</variation>
    <location>
        <position position="1186"/>
    </location>
</feature>
<feature type="sequence variant" id="VAR_015703" description="In MNS; does not inhibit interaction with MIS18BP1; dbSNP:rs28935472." evidence="12 36 47">
    <original>A</original>
    <variation>T</variation>
    <location>
        <position position="1188"/>
    </location>
</feature>
<feature type="sequence variant" id="VAR_015704" description="In MNS; does not inhibit interaction with MIS18BP1; dbSNP:rs28935473." evidence="12 36">
    <original>S</original>
    <variation>L</variation>
    <location>
        <position position="1199"/>
    </location>
</feature>
<feature type="sequence variant" id="VAR_058721" description="In FGS2; dbSNP:rs137853319." evidence="27">
    <original>P</original>
    <variation>L</variation>
    <location>
        <position position="1291"/>
    </location>
</feature>
<feature type="sequence variant" id="VAR_032083" description="In dbSNP:rs35504556.">
    <original>A</original>
    <variation>G</variation>
    <location>
        <position position="1419"/>
    </location>
</feature>
<feature type="sequence variant" id="VAR_015722" description="In FMD1." evidence="12">
    <location>
        <position position="1620"/>
    </location>
</feature>
<feature type="sequence variant" id="VAR_031311" description="In otopalatodigital spectrum disorder." evidence="14">
    <location>
        <begin position="1635"/>
        <end position="1637"/>
    </location>
</feature>
<feature type="sequence variant" id="VAR_015723" description="In OPD2." evidence="12">
    <original>C</original>
    <variation>F</variation>
    <location>
        <position position="1645"/>
    </location>
</feature>
<feature type="sequence variant" id="VAR_064159" description="In TOD." evidence="33">
    <location>
        <begin position="1724"/>
        <end position="1739"/>
    </location>
</feature>
<feature type="sequence variant" id="VAR_031312" description="In FMD1; dbSNP:rs137853316." evidence="22">
    <original>G</original>
    <variation>C</variation>
    <location>
        <position position="1728"/>
    </location>
</feature>
<feature type="sequence variant" id="VAR_012835" description="In dbSNP:rs57108893." evidence="6 12">
    <original>A</original>
    <variation>T</variation>
    <location>
        <position position="1764"/>
    </location>
</feature>
<feature type="sequence variant" id="VAR_067251" description="Found in a patient with macrothrombocytopenia; likely pathogenic; dbSNP:rs368750879." evidence="38">
    <original>E</original>
    <variation>K</variation>
    <location>
        <position position="1803"/>
    </location>
</feature>
<feature type="sequence variant" id="VAR_076505" description="In FMD1; uncertain significance." evidence="47">
    <original>H</original>
    <variation>R</variation>
    <location>
        <position position="1840"/>
    </location>
</feature>
<feature type="sequence variant" id="VAR_076506" description="In OPD1; uncertain significance; dbSNP:rs727503930." evidence="47">
    <original>R</original>
    <variation>H</variation>
    <location>
        <position position="2391"/>
    </location>
</feature>
<feature type="mutagenesis site" description="Abrogates ASB2alpha-mediated degradation without altering ASB2alpha binding; when associated with R-43 and R-135." evidence="42">
    <original>K</original>
    <variation>R</variation>
    <location>
        <position position="42"/>
    </location>
</feature>
<feature type="mutagenesis site" description="Abrogates ASB2alpha-mediated degradation without altering ASB2alpha binding; when associated with R-42 and R-135." evidence="42">
    <original>K</original>
    <variation>R</variation>
    <location>
        <position position="43"/>
    </location>
</feature>
<feature type="mutagenesis site" description="Abrogates ASB2alpha-mediated degradation without altering ASB2alpha binding; when associated with R-42 and R-43." evidence="42">
    <original>K</original>
    <variation>R</variation>
    <location>
        <position position="135"/>
    </location>
</feature>
<feature type="sequence conflict" description="In Ref. 10; AA sequence." evidence="54" ref="10">
    <original>I</original>
    <variation>T</variation>
    <location>
        <position position="44"/>
    </location>
</feature>
<feature type="sequence conflict" description="In Ref. 11; CAA49687." evidence="54" ref="11">
    <original>A</original>
    <variation>G</variation>
    <location>
        <position position="1772"/>
    </location>
</feature>
<feature type="sequence conflict" description="In Ref. 5; BAC03408." evidence="54" ref="5">
    <original>Q</original>
    <variation>R</variation>
    <location>
        <position position="2341"/>
    </location>
</feature>
<feature type="sequence conflict" description="In Ref. 2; CAA37495." evidence="54" ref="2">
    <original>D</original>
    <variation>H</variation>
    <location>
        <position position="2634"/>
    </location>
</feature>
<feature type="helix" evidence="83">
    <location>
        <begin position="40"/>
        <end position="43"/>
    </location>
</feature>
<feature type="helix" evidence="83">
    <location>
        <begin position="44"/>
        <end position="57"/>
    </location>
</feature>
<feature type="helix" evidence="83">
    <location>
        <begin position="58"/>
        <end position="60"/>
    </location>
</feature>
<feature type="turn" evidence="83">
    <location>
        <begin position="67"/>
        <end position="73"/>
    </location>
</feature>
<feature type="helix" evidence="83">
    <location>
        <begin position="75"/>
        <end position="85"/>
    </location>
</feature>
<feature type="helix" evidence="83">
    <location>
        <begin position="100"/>
        <end position="116"/>
    </location>
</feature>
<feature type="helix" evidence="83">
    <location>
        <begin position="126"/>
        <end position="130"/>
    </location>
</feature>
<feature type="helix" evidence="83">
    <location>
        <begin position="134"/>
        <end position="149"/>
    </location>
</feature>
<feature type="strand" evidence="84">
    <location>
        <begin position="157"/>
        <end position="159"/>
    </location>
</feature>
<feature type="helix" evidence="83">
    <location>
        <begin position="168"/>
        <end position="179"/>
    </location>
</feature>
<feature type="strand" evidence="85">
    <location>
        <begin position="181"/>
        <end position="183"/>
    </location>
</feature>
<feature type="helix" evidence="83">
    <location>
        <begin position="190"/>
        <end position="192"/>
    </location>
</feature>
<feature type="strand" evidence="85">
    <location>
        <begin position="193"/>
        <end position="195"/>
    </location>
</feature>
<feature type="helix" evidence="83">
    <location>
        <begin position="196"/>
        <end position="205"/>
    </location>
</feature>
<feature type="helix" evidence="83">
    <location>
        <begin position="213"/>
        <end position="215"/>
    </location>
</feature>
<feature type="helix" evidence="83">
    <location>
        <begin position="221"/>
        <end position="236"/>
    </location>
</feature>
<feature type="helix" evidence="83">
    <location>
        <begin position="244"/>
        <end position="247"/>
    </location>
</feature>
<feature type="helix" evidence="83">
    <location>
        <begin position="254"/>
        <end position="261"/>
    </location>
</feature>
<feature type="helix" evidence="84">
    <location>
        <begin position="263"/>
        <end position="266"/>
    </location>
</feature>
<feature type="helix" evidence="87">
    <location>
        <begin position="480"/>
        <end position="482"/>
    </location>
</feature>
<feature type="strand" evidence="87">
    <location>
        <begin position="484"/>
        <end position="487"/>
    </location>
</feature>
<feature type="helix" evidence="87">
    <location>
        <begin position="488"/>
        <end position="490"/>
    </location>
</feature>
<feature type="strand" evidence="87">
    <location>
        <begin position="501"/>
        <end position="506"/>
    </location>
</feature>
<feature type="strand" evidence="87">
    <location>
        <begin position="515"/>
        <end position="521"/>
    </location>
</feature>
<feature type="strand" evidence="87">
    <location>
        <begin position="529"/>
        <end position="534"/>
    </location>
</feature>
<feature type="strand" evidence="87">
    <location>
        <begin position="537"/>
        <end position="542"/>
    </location>
</feature>
<feature type="strand" evidence="87">
    <location>
        <begin position="548"/>
        <end position="556"/>
    </location>
</feature>
<feature type="strand" evidence="87">
    <location>
        <begin position="565"/>
        <end position="571"/>
    </location>
</feature>
<feature type="strand" evidence="87">
    <location>
        <begin position="579"/>
        <end position="583"/>
    </location>
</feature>
<feature type="helix" evidence="87">
    <location>
        <begin position="584"/>
        <end position="586"/>
    </location>
</feature>
<feature type="strand" evidence="87">
    <location>
        <begin position="588"/>
        <end position="590"/>
    </location>
</feature>
<feature type="strand" evidence="87">
    <location>
        <begin position="595"/>
        <end position="604"/>
    </location>
</feature>
<feature type="strand" evidence="87">
    <location>
        <begin position="609"/>
        <end position="617"/>
    </location>
</feature>
<feature type="strand" evidence="87">
    <location>
        <begin position="620"/>
        <end position="625"/>
    </location>
</feature>
<feature type="strand" evidence="87">
    <location>
        <begin position="627"/>
        <end position="636"/>
    </location>
</feature>
<feature type="strand" evidence="87">
    <location>
        <begin position="639"/>
        <end position="649"/>
    </location>
</feature>
<feature type="strand" evidence="87">
    <location>
        <begin position="658"/>
        <end position="664"/>
    </location>
</feature>
<feature type="helix" evidence="87">
    <location>
        <begin position="672"/>
        <end position="674"/>
    </location>
</feature>
<feature type="strand" evidence="87">
    <location>
        <begin position="676"/>
        <end position="679"/>
    </location>
</feature>
<feature type="helix" evidence="87">
    <location>
        <begin position="680"/>
        <end position="682"/>
    </location>
</feature>
<feature type="strand" evidence="87">
    <location>
        <begin position="683"/>
        <end position="685"/>
    </location>
</feature>
<feature type="strand" evidence="87">
    <location>
        <begin position="693"/>
        <end position="698"/>
    </location>
</feature>
<feature type="strand" evidence="87">
    <location>
        <begin position="707"/>
        <end position="712"/>
    </location>
</feature>
<feature type="strand" evidence="87">
    <location>
        <begin position="714"/>
        <end position="716"/>
    </location>
</feature>
<feature type="strand" evidence="87">
    <location>
        <begin position="721"/>
        <end position="725"/>
    </location>
</feature>
<feature type="strand" evidence="87">
    <location>
        <begin position="727"/>
        <end position="735"/>
    </location>
</feature>
<feature type="strand" evidence="87">
    <location>
        <begin position="739"/>
        <end position="749"/>
    </location>
</feature>
<feature type="strand" evidence="87">
    <location>
        <begin position="758"/>
        <end position="762"/>
    </location>
</feature>
<feature type="helix" evidence="86">
    <location>
        <begin position="1160"/>
        <end position="1162"/>
    </location>
</feature>
<feature type="strand" evidence="86">
    <location>
        <begin position="1164"/>
        <end position="1167"/>
    </location>
</feature>
<feature type="helix" evidence="86">
    <location>
        <begin position="1168"/>
        <end position="1170"/>
    </location>
</feature>
<feature type="strand" evidence="86">
    <location>
        <begin position="1172"/>
        <end position="1174"/>
    </location>
</feature>
<feature type="strand" evidence="86">
    <location>
        <begin position="1179"/>
        <end position="1184"/>
    </location>
</feature>
<feature type="strand" evidence="86">
    <location>
        <begin position="1193"/>
        <end position="1198"/>
    </location>
</feature>
<feature type="strand" evidence="86">
    <location>
        <begin position="1206"/>
        <end position="1211"/>
    </location>
</feature>
<feature type="strand" evidence="86">
    <location>
        <begin position="1213"/>
        <end position="1222"/>
    </location>
</feature>
<feature type="strand" evidence="86">
    <location>
        <begin position="1225"/>
        <end position="1235"/>
    </location>
</feature>
<feature type="strand" evidence="86">
    <location>
        <begin position="1244"/>
        <end position="1250"/>
    </location>
</feature>
<feature type="turn" evidence="80">
    <location>
        <begin position="1785"/>
        <end position="1787"/>
    </location>
</feature>
<feature type="strand" evidence="80">
    <location>
        <begin position="1791"/>
        <end position="1796"/>
    </location>
</feature>
<feature type="strand" evidence="80">
    <location>
        <begin position="1804"/>
        <end position="1809"/>
    </location>
</feature>
<feature type="strand" evidence="80">
    <location>
        <begin position="1819"/>
        <end position="1822"/>
    </location>
</feature>
<feature type="strand" evidence="80">
    <location>
        <begin position="1824"/>
        <end position="1832"/>
    </location>
</feature>
<feature type="strand" evidence="80">
    <location>
        <begin position="1838"/>
        <end position="1846"/>
    </location>
</feature>
<feature type="strand" evidence="80">
    <location>
        <begin position="1855"/>
        <end position="1860"/>
    </location>
</feature>
<feature type="strand" evidence="80">
    <location>
        <begin position="1865"/>
        <end position="1867"/>
    </location>
</feature>
<feature type="strand" evidence="77">
    <location>
        <begin position="1869"/>
        <end position="1872"/>
    </location>
</feature>
<feature type="helix" evidence="77">
    <location>
        <begin position="1873"/>
        <end position="1875"/>
    </location>
</feature>
<feature type="strand" evidence="77">
    <location>
        <begin position="1877"/>
        <end position="1879"/>
    </location>
</feature>
<feature type="strand" evidence="77">
    <location>
        <begin position="1884"/>
        <end position="1889"/>
    </location>
</feature>
<feature type="turn" evidence="76">
    <location>
        <begin position="1891"/>
        <end position="1893"/>
    </location>
</feature>
<feature type="strand" evidence="77">
    <location>
        <begin position="1895"/>
        <end position="1906"/>
    </location>
</feature>
<feature type="strand" evidence="77">
    <location>
        <begin position="1909"/>
        <end position="1914"/>
    </location>
</feature>
<feature type="strand" evidence="77">
    <location>
        <begin position="1916"/>
        <end position="1925"/>
    </location>
</feature>
<feature type="strand" evidence="77">
    <location>
        <begin position="1930"/>
        <end position="1938"/>
    </location>
</feature>
<feature type="strand" evidence="77">
    <location>
        <begin position="1947"/>
        <end position="1953"/>
    </location>
</feature>
<feature type="strand" evidence="81">
    <location>
        <begin position="1959"/>
        <end position="1967"/>
    </location>
</feature>
<feature type="strand" evidence="81">
    <location>
        <begin position="1980"/>
        <end position="1988"/>
    </location>
</feature>
<feature type="strand" evidence="81">
    <location>
        <begin position="1998"/>
        <end position="2001"/>
    </location>
</feature>
<feature type="strand" evidence="81">
    <location>
        <begin position="2007"/>
        <end position="2010"/>
    </location>
</feature>
<feature type="strand" evidence="81">
    <location>
        <begin position="2014"/>
        <end position="2025"/>
    </location>
</feature>
<feature type="strand" evidence="81">
    <location>
        <begin position="2034"/>
        <end position="2039"/>
    </location>
</feature>
<feature type="helix" evidence="81">
    <location>
        <begin position="2041"/>
        <end position="2043"/>
    </location>
</feature>
<feature type="helix" evidence="78">
    <location>
        <begin position="2047"/>
        <end position="2049"/>
    </location>
</feature>
<feature type="strand" evidence="78">
    <location>
        <begin position="2051"/>
        <end position="2054"/>
    </location>
</feature>
<feature type="helix" evidence="78">
    <location>
        <begin position="2055"/>
        <end position="2057"/>
    </location>
</feature>
<feature type="strand" evidence="78">
    <location>
        <begin position="2059"/>
        <end position="2061"/>
    </location>
</feature>
<feature type="strand" evidence="78">
    <location>
        <begin position="2066"/>
        <end position="2071"/>
    </location>
</feature>
<feature type="strand" evidence="78">
    <location>
        <begin position="2075"/>
        <end position="2077"/>
    </location>
</feature>
<feature type="strand" evidence="78">
    <location>
        <begin position="2080"/>
        <end position="2088"/>
    </location>
</feature>
<feature type="strand" evidence="78">
    <location>
        <begin position="2091"/>
        <end position="2096"/>
    </location>
</feature>
<feature type="strand" evidence="78">
    <location>
        <begin position="2100"/>
        <end position="2107"/>
    </location>
</feature>
<feature type="strand" evidence="78">
    <location>
        <begin position="2112"/>
        <end position="2120"/>
    </location>
</feature>
<feature type="strand" evidence="78">
    <location>
        <begin position="2129"/>
        <end position="2136"/>
    </location>
</feature>
<feature type="strand" evidence="78">
    <location>
        <begin position="2139"/>
        <end position="2148"/>
    </location>
</feature>
<feature type="strand" evidence="88">
    <location>
        <begin position="2161"/>
        <end position="2165"/>
    </location>
</feature>
<feature type="helix" evidence="88">
    <location>
        <begin position="2171"/>
        <end position="2173"/>
    </location>
</feature>
<feature type="strand" evidence="88">
    <location>
        <begin position="2174"/>
        <end position="2179"/>
    </location>
</feature>
<feature type="strand" evidence="88">
    <location>
        <begin position="2185"/>
        <end position="2187"/>
    </location>
</feature>
<feature type="strand" evidence="88">
    <location>
        <begin position="2189"/>
        <end position="2192"/>
    </location>
</feature>
<feature type="strand" evidence="88">
    <location>
        <begin position="2194"/>
        <end position="2201"/>
    </location>
</feature>
<feature type="strand" evidence="88">
    <location>
        <begin position="2208"/>
        <end position="2216"/>
    </location>
</feature>
<feature type="strand" evidence="88">
    <location>
        <begin position="2225"/>
        <end position="2229"/>
    </location>
</feature>
<feature type="strand" evidence="88">
    <location>
        <begin position="2234"/>
        <end position="2236"/>
    </location>
</feature>
<feature type="helix" evidence="90">
    <location>
        <begin position="2238"/>
        <end position="2240"/>
    </location>
</feature>
<feature type="strand" evidence="90">
    <location>
        <begin position="2242"/>
        <end position="2245"/>
    </location>
</feature>
<feature type="helix" evidence="90">
    <location>
        <begin position="2246"/>
        <end position="2248"/>
    </location>
</feature>
<feature type="strand" evidence="89">
    <location>
        <begin position="2251"/>
        <end position="2253"/>
    </location>
</feature>
<feature type="strand" evidence="90">
    <location>
        <begin position="2257"/>
        <end position="2262"/>
    </location>
</feature>
<feature type="turn" evidence="90">
    <location>
        <begin position="2264"/>
        <end position="2266"/>
    </location>
</feature>
<feature type="strand" evidence="90">
    <location>
        <begin position="2268"/>
        <end position="2279"/>
    </location>
</feature>
<feature type="strand" evidence="90">
    <location>
        <begin position="2282"/>
        <end position="2287"/>
    </location>
</feature>
<feature type="strand" evidence="90">
    <location>
        <begin position="2289"/>
        <end position="2298"/>
    </location>
</feature>
<feature type="strand" evidence="90">
    <location>
        <begin position="2303"/>
        <end position="2311"/>
    </location>
</feature>
<feature type="turn" evidence="89">
    <location>
        <begin position="2316"/>
        <end position="2318"/>
    </location>
</feature>
<feature type="strand" evidence="90">
    <location>
        <begin position="2320"/>
        <end position="2326"/>
    </location>
</feature>
<feature type="turn" evidence="79">
    <location>
        <begin position="2429"/>
        <end position="2431"/>
    </location>
</feature>
<feature type="strand" evidence="79">
    <location>
        <begin position="2433"/>
        <end position="2436"/>
    </location>
</feature>
<feature type="helix" evidence="79">
    <location>
        <begin position="2437"/>
        <end position="2439"/>
    </location>
</feature>
<feature type="strand" evidence="79">
    <location>
        <begin position="2441"/>
        <end position="2443"/>
    </location>
</feature>
<feature type="strand" evidence="79">
    <location>
        <begin position="2448"/>
        <end position="2453"/>
    </location>
</feature>
<feature type="turn" evidence="79">
    <location>
        <begin position="2455"/>
        <end position="2457"/>
    </location>
</feature>
<feature type="strand" evidence="79">
    <location>
        <begin position="2462"/>
        <end position="2470"/>
    </location>
</feature>
<feature type="strand" evidence="79">
    <location>
        <begin position="2472"/>
        <end position="2479"/>
    </location>
</feature>
<feature type="strand" evidence="79">
    <location>
        <begin position="2482"/>
        <end position="2489"/>
    </location>
</feature>
<feature type="strand" evidence="79">
    <location>
        <begin position="2491"/>
        <end position="2506"/>
    </location>
</feature>
<feature type="strand" evidence="79">
    <location>
        <begin position="2511"/>
        <end position="2518"/>
    </location>
</feature>
<feature type="strand" evidence="82">
    <location>
        <begin position="2561"/>
        <end position="2564"/>
    </location>
</feature>
<feature type="helix" evidence="82">
    <location>
        <begin position="2565"/>
        <end position="2567"/>
    </location>
</feature>
<feature type="strand" evidence="82">
    <location>
        <begin position="2576"/>
        <end position="2581"/>
    </location>
</feature>
<feature type="strand" evidence="82">
    <location>
        <begin position="2590"/>
        <end position="2595"/>
    </location>
</feature>
<feature type="strand" evidence="82">
    <location>
        <begin position="2597"/>
        <end position="2599"/>
    </location>
</feature>
<feature type="strand" evidence="82">
    <location>
        <begin position="2602"/>
        <end position="2610"/>
    </location>
</feature>
<feature type="strand" evidence="82">
    <location>
        <begin position="2613"/>
        <end position="2619"/>
    </location>
</feature>
<feature type="strand" evidence="82">
    <location>
        <begin position="2624"/>
        <end position="2632"/>
    </location>
</feature>
<feature type="strand" evidence="82">
    <location>
        <begin position="2641"/>
        <end position="2646"/>
    </location>
</feature>
<sequence>MSSSHSRAGQSAAGAAPGGGVDTRDAEMPATEKDLAEDAPWKKIQQNTFTRWCNEHLKCVSKRIANLQTDLSDGLRLIALLEVLSQKKMHRKHNQRPTFRQMQLENVSVALEFLDRESIKLVSIDSKAIVDGNLKLILGLIWTLILHYSISMPMWDEEEDEEAKKQTPKQRLLGWIQNKLPQLPITNFSRDWQSGRALGALVDSCAPGLCPDWDSWDASKPVTNAREAMQQADDWLGIPQVITPEEIVDPNVDEHSVMTYLSQFPKAKLKPGAPLRPKLNPKKARAYGPGIEPTGNMVKKRAEFTVETRSAGQGEVLVYVEDPAGHQEEAKVTANNDKNRTFSVWYVPEVTGTHKVTVLFAGQHIAKSPFEVYVDKSQGDASKVTAQGPGLEPSGNIANKTTYFEIFTAGAGTGEVEVVIQDPMGQKGTVEPQLEARGDSTYRCSYQPTMEGVHTVHVTFAGVPIPRSPYTVTVGQACNPSACRAVGRGLQPKGVRVKETADFKVYTKGAGSGELKVTVKGPKGEERVKQKDLGDGVYGFEYYPMVPGTYIVTITWGGQNIGRSPFEVKVGTECGNQKVRAWGPGLEGGVVGKSADFVVEAIGDDVGTLGFSVEGPSQAKIECDDKGDGSCDVRYWPQEAGEYAVHVLCNSEDIRLSPFMADIRDAPQDFHPDRVKARGPGLEKTGVAVNKPAEFTVDAKHGGKAPLRVQVQDNEGCPVEALVKDNGNGTYSCSYVPRKPVKHTAMVSWGGVSIPNSPFRVNVGAGSHPNKVKVYGPGVAKTGLKAHEPTYFTVDCAEAGQGDVSIGIKCAPGVVGPAEADIDFDIIRNDNDTFTVKYTPRGAGSYTIMVLFADQATPTSPIRVKVEPSHDASKVKAEGPGLSRTGVELGKPTHFTVNAKAAGKGKLDVQFSGLTKGDAVRDVDIIDHHDNTYTVKYTPVQQGPVGVNVTYGGDPIPKSPFSVAVSPSLDLSKIKVSGLGEKVDVGKDQEFTVKSKGAGGQGKVASKIVGPSGAAVPCKVEPGLGADNSVVRFLPREEGPYEVEVTYDGVPVPGSPFPLEAVAPTKPSKVKAFGPGLQGGSAGSPARFTIDTKGAGTGGLGLTVEGPCEAQLECLDNGDGTCSVSYVPTEPGDYNINILFADTHIPGSPFKAHVVPCFDASKVKCSGPGLERATAGEVGQFQVDCSSAGSAELTIEICSEAGLPAEVYIQDHGDGTHTITYIPLCPGAYTVTIKYGGQPVPNFPSKLQVEPAVDTSGVQCYGPGIEGQGVFREATTEFSVDARALTQTGGPHVKARVANPSGNLTETYVQDRGDGMYKVEYTPYEEGLHSVDVTYDGSPVPSSPFQVPVTEGCDPSRVRVHGPGIQSGTTNKPNKFTVETRGAGTGGLGLAVEGPSEAKMSCMDNKDGSCSVEYIPYEAGTYSLNVTYGGHQVPGSPFKVPVHDVTDASKVKCSGPGLSPGMVRANLPQSFQVDTSKAGVAPLQVKVQGPKGLVEPVDVVDNADGTQTVNYVPSREGPYSISVLYGDEEVPRSPFKVKVLPTHDASKVKASGPGLNTTGVPASLPVEFTIDAKDAGEGLLAVQITDPEGKPKKTHIQDNHDGTYTVAYVPDVTGRYTILIKYGGDEIPFSPYRVRAVPTGDASKCTVTVSIGGHGLGAGIGPTIQIGEETVITVDTKAAGKGKVTCTVCTPDGSEVDVDVVENEDGTFDIFYTAPQPGKYVICVRFGGEHVPNSPFQVTALAGDQPSVQPPLRSQQLAPQYTYAQGGQQTWAPERPLVGVNGLDVTSLRPFDLVIPFTIKKGEITGEVRMPSGKVAQPTITDNKDGTVTVRYAPSEAGLHEMDIRYDNMHIPGSPLQFYVDYVNCGHVTAYGPGLTHGVVNKPATFTVNTKDAGEGGLSLAIEGPSKAEISCTDNQDGTCSVSYLPVLPGDYSILVKYNEQHVPGSPFTARVTGDDSMRMSHLKVGSAADIPINISETDLSLLTATVVPPSGREEPCLLKRLRNGHVGISFVPKETGEHLVHVKKNGQHVASSPIPVVISQSEIGDASRVRVSGQGLHEGHTFEPAEFIIDTRDAGYGGLSLSIEGPSKVDINTEDLEDGTCRVTYCPTEPGNYIINIKFADQHVPGSPFSVKVTGEGRVKESITRRRRAPSVANVGSHCDLSLKIPEISIQDMTAQVTSPSGKTHEAEIVEGENHTYCIRFVPAEMGTHTVSVKYKGQHVPGSPFQFTVGPLGEGGAHKVRAGGPGLERAEAGVPAEFSIWTREAGAGGLAIAVEGPSKAEISFEDRKDGSCGVAYVVQEPGDYEVSVKFNEEHIPDSPFVVPVASPSGDARRLTVSSLQESGLKVNQPASFAVSLNGAKGAIDAKVHSPSGALEECYVTEIDQDKYAVRFIPRENGVYLIDVKFNGTHIPGSPFKIRVGEPGHGGDPGLVSAYGAGLEGGVTGNPAEFVVNTSNAGAGALSVTIDGPSKVKMDCQECPEGYRVTYTPMAPGSYLISIKYGGPYHIGGSPFKAKVTGPRLVSNHSLHETSSVFVDSLTKATCAPQHGAPGPGPADASKVVAKGLGLSKAYVGQKSSFTVDCSKAGNNMLLVGVHGPRTPCEEILVKHVGSRLYSVSYLLKDKGEYTLVVKWGDEHIPGSPYRVVVP</sequence>
<protein>
    <recommendedName>
        <fullName>Filamin-A</fullName>
        <shortName>FLN-A</shortName>
    </recommendedName>
    <alternativeName>
        <fullName>Actin-binding protein 280</fullName>
        <shortName>ABP-280</shortName>
    </alternativeName>
    <alternativeName>
        <fullName>Alpha-filamin</fullName>
    </alternativeName>
    <alternativeName>
        <fullName>Endothelial actin-binding protein</fullName>
    </alternativeName>
    <alternativeName>
        <fullName>Filamin-1</fullName>
    </alternativeName>
    <alternativeName>
        <fullName>Non-muscle filamin</fullName>
    </alternativeName>
</protein>
<comment type="function">
    <text evidence="1 2 39 43">Promotes orthogonal branching of actin filaments and links actin filaments to membrane glycoproteins. Anchors various transmembrane proteins to the actin cytoskeleton and serves as a scaffold for a wide range of cytoplasmic signaling proteins. Interaction with FLNB may allow neuroblast migration from the ventricular zone into the cortical plate. Tethers cell surface-localized furin, modulates its rate of internalization and directs its intracellular trafficking (By similarity). Involved in ciliogenesis. Plays a role in cell-cell contacts and adherens junctions during the development of blood vessels, heart and brain organs. Plays a role in platelets morphology through interaction with SYK that regulates ITAM- and ITAM-like-containing receptor signaling, resulting in by platelet cytoskeleton organization maintenance (By similarity). During the axon guidance process, required for growth cone collapse induced by SEMA3A-mediated stimulation of neurons (PubMed:25358863).</text>
</comment>
<comment type="subunit">
    <text evidence="1 2 5 7 10 16 19 20 23 29 30 31 32 34 36 37 39 41 43 44 45 50">Homodimer. Interacts with PDLIM2 (By similarity). Interacts with RFLNA and RFLNB (By similarity). Interacts with FCGR1A, FLNB, FURIN, HSPB7, INPPL1, KCND2, MYOT, MYOZ1, ARHGAP24, PSEN1, PSEN2 and ECSCR. Also interacts with various other binding partners in addition to filamentous actin. Interacts (via N-terminus) with MIS18BP1 (via N-terminus). Interacts (via N-terminus) with TAF1B. Interacts with TMEM67 (via C-terminus) and MKS1. Interacts (via actin-binding domain) with MICALL2 (via CH domain). Interacts (via filamin repeat 5) with SYK; docks SYK to the plasma membrane (PubMed:20713593). Interacts (via filamin repeats 19 and 21) with DRD3; increased PKA-mediated phosphorylation at Ser-2152. Interacts (via filamin repeat 21) with MAS1, AGTR1 and ADRA1D; increases PKA-mediated phosphorylation of FLNA at Ser-2152 (PubMed:26460884). Interacts (via filamin repeats 4, 9, 12, 17, 19, 21, and 23) with GP1BA (high affinity), ITGB7, ITGB2 and FBLIM1 (PubMed:19828450, PubMed:21524097, PubMed:25666618). Interacts with CEACAM1 (via cytoplasmic domain); inhibits cell migration and cell scattering by interfering with the interaction between FLNA and RALA (PubMed:16291724). Interacts with FOXC1 (PubMed:15684392). Interacts (via calponin-homology (CH) domain 1 and filamin repeat 24) with CRMP1; the interaction alters FLNA ternary structure and thus promotes FLNA dissociation from F-actin (PubMed:25358863). Interacts with DPYSL3/CRMP3 and DPYSL4/CRMP4 (PubMed:25358863).</text>
</comment>
<comment type="subunit">
    <molecule>Isoform 3</molecule>
    <text evidence="8 49">Interacts with integrin ITGB1 isoform 1/beta-1A and isoform 5/beta-1D (PubMed:11807098). Interacts with LUZP1; the interaction is not necessary for colocalization of LUZP1 with F-actin (PubMed:30990684).</text>
</comment>
<comment type="interaction">
    <interactant intactId="EBI-350432">
        <id>P21333</id>
    </interactant>
    <interactant intactId="EBI-988764">
        <id>Q8N264</id>
        <label>ARHGAP24</label>
    </interactant>
    <organismsDiffer>false</organismsDiffer>
    <experiments>6</experiments>
</comment>
<comment type="interaction">
    <interactant intactId="EBI-350432">
        <id>P21333</id>
    </interactant>
    <interactant intactId="EBI-375024">
        <id>O95067</id>
        <label>CCNB2</label>
    </interactant>
    <organismsDiffer>false</organismsDiffer>
    <experiments>8</experiments>
</comment>
<comment type="interaction">
    <interactant intactId="EBI-350432">
        <id>P21333</id>
    </interactant>
    <interactant intactId="EBI-886">
        <id>P46108</id>
        <label>CRK</label>
    </interactant>
    <organismsDiffer>false</organismsDiffer>
    <experiments>3</experiments>
</comment>
<comment type="interaction">
    <interactant intactId="EBI-350432">
        <id>P21333</id>
    </interactant>
    <interactant intactId="EBI-352089">
        <id>O75369</id>
        <label>FLNB</label>
    </interactant>
    <organismsDiffer>false</organismsDiffer>
    <experiments>5</experiments>
</comment>
<comment type="interaction">
    <interactant intactId="EBI-350432">
        <id>P21333</id>
    </interactant>
    <interactant intactId="EBI-1175253">
        <id>Q12948</id>
        <label>FOXC1</label>
    </interactant>
    <organismsDiffer>false</organismsDiffer>
    <experiments>8</experiments>
</comment>
<comment type="interaction">
    <interactant intactId="EBI-350432">
        <id>P21333</id>
    </interactant>
    <interactant intactId="EBI-713291">
        <id>P51114</id>
        <label>FXR1</label>
    </interactant>
    <organismsDiffer>false</organismsDiffer>
    <experiments>2</experiments>
</comment>
<comment type="interaction">
    <interactant intactId="EBI-350432">
        <id>P21333</id>
    </interactant>
    <interactant intactId="EBI-401755">
        <id>P62993</id>
        <label>GRB2</label>
    </interactant>
    <organismsDiffer>false</organismsDiffer>
    <experiments>2</experiments>
</comment>
<comment type="interaction">
    <interactant intactId="EBI-350432">
        <id>P21333</id>
    </interactant>
    <interactant intactId="EBI-15805658">
        <id>P08514-1</id>
        <label>ITGA2B</label>
    </interactant>
    <organismsDiffer>false</organismsDiffer>
    <experiments>3</experiments>
</comment>
<comment type="interaction">
    <interactant intactId="EBI-350432">
        <id>P21333</id>
    </interactant>
    <interactant intactId="EBI-703066">
        <id>P05556</id>
        <label>ITGB1</label>
    </interactant>
    <organismsDiffer>false</organismsDiffer>
    <experiments>5</experiments>
</comment>
<comment type="interaction">
    <interactant intactId="EBI-350432">
        <id>P21333</id>
    </interactant>
    <interactant intactId="EBI-6082935">
        <id>P05556-1</id>
        <label>ITGB1</label>
    </interactant>
    <organismsDiffer>false</organismsDiffer>
    <experiments>2</experiments>
</comment>
<comment type="interaction">
    <interactant intactId="EBI-350432">
        <id>P21333</id>
    </interactant>
    <interactant intactId="EBI-702847">
        <id>P05106</id>
        <label>ITGB3</label>
    </interactant>
    <organismsDiffer>false</organismsDiffer>
    <experiments>3</experiments>
</comment>
<comment type="interaction">
    <interactant intactId="EBI-350432">
        <id>P21333</id>
    </interactant>
    <interactant intactId="EBI-702932">
        <id>P26010</id>
        <label>ITGB7</label>
    </interactant>
    <organismsDiffer>false</organismsDiffer>
    <experiments>6</experiments>
</comment>
<comment type="interaction">
    <interactant intactId="EBI-350432">
        <id>P21333</id>
    </interactant>
    <interactant intactId="EBI-15944630">
        <id>P26010-1</id>
        <label>ITGB7</label>
    </interactant>
    <organismsDiffer>false</organismsDiffer>
    <experiments>2</experiments>
</comment>
<comment type="interaction">
    <interactant intactId="EBI-350432">
        <id>P21333</id>
    </interactant>
    <interactant intactId="EBI-1187100">
        <id>O14786</id>
        <label>NRP1</label>
    </interactant>
    <organismsDiffer>false</organismsDiffer>
    <experiments>2</experiments>
</comment>
<comment type="interaction">
    <interactant intactId="EBI-350432">
        <id>P21333</id>
    </interactant>
    <interactant intactId="EBI-2624570">
        <id>P35372</id>
        <label>OPRM1</label>
    </interactant>
    <organismsDiffer>false</organismsDiffer>
    <experiments>5</experiments>
</comment>
<comment type="interaction">
    <interactant intactId="EBI-350432">
        <id>P21333</id>
    </interactant>
    <interactant intactId="EBI-2798483">
        <id>Q86SQ0</id>
        <label>PHLDB2</label>
    </interactant>
    <organismsDiffer>false</organismsDiffer>
    <experiments>3</experiments>
</comment>
<comment type="interaction">
    <interactant intactId="EBI-350432">
        <id>P21333</id>
    </interactant>
    <interactant intactId="EBI-1752330">
        <id>Q9BYB0</id>
        <label>SHANK3</label>
    </interactant>
    <organismsDiffer>false</organismsDiffer>
    <experiments>2</experiments>
</comment>
<comment type="interaction">
    <interactant intactId="EBI-350432">
        <id>P21333</id>
    </interactant>
    <interactant intactId="EBI-5606437">
        <id>P07228</id>
        <label>ITGB1</label>
    </interactant>
    <organismsDiffer>true</organismsDiffer>
    <experiments>2</experiments>
</comment>
<comment type="interaction">
    <interactant intactId="EBI-350432">
        <id>P21333</id>
    </interactant>
    <interactant intactId="EBI-6863741">
        <id>PRO_0000037548</id>
        <dbReference type="UniProtKB" id="Q9WMX2"/>
    </interactant>
    <organismsDiffer>true</organismsDiffer>
    <experiments>6</experiments>
</comment>
<comment type="interaction">
    <interactant intactId="EBI-350432">
        <id>P21333</id>
    </interactant>
    <interactant intactId="EBI-6863748">
        <id>PRO_0000037551</id>
        <dbReference type="UniProtKB" id="Q9WMX2"/>
    </interactant>
    <organismsDiffer>true</organismsDiffer>
    <experiments>6</experiments>
</comment>
<comment type="interaction">
    <interactant intactId="EBI-9641086">
        <id>P21333-2</id>
    </interactant>
    <interactant intactId="EBI-10173507">
        <id>Q6UY14-3</id>
        <label>ADAMTSL4</label>
    </interactant>
    <organismsDiffer>false</organismsDiffer>
    <experiments>6</experiments>
</comment>
<comment type="interaction">
    <interactant intactId="EBI-9641086">
        <id>P21333-2</id>
    </interactant>
    <interactant intactId="EBI-12051311">
        <id>Q9XRX5-2</id>
        <label>ANKRD13C-DT</label>
    </interactant>
    <organismsDiffer>false</organismsDiffer>
    <experiments>3</experiments>
</comment>
<comment type="interaction">
    <interactant intactId="EBI-9641086">
        <id>P21333-2</id>
    </interactant>
    <interactant intactId="EBI-77613">
        <id>P05067</id>
        <label>APP</label>
    </interactant>
    <organismsDiffer>false</organismsDiffer>
    <experiments>3</experiments>
</comment>
<comment type="interaction">
    <interactant intactId="EBI-9641086">
        <id>P21333-2</id>
    </interactant>
    <interactant intactId="EBI-949378">
        <id>Q14457</id>
        <label>BECN1</label>
    </interactant>
    <organismsDiffer>false</organismsDiffer>
    <experiments>3</experiments>
</comment>
<comment type="interaction">
    <interactant intactId="EBI-9641086">
        <id>P21333-2</id>
    </interactant>
    <interactant intactId="EBI-18924329">
        <id>Q96IK1-2</id>
        <label>BOD1</label>
    </interactant>
    <organismsDiffer>false</organismsDiffer>
    <experiments>3</experiments>
</comment>
<comment type="interaction">
    <interactant intactId="EBI-9641086">
        <id>P21333-2</id>
    </interactant>
    <interactant intactId="EBI-3920838">
        <id>Q96NX5</id>
        <label>CAMK1G</label>
    </interactant>
    <organismsDiffer>false</organismsDiffer>
    <experiments>3</experiments>
</comment>
<comment type="interaction">
    <interactant intactId="EBI-9641086">
        <id>P21333-2</id>
    </interactant>
    <interactant intactId="EBI-25850646">
        <id>Q8N5S9-2</id>
        <label>CAMKK1</label>
    </interactant>
    <organismsDiffer>false</organismsDiffer>
    <experiments>3</experiments>
</comment>
<comment type="interaction">
    <interactant intactId="EBI-9641086">
        <id>P21333-2</id>
    </interactant>
    <interactant intactId="EBI-49119542">
        <id>Q6ZP82-1</id>
        <label>CCDC141</label>
    </interactant>
    <organismsDiffer>false</organismsDiffer>
    <experiments>3</experiments>
</comment>
<comment type="interaction">
    <interactant intactId="EBI-9641086">
        <id>P21333-2</id>
    </interactant>
    <interactant intactId="EBI-2872414">
        <id>Q8IUI8</id>
        <label>CRLF3</label>
    </interactant>
    <organismsDiffer>false</organismsDiffer>
    <experiments>3</experiments>
</comment>
<comment type="interaction">
    <interactant intactId="EBI-9641086">
        <id>P21333-2</id>
    </interactant>
    <interactant intactId="EBI-750444">
        <id>P53672</id>
        <label>CRYBA2</label>
    </interactant>
    <organismsDiffer>false</organismsDiffer>
    <experiments>3</experiments>
</comment>
<comment type="interaction">
    <interactant intactId="EBI-9641086">
        <id>P21333-2</id>
    </interactant>
    <interactant intactId="EBI-3867333">
        <id>A8MQ03</id>
        <label>CYSRT1</label>
    </interactant>
    <organismsDiffer>false</organismsDiffer>
    <experiments>3</experiments>
</comment>
<comment type="interaction">
    <interactant intactId="EBI-9641086">
        <id>P21333-2</id>
    </interactant>
    <interactant intactId="EBI-742054">
        <id>Q96D03</id>
        <label>DDIT4L</label>
    </interactant>
    <organismsDiffer>false</organismsDiffer>
    <experiments>5</experiments>
</comment>
<comment type="interaction">
    <interactant intactId="EBI-9641086">
        <id>P21333-2</id>
    </interactant>
    <interactant intactId="EBI-395274">
        <id>O00472</id>
        <label>ELL2</label>
    </interactant>
    <organismsDiffer>false</organismsDiffer>
    <experiments>3</experiments>
</comment>
<comment type="interaction">
    <interactant intactId="EBI-9641086">
        <id>P21333-2</id>
    </interactant>
    <interactant intactId="EBI-2115989">
        <id>P07148</id>
        <label>FABP1</label>
    </interactant>
    <organismsDiffer>false</organismsDiffer>
    <experiments>3</experiments>
</comment>
<comment type="interaction">
    <interactant intactId="EBI-9641086">
        <id>P21333-2</id>
    </interactant>
    <interactant intactId="EBI-3893327">
        <id>Q6P1L5</id>
        <label>FAM117B</label>
    </interactant>
    <organismsDiffer>false</organismsDiffer>
    <experiments>3</experiments>
</comment>
<comment type="interaction">
    <interactant intactId="EBI-9641086">
        <id>P21333-2</id>
    </interactant>
    <interactant intactId="EBI-8468945">
        <id>Q8TAK5</id>
        <label>GABPB2</label>
    </interactant>
    <organismsDiffer>false</organismsDiffer>
    <experiments>3</experiments>
</comment>
<comment type="interaction">
    <interactant intactId="EBI-9641086">
        <id>P21333-2</id>
    </interactant>
    <interactant intactId="EBI-23893155">
        <id>F2Z2M7</id>
        <label>GALNT10</label>
    </interactant>
    <organismsDiffer>false</organismsDiffer>
    <experiments>3</experiments>
</comment>
<comment type="interaction">
    <interactant intactId="EBI-9641086">
        <id>P21333-2</id>
    </interactant>
    <interactant intactId="EBI-347538">
        <id>Q9Y4H4</id>
        <label>GPSM3</label>
    </interactant>
    <organismsDiffer>false</organismsDiffer>
    <experiments>3</experiments>
</comment>
<comment type="interaction">
    <interactant intactId="EBI-9641086">
        <id>P21333-2</id>
    </interactant>
    <interactant intactId="EBI-355106">
        <id>P17066</id>
        <label>HSPA6</label>
    </interactant>
    <organismsDiffer>false</organismsDiffer>
    <experiments>3</experiments>
</comment>
<comment type="interaction">
    <interactant intactId="EBI-9641086">
        <id>P21333-2</id>
    </interactant>
    <interactant intactId="EBI-739361">
        <id>Q9UBY9</id>
        <label>HSPB7</label>
    </interactant>
    <organismsDiffer>false</organismsDiffer>
    <experiments>10</experiments>
</comment>
<comment type="interaction">
    <interactant intactId="EBI-9641086">
        <id>P21333-2</id>
    </interactant>
    <interactant intactId="EBI-12823003">
        <id>P80217-2</id>
        <label>IFI35</label>
    </interactant>
    <organismsDiffer>false</organismsDiffer>
    <experiments>3</experiments>
</comment>
<comment type="interaction">
    <interactant intactId="EBI-9641086">
        <id>P21333-2</id>
    </interactant>
    <interactant intactId="EBI-25856470">
        <id>Q9UKP3-2</id>
        <label>ITGB1BP2</label>
    </interactant>
    <organismsDiffer>false</organismsDiffer>
    <experiments>3</experiments>
</comment>
<comment type="interaction">
    <interactant intactId="EBI-9641086">
        <id>P21333-2</id>
    </interactant>
    <interactant intactId="EBI-742916">
        <id>Q8WZ19</id>
        <label>KCTD13</label>
    </interactant>
    <organismsDiffer>false</organismsDiffer>
    <experiments>3</experiments>
</comment>
<comment type="interaction">
    <interactant intactId="EBI-9641086">
        <id>P21333-2</id>
    </interactant>
    <interactant intactId="EBI-743960">
        <id>Q8N5Z5</id>
        <label>KCTD17</label>
    </interactant>
    <organismsDiffer>false</organismsDiffer>
    <experiments>3</experiments>
</comment>
<comment type="interaction">
    <interactant intactId="EBI-9641086">
        <id>P21333-2</id>
    </interactant>
    <interactant intactId="EBI-740929">
        <id>Q53G59</id>
        <label>KLHL12</label>
    </interactant>
    <organismsDiffer>false</organismsDiffer>
    <experiments>6</experiments>
</comment>
<comment type="interaction">
    <interactant intactId="EBI-9641086">
        <id>P21333-2</id>
    </interactant>
    <interactant intactId="EBI-10274069">
        <id>Q8TCE9</id>
        <label>LGALS14</label>
    </interactant>
    <organismsDiffer>false</organismsDiffer>
    <experiments>6</experiments>
</comment>
<comment type="interaction">
    <interactant intactId="EBI-9641086">
        <id>P21333-2</id>
    </interactant>
    <interactant intactId="EBI-5278370">
        <id>Q14693</id>
        <label>LPIN1</label>
    </interactant>
    <organismsDiffer>false</organismsDiffer>
    <experiments>3</experiments>
</comment>
<comment type="interaction">
    <interactant intactId="EBI-9641086">
        <id>P21333-2</id>
    </interactant>
    <interactant intactId="EBI-10694180">
        <id>Q8TD91-2</id>
        <label>MAGEC3</label>
    </interactant>
    <organismsDiffer>false</organismsDiffer>
    <experiments>3</experiments>
</comment>
<comment type="interaction">
    <interactant intactId="EBI-9641086">
        <id>P21333-2</id>
    </interactant>
    <interactant intactId="EBI-996616">
        <id>P02795</id>
        <label>MT2A</label>
    </interactant>
    <organismsDiffer>false</organismsDiffer>
    <experiments>3</experiments>
</comment>
<comment type="interaction">
    <interactant intactId="EBI-9641086">
        <id>P21333-2</id>
    </interactant>
    <interactant intactId="EBI-2872520">
        <id>Q9BSJ5</id>
        <label>MTNAP1</label>
    </interactant>
    <organismsDiffer>false</organismsDiffer>
    <experiments>3</experiments>
</comment>
<comment type="interaction">
    <interactant intactId="EBI-9641086">
        <id>P21333-2</id>
    </interactant>
    <interactant intactId="EBI-744402">
        <id>Q9NP98</id>
        <label>MYOZ1</label>
    </interactant>
    <organismsDiffer>false</organismsDiffer>
    <experiments>6</experiments>
</comment>
<comment type="interaction">
    <interactant intactId="EBI-9641086">
        <id>P21333-2</id>
    </interactant>
    <interactant intactId="EBI-2826725">
        <id>Q9NQS3</id>
        <label>NECTIN3</label>
    </interactant>
    <organismsDiffer>false</organismsDiffer>
    <experiments>3</experiments>
</comment>
<comment type="interaction">
    <interactant intactId="EBI-9641086">
        <id>P21333-2</id>
    </interactant>
    <interactant intactId="EBI-1043580">
        <id>Q9BRX2</id>
        <label>PELO</label>
    </interactant>
    <organismsDiffer>false</organismsDiffer>
    <experiments>6</experiments>
</comment>
<comment type="interaction">
    <interactant intactId="EBI-9641086">
        <id>P21333-2</id>
    </interactant>
    <interactant intactId="EBI-2861380">
        <id>Q8TCD6</id>
        <label>PHOSPHO2</label>
    </interactant>
    <organismsDiffer>false</organismsDiffer>
    <experiments>3</experiments>
</comment>
<comment type="interaction">
    <interactant intactId="EBI-9641086">
        <id>P21333-2</id>
    </interactant>
    <interactant intactId="EBI-742388">
        <id>Q9H8W4</id>
        <label>PLEKHF2</label>
    </interactant>
    <organismsDiffer>false</organismsDiffer>
    <experiments>5</experiments>
</comment>
<comment type="interaction">
    <interactant intactId="EBI-9641086">
        <id>P21333-2</id>
    </interactant>
    <interactant intactId="EBI-1053424">
        <id>O43741</id>
        <label>PRKAB2</label>
    </interactant>
    <organismsDiffer>false</organismsDiffer>
    <experiments>3</experiments>
</comment>
<comment type="interaction">
    <interactant intactId="EBI-9641086">
        <id>P21333-2</id>
    </interactant>
    <interactant intactId="EBI-620823">
        <id>Q09028</id>
        <label>RBBP4</label>
    </interactant>
    <organismsDiffer>false</organismsDiffer>
    <experiments>3</experiments>
</comment>
<comment type="interaction">
    <interactant intactId="EBI-9641086">
        <id>P21333-2</id>
    </interactant>
    <interactant intactId="EBI-741332">
        <id>P57052</id>
        <label>RBM11</label>
    </interactant>
    <organismsDiffer>false</organismsDiffer>
    <experiments>3</experiments>
</comment>
<comment type="interaction">
    <interactant intactId="EBI-9641086">
        <id>P21333-2</id>
    </interactant>
    <interactant intactId="EBI-307352">
        <id>Q04864</id>
        <label>REL</label>
    </interactant>
    <organismsDiffer>false</organismsDiffer>
    <experiments>3</experiments>
</comment>
<comment type="interaction">
    <interactant intactId="EBI-9641086">
        <id>P21333-2</id>
    </interactant>
    <interactant intactId="EBI-10200920">
        <id>Q6ZTI6</id>
        <label>RFLNA</label>
    </interactant>
    <organismsDiffer>false</organismsDiffer>
    <experiments>3</experiments>
</comment>
<comment type="interaction">
    <interactant intactId="EBI-9641086">
        <id>P21333-2</id>
    </interactant>
    <interactant intactId="EBI-12362431">
        <id>Q6ZTI6-2</id>
        <label>RFLNA</label>
    </interactant>
    <organismsDiffer>false</organismsDiffer>
    <experiments>3</experiments>
</comment>
<comment type="interaction">
    <interactant intactId="EBI-9641086">
        <id>P21333-2</id>
    </interactant>
    <interactant intactId="EBI-752324">
        <id>Q8N488</id>
        <label>RYBP</label>
    </interactant>
    <organismsDiffer>false</organismsDiffer>
    <experiments>3</experiments>
</comment>
<comment type="interaction">
    <interactant intactId="EBI-9641086">
        <id>P21333-2</id>
    </interactant>
    <interactant intactId="EBI-712703">
        <id>O15127</id>
        <label>SCAMP2</label>
    </interactant>
    <organismsDiffer>false</organismsDiffer>
    <experiments>3</experiments>
</comment>
<comment type="interaction">
    <interactant intactId="EBI-9641086">
        <id>P21333-2</id>
    </interactant>
    <interactant intactId="EBI-12832276">
        <id>P08195-4</id>
        <label>SLC3A2</label>
    </interactant>
    <organismsDiffer>false</organismsDiffer>
    <experiments>3</experiments>
</comment>
<comment type="interaction">
    <interactant intactId="EBI-9641086">
        <id>P21333-2</id>
    </interactant>
    <interactant intactId="EBI-358489">
        <id>Q96GM5</id>
        <label>SMARCD1</label>
    </interactant>
    <organismsDiffer>false</organismsDiffer>
    <experiments>3</experiments>
</comment>
<comment type="interaction">
    <interactant intactId="EBI-9641086">
        <id>P21333-2</id>
    </interactant>
    <interactant intactId="EBI-632715">
        <id>Q13573</id>
        <label>SNW1</label>
    </interactant>
    <organismsDiffer>false</organismsDiffer>
    <experiments>3</experiments>
</comment>
<comment type="interaction">
    <interactant intactId="EBI-9641086">
        <id>P21333-2</id>
    </interactant>
    <interactant intactId="EBI-10301202">
        <id>Q9BXN6</id>
        <label>SPANXD</label>
    </interactant>
    <organismsDiffer>false</organismsDiffer>
    <experiments>3</experiments>
</comment>
<comment type="interaction">
    <interactant intactId="EBI-9641086">
        <id>P21333-2</id>
    </interactant>
    <interactant intactId="EBI-533224">
        <id>P15884</id>
        <label>TCF4</label>
    </interactant>
    <organismsDiffer>false</organismsDiffer>
    <experiments>3</experiments>
</comment>
<comment type="interaction">
    <interactant intactId="EBI-9641086">
        <id>P21333-2</id>
    </interactant>
    <interactant intactId="EBI-366083">
        <id>P04637</id>
        <label>TP53</label>
    </interactant>
    <organismsDiffer>false</organismsDiffer>
    <experiments>3</experiments>
</comment>
<comment type="interaction">
    <interactant intactId="EBI-9641086">
        <id>P21333-2</id>
    </interactant>
    <interactant intactId="EBI-10316321">
        <id>Q9NX94</id>
        <label>WBP1L</label>
    </interactant>
    <organismsDiffer>false</organismsDiffer>
    <experiments>3</experiments>
</comment>
<comment type="interaction">
    <interactant intactId="EBI-9641086">
        <id>P21333-2</id>
    </interactant>
    <interactant intactId="EBI-7705033">
        <id>Q9BRX9</id>
        <label>WDR83</label>
    </interactant>
    <organismsDiffer>false</organismsDiffer>
    <experiments>3</experiments>
</comment>
<comment type="interaction">
    <interactant intactId="EBI-9641086">
        <id>P21333-2</id>
    </interactant>
    <interactant intactId="EBI-12949277">
        <id>O95789-4</id>
        <label>ZMYM6</label>
    </interactant>
    <organismsDiffer>false</organismsDiffer>
    <experiments>3</experiments>
</comment>
<comment type="interaction">
    <interactant intactId="EBI-9641086">
        <id>P21333-2</id>
    </interactant>
    <interactant intactId="EBI-10976904">
        <id>Q96E88</id>
    </interactant>
    <organismsDiffer>false</organismsDiffer>
    <experiments>3</experiments>
</comment>
<comment type="subcellular location">
    <subcellularLocation>
        <location evidence="20">Cytoplasm</location>
        <location evidence="20">Cell cortex</location>
    </subcellularLocation>
    <subcellularLocation>
        <location evidence="2">Cytoplasm</location>
        <location evidence="2">Cytoskeleton</location>
    </subcellularLocation>
    <subcellularLocation>
        <location evidence="2">Perikaryon</location>
    </subcellularLocation>
    <subcellularLocation>
        <location evidence="2">Cell projection</location>
        <location evidence="2">Growth cone</location>
    </subcellularLocation>
    <subcellularLocation>
        <location evidence="2">Cell projection</location>
        <location evidence="2">Podosome</location>
    </subcellularLocation>
    <text evidence="2">Colocalizes with CPMR1 in the central region of DRG neuron growth cone (By similarity). Following SEMA3A stimulation of DRG neurons, colocalizes with F-actin (By similarity). Localized to the core of myotube podosomes (By similarity).</text>
</comment>
<comment type="alternative products">
    <event type="alternative splicing"/>
    <isoform>
        <id>P21333-1</id>
        <name>1</name>
        <sequence type="displayed"/>
    </isoform>
    <isoform>
        <id>P21333-2</id>
        <name>2</name>
        <sequence type="described" ref="VSP_035454"/>
    </isoform>
    <isoform>
        <id>P21333-3</id>
        <name>3</name>
        <name evidence="52">VAR-1</name>
        <sequence type="described" ref="VSP_062479"/>
    </isoform>
</comment>
<comment type="tissue specificity">
    <text>Ubiquitous.</text>
</comment>
<comment type="domain">
    <text evidence="28 37">Comprised of a NH2-terminal actin-binding domain, 24 immunoglobulin-like internally homologous repeats and two hinge regions. Repeat 24 and the second hinge domain are important for dimer formation. Filamin repeat 20 interacts with filamin repeat 21 masking the ligand binding site on filamin repeat 21, resulting in an autoinhibited conformation (PubMed:17690686). The autoinhibition can be relieved by ligands like ITGB7 or FBLIM1 (PubMed:21524097). Filamin repeats 19 and 21 can simultaneously engage ligands (PubMed:21524097).</text>
</comment>
<comment type="PTM">
    <text evidence="44">Phosphorylation at Ser-2152 is negatively regulated by the autoinhibited conformation of filamin repeats 19-21. Ligand binding induces a conformational switch triggering phosphorylation at Ser-2152 by PKA.</text>
</comment>
<comment type="PTM">
    <text>Phosphorylation extent changes in response to cell activation.</text>
</comment>
<comment type="PTM">
    <text evidence="42 46">Polyubiquitination in the CH1 domain by a SCF-like complex containing ASB2 leads to proteasomal degradation. Prior dissociation from actin may be required to expose the target lysines (PubMed:24052262). Ubiquitinated in endothelial cells by RNF213 downstream of the non-canonical Wnt signaling pathway, leading to its degradation by the proteasome (PubMed:26766444).</text>
</comment>
<comment type="disease" evidence="6 9 13 15 18 21">
    <disease id="DI-00910">
        <name>Periventricular nodular heterotopia 1</name>
        <acronym>PVNH1</acronym>
        <description>A developmental disorder characterized by the presence of periventricular nodules of cerebral gray matter, resulting from a failure of neurons to migrate normally from the lateral ventricular proliferative zone, where they are formed, to the cerebral cortex. PVNH1 is an X-linked dominant form. Heterozygous females have normal intelligence but suffer from seizures and various manifestations outside the central nervous system, especially related to the vascular system. Hemizygous affected males die in the prenatal or perinatal period.</description>
        <dbReference type="MIM" id="300049"/>
    </disease>
    <text>The disease is caused by variants affecting the gene represented in this entry.</text>
</comment>
<comment type="disease" evidence="12 17 47">
    <disease id="DI-02113">
        <name>Otopalatodigital syndrome 1</name>
        <acronym>OPD1</acronym>
        <description>X-linked dominant multiple congenital anomalies disease mainly characterized by a generalized skeletal dysplasia, mild intellectual disability, hearing loss, cleft palate, and typical facial anomalies. OPD1 belongs to a group of X-linked skeletal dysplasias known as oto-palato-digital syndrome spectrum disorders that also include OPD2, Melnick-Needles syndrome (MNS), and frontometaphyseal dysplasia (FMD). Remodeling of the cytoskeleton is central to the modulation of cell shape and migration. FLNA is a widely expressed protein that regulates re-organization of the actin cytoskeleton by interacting with integrins, transmembrane receptor complexes and second messengers. Males with OPD1 have cleft palate, malformations of the ossicles causing deafness and milder bone and limb defects than those associated with OPD2. Obligate female carriers of mutations causing both OPD1 and OPD2 have variable (often milder) expression of a similar phenotypic spectrum.</description>
        <dbReference type="MIM" id="311300"/>
    </disease>
    <text>The disease is caused by variants affecting the gene represented in this entry.</text>
</comment>
<comment type="disease" evidence="12 26 47">
    <disease id="DI-02114">
        <name>Otopalatodigital syndrome 2</name>
        <acronym>OPD2</acronym>
        <description>Congenital bone disorder that is characterized by abnormally modeled, bowed bones, small or absent first digits and, more variably, cleft palate, posterior fossa brain anomalies, omphalocele and cardiac defects.</description>
        <dbReference type="MIM" id="304120"/>
    </disease>
    <text>The disease is caused by variants affecting the gene represented in this entry.</text>
</comment>
<comment type="disease" evidence="12 22 47">
    <disease id="DI-01631">
        <name>Frontometaphyseal dysplasia 1</name>
        <acronym>FMD1</acronym>
        <description>An X-linked disease characterized by generalized skeletal dysplasia, deafness, and urogenital defects.</description>
        <dbReference type="MIM" id="305620"/>
    </disease>
    <text>The disease is caused by variants affecting the gene represented in this entry.</text>
</comment>
<comment type="disease" evidence="12 47">
    <disease id="DI-01962">
        <name>Melnick-Needles syndrome</name>
        <acronym>MNS</acronym>
        <description>Severe congenital bone disorder characterized by typical facies (exophthalmos, full cheeks, micrognathia and malalignment of teeth), flaring of the metaphyses of long bones, s-like curvature of bones of legs, irregular constrictions in the ribs, and sclerosis of base of skull.</description>
        <dbReference type="MIM" id="309350"/>
    </disease>
    <text>The disease is caused by variants affecting the gene represented in this entry.</text>
</comment>
<comment type="disease" evidence="25">
    <disease id="DI-02438">
        <name>Intestinal pseudoobstruction, neuronal, chronic idiopathic, X-linked</name>
        <acronym>CIIPX</acronym>
        <description>A disease characterized by a severe abnormality of gastrointestinal motility due to primary qualitative defects of enteric ganglia and nerve fibers. Affected individuals manifest recurrent signs of intestinal obstruction in the absence of any mechanical lesion.</description>
        <dbReference type="MIM" id="300048"/>
    </disease>
    <text>The disease is caused by variants affecting the gene represented in this entry.</text>
</comment>
<comment type="disease" evidence="27">
    <disease id="DI-01616">
        <name>FG syndrome 2</name>
        <acronym>FGS2</acronym>
        <description>FG syndrome (FGS) is an X-linked disorder characterized by intellectual disability, relative macrocephaly, hypotonia and constipation.</description>
        <dbReference type="MIM" id="300321"/>
    </disease>
    <text>The disease is caused by variants affecting the gene represented in this entry.</text>
</comment>
<comment type="disease" evidence="33">
    <disease id="DI-02914">
        <name>Terminal osseous dysplasia</name>
        <acronym>TOD</acronym>
        <description>A rare X-linked dominant male-lethal disease characterized by skeletal dysplasia of the limbs, pigmentary defects of the skin and recurrent digital fibroma during infancy. A significant phenotypic variability is observed in affected females.</description>
        <dbReference type="MIM" id="300244"/>
    </disease>
    <text>The disease is caused by variants affecting the gene represented in this entry.</text>
</comment>
<comment type="disease" evidence="24">
    <disease id="DI-02915">
        <name>Cardiac valvular dysplasia, X-linked</name>
        <acronym>CVDPX</acronym>
        <description>A rare X-linked heart disease characterized by mitral and/or aortic valve regurgitation. The histologic features include fragmentation of collagenous bundles within the valve fibrosa and accumulation of proteoglycans, which produces excessive valve tissue leading to billowing of the valve leaflets.</description>
        <dbReference type="MIM" id="314400"/>
    </disease>
    <text>The disease is caused by variants affecting the gene represented in this entry.</text>
</comment>
<comment type="disease">
    <text evidence="38">Defects in FLNA may be a cause of macrothrombocytopenia, a disorder characterized by subnormal levels of blood platelets. Blood platelets are abnormally enlarged (PubMed:21960593).</text>
</comment>
<comment type="disease" evidence="40">
    <disease id="DI-03734">
        <name>Congenital short bowel syndrome, X-linked</name>
        <acronym>CSBSX</acronym>
        <description>A disease characterized by a shortened small intestine, and malabsorption. The mean length of the small intestine in affected individuals is approximately 50 cm, compared with a normal length at birth of 190-280 cm. It is associated with significant mortality and morbidity. Infants usually present with failure to thrive, recurrent vomiting, and diarrhea.</description>
        <dbReference type="MIM" id="300048"/>
    </disease>
    <text>The disease is caused by variants affecting the gene represented in this entry.</text>
</comment>
<comment type="similarity">
    <text evidence="54">Belongs to the filamin family.</text>
</comment>
<comment type="sequence caution" evidence="54">
    <conflict type="erroneous initiation">
        <sequence resource="EMBL-CDS" id="BAC03408"/>
    </conflict>
    <text>Extended N-terminus.</text>
</comment>
<keyword id="KW-0002">3D-structure</keyword>
<keyword id="KW-0007">Acetylation</keyword>
<keyword id="KW-0009">Actin-binding</keyword>
<keyword id="KW-0025">Alternative splicing</keyword>
<keyword id="KW-0965">Cell junction</keyword>
<keyword id="KW-0966">Cell projection</keyword>
<keyword id="KW-0970">Cilium biogenesis/degradation</keyword>
<keyword id="KW-0963">Cytoplasm</keyword>
<keyword id="KW-0206">Cytoskeleton</keyword>
<keyword id="KW-0209">Deafness</keyword>
<keyword id="KW-0903">Direct protein sequencing</keyword>
<keyword id="KW-0225">Disease variant</keyword>
<keyword id="KW-1017">Isopeptide bond</keyword>
<keyword id="KW-0597">Phosphoprotein</keyword>
<keyword id="KW-1267">Proteomics identification</keyword>
<keyword id="KW-1185">Reference proteome</keyword>
<keyword id="KW-0677">Repeat</keyword>
<keyword id="KW-0832">Ubl conjugation</keyword>
<proteinExistence type="evidence at protein level"/>
<reference key="1">
    <citation type="journal article" date="1990" name="J. Cell Biol.">
        <title>Human endothelial actin-binding protein (ABP-280, nonmuscle filamin): a molecular leaf spring.</title>
        <authorList>
            <person name="Gorlin J.B."/>
            <person name="Yamin R."/>
            <person name="Egan S."/>
            <person name="Stewart M."/>
            <person name="Stossel T.P."/>
            <person name="Kwiatkowski D.J."/>
            <person name="Hartwig J.H."/>
        </authorList>
    </citation>
    <scope>NUCLEOTIDE SEQUENCE [MRNA] (ISOFORM 1)</scope>
    <scope>PARTIAL PROTEIN SEQUENCE</scope>
</reference>
<reference key="2">
    <citation type="journal article" date="1994" name="Genomics">
        <title>The exon-intron organization of the human X-linked gene (FLN1) encoding actin-binding protein 280.</title>
        <authorList>
            <person name="Patrosso M.C."/>
            <person name="Repetto M."/>
            <person name="Villa A."/>
            <person name="Milanesi L."/>
            <person name="Frattini A."/>
            <person name="Faranda S."/>
            <person name="Mancini M."/>
            <person name="Maestrini E."/>
            <person name="Toniolo D."/>
            <person name="Vezzoni P."/>
        </authorList>
    </citation>
    <scope>NUCLEOTIDE SEQUENCE [GENOMIC DNA]</scope>
</reference>
<reference key="3">
    <citation type="journal article" date="1996" name="Hum. Mol. Genet.">
        <title>Long-range sequence analysis in Xq28: thirteen known and six candidate genes in 219.4 kb of high GC DNA between the RCP/GCP and G6PD loci.</title>
        <authorList>
            <person name="Chen E.Y."/>
            <person name="Zollo M."/>
            <person name="Mazzarella R.A."/>
            <person name="Ciccodicola A."/>
            <person name="Chen C.-N."/>
            <person name="Zuo L."/>
            <person name="Heiner C."/>
            <person name="Burough F.W."/>
            <person name="Ripetto M."/>
            <person name="Schlessinger D."/>
            <person name="D'Urso M."/>
        </authorList>
    </citation>
    <scope>NUCLEOTIDE SEQUENCE [GENOMIC DNA]</scope>
</reference>
<reference key="4">
    <citation type="journal article" date="2010" name="Mol. Cell. Proteomics">
        <title>Systematic mapping and functional analysis of a family of human epididymal secretory sperm-located proteins.</title>
        <authorList>
            <person name="Li J."/>
            <person name="Liu F."/>
            <person name="Wang H."/>
            <person name="Liu X."/>
            <person name="Liu J."/>
            <person name="Li N."/>
            <person name="Wan F."/>
            <person name="Wang W."/>
            <person name="Zhang C."/>
            <person name="Jin S."/>
            <person name="Liu J."/>
            <person name="Zhu P."/>
            <person name="Liu Y."/>
        </authorList>
    </citation>
    <scope>NUCLEOTIDE SEQUENCE [MRNA] (ISOFORM 1)</scope>
</reference>
<reference key="5">
    <citation type="journal article" date="2004" name="Nat. Genet.">
        <title>Complete sequencing and characterization of 21,243 full-length human cDNAs.</title>
        <authorList>
            <person name="Ota T."/>
            <person name="Suzuki Y."/>
            <person name="Nishikawa T."/>
            <person name="Otsuki T."/>
            <person name="Sugiyama T."/>
            <person name="Irie R."/>
            <person name="Wakamatsu A."/>
            <person name="Hayashi K."/>
            <person name="Sato H."/>
            <person name="Nagai K."/>
            <person name="Kimura K."/>
            <person name="Makita H."/>
            <person name="Sekine M."/>
            <person name="Obayashi M."/>
            <person name="Nishi T."/>
            <person name="Shibahara T."/>
            <person name="Tanaka T."/>
            <person name="Ishii S."/>
            <person name="Yamamoto J."/>
            <person name="Saito K."/>
            <person name="Kawai Y."/>
            <person name="Isono Y."/>
            <person name="Nakamura Y."/>
            <person name="Nagahari K."/>
            <person name="Murakami K."/>
            <person name="Yasuda T."/>
            <person name="Iwayanagi T."/>
            <person name="Wagatsuma M."/>
            <person name="Shiratori A."/>
            <person name="Sudo H."/>
            <person name="Hosoiri T."/>
            <person name="Kaku Y."/>
            <person name="Kodaira H."/>
            <person name="Kondo H."/>
            <person name="Sugawara M."/>
            <person name="Takahashi M."/>
            <person name="Kanda K."/>
            <person name="Yokoi T."/>
            <person name="Furuya T."/>
            <person name="Kikkawa E."/>
            <person name="Omura Y."/>
            <person name="Abe K."/>
            <person name="Kamihara K."/>
            <person name="Katsuta N."/>
            <person name="Sato K."/>
            <person name="Tanikawa M."/>
            <person name="Yamazaki M."/>
            <person name="Ninomiya K."/>
            <person name="Ishibashi T."/>
            <person name="Yamashita H."/>
            <person name="Murakawa K."/>
            <person name="Fujimori K."/>
            <person name="Tanai H."/>
            <person name="Kimata M."/>
            <person name="Watanabe M."/>
            <person name="Hiraoka S."/>
            <person name="Chiba Y."/>
            <person name="Ishida S."/>
            <person name="Ono Y."/>
            <person name="Takiguchi S."/>
            <person name="Watanabe S."/>
            <person name="Yosida M."/>
            <person name="Hotuta T."/>
            <person name="Kusano J."/>
            <person name="Kanehori K."/>
            <person name="Takahashi-Fujii A."/>
            <person name="Hara H."/>
            <person name="Tanase T.-O."/>
            <person name="Nomura Y."/>
            <person name="Togiya S."/>
            <person name="Komai F."/>
            <person name="Hara R."/>
            <person name="Takeuchi K."/>
            <person name="Arita M."/>
            <person name="Imose N."/>
            <person name="Musashino K."/>
            <person name="Yuuki H."/>
            <person name="Oshima A."/>
            <person name="Sasaki N."/>
            <person name="Aotsuka S."/>
            <person name="Yoshikawa Y."/>
            <person name="Matsunawa H."/>
            <person name="Ichihara T."/>
            <person name="Shiohata N."/>
            <person name="Sano S."/>
            <person name="Moriya S."/>
            <person name="Momiyama H."/>
            <person name="Satoh N."/>
            <person name="Takami S."/>
            <person name="Terashima Y."/>
            <person name="Suzuki O."/>
            <person name="Nakagawa S."/>
            <person name="Senoh A."/>
            <person name="Mizoguchi H."/>
            <person name="Goto Y."/>
            <person name="Shimizu F."/>
            <person name="Wakebe H."/>
            <person name="Hishigaki H."/>
            <person name="Watanabe T."/>
            <person name="Sugiyama A."/>
            <person name="Takemoto M."/>
            <person name="Kawakami B."/>
            <person name="Yamazaki M."/>
            <person name="Watanabe K."/>
            <person name="Kumagai A."/>
            <person name="Itakura S."/>
            <person name="Fukuzumi Y."/>
            <person name="Fujimori Y."/>
            <person name="Komiyama M."/>
            <person name="Tashiro H."/>
            <person name="Tanigami A."/>
            <person name="Fujiwara T."/>
            <person name="Ono T."/>
            <person name="Yamada K."/>
            <person name="Fujii Y."/>
            <person name="Ozaki K."/>
            <person name="Hirao M."/>
            <person name="Ohmori Y."/>
            <person name="Kawabata A."/>
            <person name="Hikiji T."/>
            <person name="Kobatake N."/>
            <person name="Inagaki H."/>
            <person name="Ikema Y."/>
            <person name="Okamoto S."/>
            <person name="Okitani R."/>
            <person name="Kawakami T."/>
            <person name="Noguchi S."/>
            <person name="Itoh T."/>
            <person name="Shigeta K."/>
            <person name="Senba T."/>
            <person name="Matsumura K."/>
            <person name="Nakajima Y."/>
            <person name="Mizuno T."/>
            <person name="Morinaga M."/>
            <person name="Sasaki M."/>
            <person name="Togashi T."/>
            <person name="Oyama M."/>
            <person name="Hata H."/>
            <person name="Watanabe M."/>
            <person name="Komatsu T."/>
            <person name="Mizushima-Sugano J."/>
            <person name="Satoh T."/>
            <person name="Shirai Y."/>
            <person name="Takahashi Y."/>
            <person name="Nakagawa K."/>
            <person name="Okumura K."/>
            <person name="Nagase T."/>
            <person name="Nomura N."/>
            <person name="Kikuchi H."/>
            <person name="Masuho Y."/>
            <person name="Yamashita R."/>
            <person name="Nakai K."/>
            <person name="Yada T."/>
            <person name="Nakamura Y."/>
            <person name="Ohara O."/>
            <person name="Isogai T."/>
            <person name="Sugano S."/>
        </authorList>
    </citation>
    <scope>NUCLEOTIDE SEQUENCE [LARGE SCALE MRNA] (ISOFORM 2)</scope>
    <source>
        <tissue>Spleen</tissue>
    </source>
</reference>
<reference key="6">
    <citation type="journal article" date="2011" name="Invest. Ophthalmol. Vis. Sci.">
        <title>Full-length transcriptome analysis of human retina-derived cell lines ARPE-19 and Y79 using the vector-capping method.</title>
        <authorList>
            <person name="Oshikawa M."/>
            <person name="Tsutsui C."/>
            <person name="Ikegami T."/>
            <person name="Fuchida Y."/>
            <person name="Matsubara M."/>
            <person name="Toyama S."/>
            <person name="Usami R."/>
            <person name="Ohtoko K."/>
            <person name="Kato S."/>
        </authorList>
    </citation>
    <scope>NUCLEOTIDE SEQUENCE [LARGE SCALE MRNA] (ISOFORM 1)</scope>
</reference>
<reference key="7">
    <citation type="journal article" date="2005" name="Nature">
        <title>The DNA sequence of the human X chromosome.</title>
        <authorList>
            <person name="Ross M.T."/>
            <person name="Grafham D.V."/>
            <person name="Coffey A.J."/>
            <person name="Scherer S."/>
            <person name="McLay K."/>
            <person name="Muzny D."/>
            <person name="Platzer M."/>
            <person name="Howell G.R."/>
            <person name="Burrows C."/>
            <person name="Bird C.P."/>
            <person name="Frankish A."/>
            <person name="Lovell F.L."/>
            <person name="Howe K.L."/>
            <person name="Ashurst J.L."/>
            <person name="Fulton R.S."/>
            <person name="Sudbrak R."/>
            <person name="Wen G."/>
            <person name="Jones M.C."/>
            <person name="Hurles M.E."/>
            <person name="Andrews T.D."/>
            <person name="Scott C.E."/>
            <person name="Searle S."/>
            <person name="Ramser J."/>
            <person name="Whittaker A."/>
            <person name="Deadman R."/>
            <person name="Carter N.P."/>
            <person name="Hunt S.E."/>
            <person name="Chen R."/>
            <person name="Cree A."/>
            <person name="Gunaratne P."/>
            <person name="Havlak P."/>
            <person name="Hodgson A."/>
            <person name="Metzker M.L."/>
            <person name="Richards S."/>
            <person name="Scott G."/>
            <person name="Steffen D."/>
            <person name="Sodergren E."/>
            <person name="Wheeler D.A."/>
            <person name="Worley K.C."/>
            <person name="Ainscough R."/>
            <person name="Ambrose K.D."/>
            <person name="Ansari-Lari M.A."/>
            <person name="Aradhya S."/>
            <person name="Ashwell R.I."/>
            <person name="Babbage A.K."/>
            <person name="Bagguley C.L."/>
            <person name="Ballabio A."/>
            <person name="Banerjee R."/>
            <person name="Barker G.E."/>
            <person name="Barlow K.F."/>
            <person name="Barrett I.P."/>
            <person name="Bates K.N."/>
            <person name="Beare D.M."/>
            <person name="Beasley H."/>
            <person name="Beasley O."/>
            <person name="Beck A."/>
            <person name="Bethel G."/>
            <person name="Blechschmidt K."/>
            <person name="Brady N."/>
            <person name="Bray-Allen S."/>
            <person name="Bridgeman A.M."/>
            <person name="Brown A.J."/>
            <person name="Brown M.J."/>
            <person name="Bonnin D."/>
            <person name="Bruford E.A."/>
            <person name="Buhay C."/>
            <person name="Burch P."/>
            <person name="Burford D."/>
            <person name="Burgess J."/>
            <person name="Burrill W."/>
            <person name="Burton J."/>
            <person name="Bye J.M."/>
            <person name="Carder C."/>
            <person name="Carrel L."/>
            <person name="Chako J."/>
            <person name="Chapman J.C."/>
            <person name="Chavez D."/>
            <person name="Chen E."/>
            <person name="Chen G."/>
            <person name="Chen Y."/>
            <person name="Chen Z."/>
            <person name="Chinault C."/>
            <person name="Ciccodicola A."/>
            <person name="Clark S.Y."/>
            <person name="Clarke G."/>
            <person name="Clee C.M."/>
            <person name="Clegg S."/>
            <person name="Clerc-Blankenburg K."/>
            <person name="Clifford K."/>
            <person name="Cobley V."/>
            <person name="Cole C.G."/>
            <person name="Conquer J.S."/>
            <person name="Corby N."/>
            <person name="Connor R.E."/>
            <person name="David R."/>
            <person name="Davies J."/>
            <person name="Davis C."/>
            <person name="Davis J."/>
            <person name="Delgado O."/>
            <person name="Deshazo D."/>
            <person name="Dhami P."/>
            <person name="Ding Y."/>
            <person name="Dinh H."/>
            <person name="Dodsworth S."/>
            <person name="Draper H."/>
            <person name="Dugan-Rocha S."/>
            <person name="Dunham A."/>
            <person name="Dunn M."/>
            <person name="Durbin K.J."/>
            <person name="Dutta I."/>
            <person name="Eades T."/>
            <person name="Ellwood M."/>
            <person name="Emery-Cohen A."/>
            <person name="Errington H."/>
            <person name="Evans K.L."/>
            <person name="Faulkner L."/>
            <person name="Francis F."/>
            <person name="Frankland J."/>
            <person name="Fraser A.E."/>
            <person name="Galgoczy P."/>
            <person name="Gilbert J."/>
            <person name="Gill R."/>
            <person name="Gloeckner G."/>
            <person name="Gregory S.G."/>
            <person name="Gribble S."/>
            <person name="Griffiths C."/>
            <person name="Grocock R."/>
            <person name="Gu Y."/>
            <person name="Gwilliam R."/>
            <person name="Hamilton C."/>
            <person name="Hart E.A."/>
            <person name="Hawes A."/>
            <person name="Heath P.D."/>
            <person name="Heitmann K."/>
            <person name="Hennig S."/>
            <person name="Hernandez J."/>
            <person name="Hinzmann B."/>
            <person name="Ho S."/>
            <person name="Hoffs M."/>
            <person name="Howden P.J."/>
            <person name="Huckle E.J."/>
            <person name="Hume J."/>
            <person name="Hunt P.J."/>
            <person name="Hunt A.R."/>
            <person name="Isherwood J."/>
            <person name="Jacob L."/>
            <person name="Johnson D."/>
            <person name="Jones S."/>
            <person name="de Jong P.J."/>
            <person name="Joseph S.S."/>
            <person name="Keenan S."/>
            <person name="Kelly S."/>
            <person name="Kershaw J.K."/>
            <person name="Khan Z."/>
            <person name="Kioschis P."/>
            <person name="Klages S."/>
            <person name="Knights A.J."/>
            <person name="Kosiura A."/>
            <person name="Kovar-Smith C."/>
            <person name="Laird G.K."/>
            <person name="Langford C."/>
            <person name="Lawlor S."/>
            <person name="Leversha M."/>
            <person name="Lewis L."/>
            <person name="Liu W."/>
            <person name="Lloyd C."/>
            <person name="Lloyd D.M."/>
            <person name="Loulseged H."/>
            <person name="Loveland J.E."/>
            <person name="Lovell J.D."/>
            <person name="Lozado R."/>
            <person name="Lu J."/>
            <person name="Lyne R."/>
            <person name="Ma J."/>
            <person name="Maheshwari M."/>
            <person name="Matthews L.H."/>
            <person name="McDowall J."/>
            <person name="McLaren S."/>
            <person name="McMurray A."/>
            <person name="Meidl P."/>
            <person name="Meitinger T."/>
            <person name="Milne S."/>
            <person name="Miner G."/>
            <person name="Mistry S.L."/>
            <person name="Morgan M."/>
            <person name="Morris S."/>
            <person name="Mueller I."/>
            <person name="Mullikin J.C."/>
            <person name="Nguyen N."/>
            <person name="Nordsiek G."/>
            <person name="Nyakatura G."/>
            <person name="O'dell C.N."/>
            <person name="Okwuonu G."/>
            <person name="Palmer S."/>
            <person name="Pandian R."/>
            <person name="Parker D."/>
            <person name="Parrish J."/>
            <person name="Pasternak S."/>
            <person name="Patel D."/>
            <person name="Pearce A.V."/>
            <person name="Pearson D.M."/>
            <person name="Pelan S.E."/>
            <person name="Perez L."/>
            <person name="Porter K.M."/>
            <person name="Ramsey Y."/>
            <person name="Reichwald K."/>
            <person name="Rhodes S."/>
            <person name="Ridler K.A."/>
            <person name="Schlessinger D."/>
            <person name="Schueler M.G."/>
            <person name="Sehra H.K."/>
            <person name="Shaw-Smith C."/>
            <person name="Shen H."/>
            <person name="Sheridan E.M."/>
            <person name="Shownkeen R."/>
            <person name="Skuce C.D."/>
            <person name="Smith M.L."/>
            <person name="Sotheran E.C."/>
            <person name="Steingruber H.E."/>
            <person name="Steward C.A."/>
            <person name="Storey R."/>
            <person name="Swann R.M."/>
            <person name="Swarbreck D."/>
            <person name="Tabor P.E."/>
            <person name="Taudien S."/>
            <person name="Taylor T."/>
            <person name="Teague B."/>
            <person name="Thomas K."/>
            <person name="Thorpe A."/>
            <person name="Timms K."/>
            <person name="Tracey A."/>
            <person name="Trevanion S."/>
            <person name="Tromans A.C."/>
            <person name="d'Urso M."/>
            <person name="Verduzco D."/>
            <person name="Villasana D."/>
            <person name="Waldron L."/>
            <person name="Wall M."/>
            <person name="Wang Q."/>
            <person name="Warren J."/>
            <person name="Warry G.L."/>
            <person name="Wei X."/>
            <person name="West A."/>
            <person name="Whitehead S.L."/>
            <person name="Whiteley M.N."/>
            <person name="Wilkinson J.E."/>
            <person name="Willey D.L."/>
            <person name="Williams G."/>
            <person name="Williams L."/>
            <person name="Williamson A."/>
            <person name="Williamson H."/>
            <person name="Wilming L."/>
            <person name="Woodmansey R.L."/>
            <person name="Wray P.W."/>
            <person name="Yen J."/>
            <person name="Zhang J."/>
            <person name="Zhou J."/>
            <person name="Zoghbi H."/>
            <person name="Zorilla S."/>
            <person name="Buck D."/>
            <person name="Reinhardt R."/>
            <person name="Poustka A."/>
            <person name="Rosenthal A."/>
            <person name="Lehrach H."/>
            <person name="Meindl A."/>
            <person name="Minx P.J."/>
            <person name="Hillier L.W."/>
            <person name="Willard H.F."/>
            <person name="Wilson R.K."/>
            <person name="Waterston R.H."/>
            <person name="Rice C.M."/>
            <person name="Vaudin M."/>
            <person name="Coulson A."/>
            <person name="Nelson D.L."/>
            <person name="Weinstock G."/>
            <person name="Sulston J.E."/>
            <person name="Durbin R.M."/>
            <person name="Hubbard T."/>
            <person name="Gibbs R.A."/>
            <person name="Beck S."/>
            <person name="Rogers J."/>
            <person name="Bentley D.R."/>
        </authorList>
    </citation>
    <scope>NUCLEOTIDE SEQUENCE [LARGE SCALE GENOMIC DNA]</scope>
</reference>
<reference key="8">
    <citation type="submission" date="2005-09" db="EMBL/GenBank/DDBJ databases">
        <authorList>
            <person name="Mural R.J."/>
            <person name="Istrail S."/>
            <person name="Sutton G.G."/>
            <person name="Florea L."/>
            <person name="Halpern A.L."/>
            <person name="Mobarry C.M."/>
            <person name="Lippert R."/>
            <person name="Walenz B."/>
            <person name="Shatkay H."/>
            <person name="Dew I."/>
            <person name="Miller J.R."/>
            <person name="Flanigan M.J."/>
            <person name="Edwards N.J."/>
            <person name="Bolanos R."/>
            <person name="Fasulo D."/>
            <person name="Halldorsson B.V."/>
            <person name="Hannenhalli S."/>
            <person name="Turner R."/>
            <person name="Yooseph S."/>
            <person name="Lu F."/>
            <person name="Nusskern D.R."/>
            <person name="Shue B.C."/>
            <person name="Zheng X.H."/>
            <person name="Zhong F."/>
            <person name="Delcher A.L."/>
            <person name="Huson D.H."/>
            <person name="Kravitz S.A."/>
            <person name="Mouchard L."/>
            <person name="Reinert K."/>
            <person name="Remington K.A."/>
            <person name="Clark A.G."/>
            <person name="Waterman M.S."/>
            <person name="Eichler E.E."/>
            <person name="Adams M.D."/>
            <person name="Hunkapiller M.W."/>
            <person name="Myers E.W."/>
            <person name="Venter J.C."/>
        </authorList>
    </citation>
    <scope>NUCLEOTIDE SEQUENCE [LARGE SCALE GENOMIC DNA]</scope>
</reference>
<reference key="9">
    <citation type="submission" date="2005-11" db="UniProtKB">
        <authorList>
            <person name="Bienvenut W.V."/>
            <person name="Claeys D."/>
        </authorList>
    </citation>
    <scope>PROTEIN SEQUENCE OF 2-24; 44-51; 64-87; 101-127; 172-190; 300-376; 384-400; 428-437; 497-504; 581-593; 656-664; 685-700; 761-771; 774-781; 829-837; 842-900; 907-916; 959-973; 983-994; 1020-1032; 1165-1172; 1235-1294; 1297-1312; 1360-1399; 1440-1450; 1465-1486; 1492-1532; 1539-1547; 1550-1592; 1622-1633; 1636-1644; 1726-1753; 1801-1809; 1815-1831; 1892-1907; 1965-1993; 2015-2024; 2026-2049; 2202-2215; 2243-2250; 2265-2289; 2311-2333; 2335-2361; 2396-2405; 2521-2540; 2585-2598 AND 2613-2631</scope>
    <scope>CLEAVAGE OF INITIATOR METHIONINE</scope>
    <scope>ACETYLATION AT SER-2</scope>
    <scope>IDENTIFICATION BY MASS SPECTROMETRY</scope>
    <source>
        <tissue>Platelet</tissue>
    </source>
</reference>
<reference key="10">
    <citation type="journal article" date="1990" name="Biochemistry">
        <title>Purification of human smooth muscle filamin and characterization of structural domains and functional sites.</title>
        <authorList>
            <person name="Hock R.S."/>
            <person name="Davis G."/>
            <person name="Speicher D.W."/>
        </authorList>
    </citation>
    <scope>PROTEIN SEQUENCE OF 25-54; 917-940; 1037-1050; 1754-1783 AND 2148-2168</scope>
</reference>
<reference key="11">
    <citation type="journal article" date="1993" name="Hum. Mol. Genet.">
        <title>Mapping of two genes encoding isoforms of the actin binding protein ABP-280, a dystrophin like protein, to Xq28 and to chromosome 7.</title>
        <authorList>
            <person name="Maestrini E."/>
            <person name="Patrosso C."/>
            <person name="Mancini M."/>
            <person name="Rivella S."/>
            <person name="Rocchi M."/>
            <person name="Repetto M."/>
            <person name="Villa A."/>
            <person name="Frattini A."/>
            <person name="Zoppe M."/>
            <person name="Vezzoni P."/>
            <person name="Toniolo D."/>
        </authorList>
    </citation>
    <scope>NUCLEOTIDE SEQUENCE [GENOMIC DNA] OF 1658-1772</scope>
</reference>
<reference key="12">
    <citation type="journal article" date="2000" name="Hum. Genet.">
        <title>Genomic structure and fine mapping of the two human filamin gene paralogues FLNB and FLNC and comparative analysis of the filamin gene family.</title>
        <authorList>
            <person name="Chakarova C."/>
            <person name="Wehnert M.S."/>
            <person name="Uhl K."/>
            <person name="Sakthivel S."/>
            <person name="Vosberg H.-P."/>
            <person name="van der Ven P.F.M."/>
            <person name="Fuerst D.O."/>
        </authorList>
    </citation>
    <scope>SIMILARITY TO OTHER MEMBERS OF THE FAMILY</scope>
</reference>
<reference key="13">
    <citation type="journal article" date="1998" name="J. Neurosci.">
        <title>Interaction of presenilins with the filamin family of actin-binding proteins.</title>
        <authorList>
            <person name="Zhang W."/>
            <person name="Han S.W."/>
            <person name="McKeel D.W."/>
            <person name="Goate A."/>
            <person name="Wu J.Y."/>
        </authorList>
    </citation>
    <scope>INTERACTION WITH PSEN1 AND PSEN2</scope>
</reference>
<reference key="14">
    <citation type="journal article" date="2000" name="J. Neurosci.">
        <title>Localization and enhanced current density of the Kv4.2 potassium channel by interaction with the actin-binding protein filamin.</title>
        <authorList>
            <person name="Petrecca K."/>
            <person name="Miller D.M."/>
            <person name="Shrier A."/>
        </authorList>
    </citation>
    <scope>INTERACTION WITH KCND2</scope>
</reference>
<reference key="15">
    <citation type="journal article" date="2001" name="J. Cell Biol.">
        <title>The SH2-containing inositol polyphosphate 5-phosphatase, SHIP-2, binds filamin and regulates submembraneous actin.</title>
        <authorList>
            <person name="Dyson J.M."/>
            <person name="O'Malley C.J."/>
            <person name="Becanovic J."/>
            <person name="Munday A.D."/>
            <person name="Berndt M.C."/>
            <person name="Coghill I.D."/>
            <person name="Nandurkar H.H."/>
            <person name="Ooms L.M."/>
            <person name="Mitchell C.A."/>
        </authorList>
    </citation>
    <scope>INTERACTION WITH INPPL1</scope>
</reference>
<reference key="16">
    <citation type="journal article" date="2002" name="Hum. Mol. Genet.">
        <title>Filamin A and filamin B are co-expressed within neurons during periods of neuronal migration and can physically interact.</title>
        <authorList>
            <person name="Sheen V.L."/>
            <person name="Feng Y."/>
            <person name="Graham D."/>
            <person name="Takafuta T."/>
            <person name="Shapiro S.S."/>
            <person name="Walsh C.A."/>
        </authorList>
    </citation>
    <scope>INTERACTION WITH FLNB</scope>
</reference>
<reference key="17">
    <citation type="journal article" date="2002" name="J. Cell Biol.">
        <title>Different splice variants of filamin-B affect myogenesis, subcellular distribution, and determine binding to integrin (beta) subunits.</title>
        <authorList>
            <person name="van Der Flier A."/>
            <person name="Kuikman I."/>
            <person name="Kramer D."/>
            <person name="Geerts D."/>
            <person name="Kreft M."/>
            <person name="Takafuta T."/>
            <person name="Shapiro S.S."/>
            <person name="Sonnenberg A."/>
        </authorList>
    </citation>
    <scope>ALTERNATIVE SPLICING (ISOFORM 3)</scope>
    <scope>INTERACTION WITH ITGB1</scope>
</reference>
<reference key="18">
    <citation type="journal article" date="2005" name="J. Cell Sci.">
        <title>The Z-disc proteins myotilin and FATZ-1 interact with each other and are connected to the sarcolemma via muscle-specific filamins.</title>
        <authorList>
            <person name="Gontier Y."/>
            <person name="Taivainen A."/>
            <person name="Fontao L."/>
            <person name="Sonnenberg A."/>
            <person name="van der Flier A."/>
            <person name="Carpen O."/>
            <person name="Faulkner G."/>
            <person name="Borradori L."/>
        </authorList>
    </citation>
    <scope>INTERACTION WITH MYOT AND MYOZ1</scope>
</reference>
<reference key="19">
    <citation type="journal article" date="2001" name="Biochim. Biophys. Acta">
        <title>Structural and functional aspects of filamins.</title>
        <authorList>
            <person name="van der Flier A."/>
            <person name="Sonnenberg A."/>
        </authorList>
    </citation>
    <scope>REVIEW</scope>
</reference>
<reference key="20">
    <citation type="journal article" date="2001" name="Nat. Rev. Mol. Cell Biol.">
        <title>Filamins as integrators of cell mechanics and signalling.</title>
        <authorList>
            <person name="Stossel T.P."/>
            <person name="Condeelis J."/>
            <person name="Cooley L."/>
            <person name="Hartwig J.H."/>
            <person name="Noegel A."/>
            <person name="Schleicher M."/>
            <person name="Shapiro S.S."/>
        </authorList>
    </citation>
    <scope>REVIEW</scope>
</reference>
<reference key="21">
    <citation type="journal article" date="2005" name="J. Cell Sci.">
        <title>CEACAM1 functionally interacts with filamin A and exerts a dual role in the regulation of cell migration.</title>
        <authorList>
            <person name="Klaile E."/>
            <person name="Mueller M.M."/>
            <person name="Kannicht C."/>
            <person name="Singer B.B."/>
            <person name="Lucka L."/>
        </authorList>
    </citation>
    <scope>INTERACTION WITH CEACAM1</scope>
    <scope>SUBCELLULAR LOCATION</scope>
</reference>
<reference key="22">
    <citation type="journal article" date="2005" name="Mol. Cell. Biol.">
        <title>FOXC1 transcriptional regulatory activity is impaired by PBX1 in a filamin A-mediated manner.</title>
        <authorList>
            <person name="Berry F.B."/>
            <person name="O'Neill M.A."/>
            <person name="Coca-Prados M."/>
            <person name="Walter M.A."/>
        </authorList>
    </citation>
    <scope>INTERACTION WITH FOXC1</scope>
</reference>
<reference key="23">
    <citation type="journal article" date="2006" name="Cell">
        <title>Global, in vivo, and site-specific phosphorylation dynamics in signaling networks.</title>
        <authorList>
            <person name="Olsen J.V."/>
            <person name="Blagoev B."/>
            <person name="Gnad F."/>
            <person name="Macek B."/>
            <person name="Kumar C."/>
            <person name="Mortensen P."/>
            <person name="Mann M."/>
        </authorList>
    </citation>
    <scope>PHOSPHORYLATION [LARGE SCALE ANALYSIS] AT THR-1089; SER-1459; SER-2152 AND SER-2284</scope>
    <scope>IDENTIFICATION BY MASS SPECTROMETRY [LARGE SCALE ANALYSIS]</scope>
    <source>
        <tissue>Cervix carcinoma</tissue>
    </source>
</reference>
<reference key="24">
    <citation type="journal article" date="2006" name="J. Med. Genet.">
        <title>A filamin A splice mutation resulting in a syndrome of facial dysmorphism, periventricular nodular heterotopia, and severe constipation reminiscent of cerebro-fronto-facial syndrome.</title>
        <authorList>
            <person name="Hehr U."/>
            <person name="Hehr A."/>
            <person name="Uyanik G."/>
            <person name="Phelan E."/>
            <person name="Winkler J."/>
            <person name="Reardon W."/>
        </authorList>
    </citation>
    <scope>INVOLVEMENT IN PVNH1</scope>
</reference>
<reference key="25">
    <citation type="journal article" date="2006" name="Nat. Biotechnol.">
        <title>A probability-based approach for high-throughput protein phosphorylation analysis and site localization.</title>
        <authorList>
            <person name="Beausoleil S.A."/>
            <person name="Villen J."/>
            <person name="Gerber S.A."/>
            <person name="Rush J."/>
            <person name="Gygi S.P."/>
        </authorList>
    </citation>
    <scope>PHOSPHORYLATION [LARGE SCALE ANALYSIS] AT SER-1084 AND SER-1459</scope>
    <scope>IDENTIFICATION BY MASS SPECTROMETRY [LARGE SCALE ANALYSIS]</scope>
    <source>
        <tissue>Cervix carcinoma</tissue>
    </source>
</reference>
<reference key="26">
    <citation type="journal article" date="2006" name="Nat. Cell Biol.">
        <title>FilGAP, a Rho- and ROCK-regulated GAP for Rac binds filamin A to control actin remodelling.</title>
        <authorList>
            <person name="Ohta Y."/>
            <person name="Hartwig J.H."/>
            <person name="Stossel T.P."/>
        </authorList>
    </citation>
    <scope>INTERACTION WITH ARHGAP24</scope>
</reference>
<reference key="27">
    <citation type="journal article" date="2007" name="Am. J. Hum. Genet.">
        <title>Filamin A is mutated in X-linked chronic idiopathic intestinal pseudo-obstruction with central nervous system involvement.</title>
        <authorList>
            <person name="Gargiulo A."/>
            <person name="Auricchio R."/>
            <person name="Barone M.V."/>
            <person name="Cotugno G."/>
            <person name="Reardon W."/>
            <person name="Milla P.J."/>
            <person name="Ballabio A."/>
            <person name="Ciccodicola A."/>
            <person name="Auricchio A."/>
        </authorList>
    </citation>
    <scope>INVOLVEMENT IN CIIPX</scope>
</reference>
<reference key="28">
    <citation type="journal article" date="2007" name="J. Proteome Res.">
        <title>Improved titanium dioxide enrichment of phosphopeptides from HeLa cells and high confident phosphopeptide identification by cross-validation of MS/MS and MS/MS/MS spectra.</title>
        <authorList>
            <person name="Yu L.R."/>
            <person name="Zhu Z."/>
            <person name="Chan K.C."/>
            <person name="Issaq H.J."/>
            <person name="Dimitrov D.S."/>
            <person name="Veenstra T.D."/>
        </authorList>
    </citation>
    <scope>PHOSPHORYLATION [LARGE SCALE ANALYSIS] AT SER-1084</scope>
    <scope>IDENTIFICATION BY MASS SPECTROMETRY [LARGE SCALE ANALYSIS]</scope>
    <source>
        <tissue>Cervix carcinoma</tissue>
    </source>
</reference>
<reference key="29">
    <citation type="journal article" date="2008" name="Arterioscler. Thromb. Vasc. Biol.">
        <title>ECSM2, an endothelial specific filamin a binding protein that mediates chemotaxis.</title>
        <authorList>
            <person name="Armstrong L.-J."/>
            <person name="Heath V.L."/>
            <person name="Sanderson S."/>
            <person name="Kaur S."/>
            <person name="Beesley J.F.J."/>
            <person name="Herbert J.M.J."/>
            <person name="Legg J.A."/>
            <person name="Poulsom R."/>
            <person name="Bicknell R."/>
        </authorList>
    </citation>
    <scope>INTERACTION WITH ECSCR</scope>
</reference>
<reference key="30">
    <citation type="journal article" date="2008" name="J. Immunol.">
        <title>Filamin A stabilizes FcgammaRI surface expression and prevents its lysosomal routing.</title>
        <authorList>
            <person name="Beekman J.M."/>
            <person name="van der Poel C.E."/>
            <person name="van der Linden J.A."/>
            <person name="van den Berg D.L.C."/>
            <person name="van den Berghe P.V.E."/>
            <person name="van de Winkel J.G.J."/>
            <person name="Leusen J.H.W."/>
        </authorList>
    </citation>
    <scope>INTERACTION WITH FCGR1A</scope>
</reference>
<reference key="31">
    <citation type="journal article" date="2008" name="J. Proteome Res.">
        <title>Combining protein-based IMAC, peptide-based IMAC, and MudPIT for efficient phosphoproteomic analysis.</title>
        <authorList>
            <person name="Cantin G.T."/>
            <person name="Yi W."/>
            <person name="Lu B."/>
            <person name="Park S.K."/>
            <person name="Xu T."/>
            <person name="Lee J.-D."/>
            <person name="Yates J.R. III"/>
        </authorList>
    </citation>
    <scope>PHOSPHORYLATION [LARGE SCALE ANALYSIS] AT SER-1084</scope>
    <scope>IDENTIFICATION BY MASS SPECTROMETRY [LARGE SCALE ANALYSIS]</scope>
    <source>
        <tissue>Cervix carcinoma</tissue>
    </source>
</reference>
<reference key="32">
    <citation type="journal article" date="2008" name="J. Proteome Res.">
        <title>Phosphorylation analysis of primary human T lymphocytes using sequential IMAC and titanium oxide enrichment.</title>
        <authorList>
            <person name="Carrascal M."/>
            <person name="Ovelleiro D."/>
            <person name="Casas V."/>
            <person name="Gay M."/>
            <person name="Abian J."/>
        </authorList>
    </citation>
    <scope>PHOSPHORYLATION [LARGE SCALE ANALYSIS] AT SER-1459</scope>
    <scope>IDENTIFICATION BY MASS SPECTROMETRY [LARGE SCALE ANALYSIS]</scope>
    <source>
        <tissue>T-cell</tissue>
    </source>
</reference>
<reference key="33">
    <citation type="journal article" date="2008" name="J. Proteome Res.">
        <title>Phosphoproteome of resting human platelets.</title>
        <authorList>
            <person name="Zahedi R.P."/>
            <person name="Lewandrowski U."/>
            <person name="Wiesner J."/>
            <person name="Wortelkamp S."/>
            <person name="Moebius J."/>
            <person name="Schuetz C."/>
            <person name="Walter U."/>
            <person name="Gambaryan S."/>
            <person name="Sickmann A."/>
        </authorList>
    </citation>
    <scope>PHOSPHORYLATION [LARGE SCALE ANALYSIS] AT SER-1084; SER-1459; SER-2152 AND SER-2158</scope>
    <scope>IDENTIFICATION BY MASS SPECTROMETRY [LARGE SCALE ANALYSIS]</scope>
    <source>
        <tissue>Platelet</tissue>
    </source>
</reference>
<reference key="34">
    <citation type="journal article" date="2008" name="Mol. Cell">
        <title>Kinase-selective enrichment enables quantitative phosphoproteomics of the kinome across the cell cycle.</title>
        <authorList>
            <person name="Daub H."/>
            <person name="Olsen J.V."/>
            <person name="Bairlein M."/>
            <person name="Gnad F."/>
            <person name="Oppermann F.S."/>
            <person name="Korner R."/>
            <person name="Greff Z."/>
            <person name="Keri G."/>
            <person name="Stemmann O."/>
            <person name="Mann M."/>
        </authorList>
    </citation>
    <scope>PHOSPHORYLATION [LARGE SCALE ANALYSIS] AT SER-1081</scope>
    <scope>IDENTIFICATION BY MASS SPECTROMETRY [LARGE SCALE ANALYSIS]</scope>
    <source>
        <tissue>Cervix carcinoma</tissue>
    </source>
</reference>
<reference key="35">
    <citation type="journal article" date="2008" name="Proc. Natl. Acad. Sci. U.S.A.">
        <title>A quantitative atlas of mitotic phosphorylation.</title>
        <authorList>
            <person name="Dephoure N."/>
            <person name="Zhou C."/>
            <person name="Villen J."/>
            <person name="Beausoleil S.A."/>
            <person name="Bakalarski C.E."/>
            <person name="Elledge S.J."/>
            <person name="Gygi S.P."/>
        </authorList>
    </citation>
    <scope>PHOSPHORYLATION [LARGE SCALE ANALYSIS] AT SER-1084; SER-1338; SER-1459; SER-1533; SER-1630; SER-2053; SER-2152; SER-2327; SER-2414 AND SER-2510</scope>
    <scope>IDENTIFICATION BY MASS SPECTROMETRY [LARGE SCALE ANALYSIS]</scope>
    <source>
        <tissue>Cervix carcinoma</tissue>
    </source>
</reference>
<reference key="36">
    <citation type="journal article" date="2009" name="Anal. Chem.">
        <title>Lys-N and trypsin cover complementary parts of the phosphoproteome in a refined SCX-based approach.</title>
        <authorList>
            <person name="Gauci S."/>
            <person name="Helbig A.O."/>
            <person name="Slijper M."/>
            <person name="Krijgsveld J."/>
            <person name="Heck A.J."/>
            <person name="Mohammed S."/>
        </authorList>
    </citation>
    <scope>ACETYLATION [LARGE SCALE ANALYSIS] AT SER-2</scope>
    <scope>CLEAVAGE OF INITIATOR METHIONINE [LARGE SCALE ANALYSIS]</scope>
    <scope>IDENTIFICATION BY MASS SPECTROMETRY [LARGE SCALE ANALYSIS]</scope>
</reference>
<reference key="37">
    <citation type="journal article" date="2009" name="J. Biol. Chem.">
        <title>Identification and characterization of multiple similar ligand-binding repeats in filamin: implication on filamin-mediated receptor clustering and cross-talk.</title>
        <authorList>
            <person name="Ithychanda S.S."/>
            <person name="Hsu D."/>
            <person name="Li H."/>
            <person name="Yan L."/>
            <person name="Liu D.D."/>
            <person name="Liu D."/>
            <person name="Das M."/>
            <person name="Plow E.F."/>
            <person name="Qin J."/>
        </authorList>
    </citation>
    <scope>INTERACTION WITH GP1BA; ITGB7; ITGB2 AND FBLIM1</scope>
</reference>
<reference key="38">
    <citation type="journal article" date="2009" name="Sci. Signal.">
        <title>Quantitative phosphoproteomic analysis of T cell receptor signaling reveals system-wide modulation of protein-protein interactions.</title>
        <authorList>
            <person name="Mayya V."/>
            <person name="Lundgren D.H."/>
            <person name="Hwang S.-I."/>
            <person name="Rezaul K."/>
            <person name="Wu L."/>
            <person name="Eng J.K."/>
            <person name="Rodionov V."/>
            <person name="Han D.K."/>
        </authorList>
    </citation>
    <scope>PHOSPHORYLATION [LARGE SCALE ANALYSIS] AT SER-1084</scope>
    <scope>IDENTIFICATION BY MASS SPECTROMETRY [LARGE SCALE ANALYSIS]</scope>
    <source>
        <tissue>Leukemic T-cell</tissue>
    </source>
</reference>
<reference key="39">
    <citation type="journal article" date="2009" name="Science">
        <title>Lysine acetylation targets protein complexes and co-regulates major cellular functions.</title>
        <authorList>
            <person name="Choudhary C."/>
            <person name="Kumar C."/>
            <person name="Gnad F."/>
            <person name="Nielsen M.L."/>
            <person name="Rehman M."/>
            <person name="Walther T.C."/>
            <person name="Olsen J.V."/>
            <person name="Mann M."/>
        </authorList>
    </citation>
    <scope>ACETYLATION [LARGE SCALE ANALYSIS] AT LYS-508; LYS-700; LYS-781; LYS-837; LYS-2607 AND LYS-2621</scope>
    <scope>IDENTIFICATION BY MASS SPECTROMETRY [LARGE SCALE ANALYSIS]</scope>
</reference>
<reference key="40">
    <citation type="journal article" date="2010" name="J. Exp. Med.">
        <title>A novel interaction between FlnA and Syk regulates platelet ITAM-mediated receptor signaling and function.</title>
        <authorList>
            <person name="Falet H."/>
            <person name="Pollitt A.Y."/>
            <person name="Begonja A.J."/>
            <person name="Weber S.E."/>
            <person name="Duerschmied D."/>
            <person name="Wagner D.D."/>
            <person name="Watson S.P."/>
            <person name="Hartwig J.H."/>
        </authorList>
    </citation>
    <scope>INTERACTION WITH SYK</scope>
</reference>
<reference key="41">
    <citation type="journal article" date="2010" name="Sci. Signal.">
        <title>Quantitative phosphoproteomics reveals widespread full phosphorylation site occupancy during mitosis.</title>
        <authorList>
            <person name="Olsen J.V."/>
            <person name="Vermeulen M."/>
            <person name="Santamaria A."/>
            <person name="Kumar C."/>
            <person name="Miller M.L."/>
            <person name="Jensen L.J."/>
            <person name="Gnad F."/>
            <person name="Cox J."/>
            <person name="Jensen T.S."/>
            <person name="Nigg E.A."/>
            <person name="Brunak S."/>
            <person name="Mann M."/>
        </authorList>
    </citation>
    <scope>PHOSPHORYLATION [LARGE SCALE ANALYSIS] AT SER-1081; SER-1084; SER-1459; SER-1533; SER-1734; SER-2053; SER-2152; SER-2284; SER-2327; THR-2336 AND SER-2414</scope>
    <scope>IDENTIFICATION BY MASS SPECTROMETRY [LARGE SCALE ANALYSIS]</scope>
    <source>
        <tissue>Cervix carcinoma</tissue>
    </source>
</reference>
<reference key="42">
    <citation type="journal article" date="2011" name="BMC Syst. Biol.">
        <title>Initial characterization of the human central proteome.</title>
        <authorList>
            <person name="Burkard T.R."/>
            <person name="Planyavsky M."/>
            <person name="Kaupe I."/>
            <person name="Breitwieser F.P."/>
            <person name="Buerckstuemmer T."/>
            <person name="Bennett K.L."/>
            <person name="Superti-Furga G."/>
            <person name="Colinge J."/>
        </authorList>
    </citation>
    <scope>IDENTIFICATION BY MASS SPECTROMETRY [LARGE SCALE ANALYSIS]</scope>
</reference>
<reference key="43">
    <citation type="journal article" date="2011" name="Biochemistry">
        <title>Evidence for multisite ligand binding and stretching of filamin by integrin and migfilin.</title>
        <authorList>
            <person name="Ithychanda S.S."/>
            <person name="Qin J."/>
        </authorList>
    </citation>
    <scope>INTERACTION WITH ITGB7 AND FBLIM1</scope>
    <scope>DOMAIN</scope>
</reference>
<reference key="44">
    <citation type="journal article" date="2011" name="Biosci. Biotechnol. Biochem.">
        <title>Identification of novel nuclear protein interactions with the N-terminal part of filamin A.</title>
        <authorList>
            <person name="Qiu H."/>
            <person name="Nomiyama R."/>
            <person name="Moriguchi K."/>
            <person name="Fukada T."/>
            <person name="Sugimoto K."/>
        </authorList>
    </citation>
    <scope>INTERACTION WITH TAF1B AND MIS18BP1</scope>
    <scope>CHARACTERIZATION OF VARIANTS ALA-1159; THR-1188 AND LEU-1199</scope>
</reference>
<reference key="45">
    <citation type="journal article" date="2011" name="Blood">
        <title>Thrombocytopenia resulting from mutations in filamin A can be expressed as an isolated syndrome.</title>
        <authorList>
            <person name="Nurden P."/>
            <person name="Debili N."/>
            <person name="Coupry I."/>
            <person name="Bryckaert M."/>
            <person name="Youlyouz-Marfak I."/>
            <person name="Sole G."/>
            <person name="Pons A.C."/>
            <person name="Berrou E."/>
            <person name="Adam F."/>
            <person name="Kauskot A."/>
            <person name="Lamaziere J.M."/>
            <person name="Rameau P."/>
            <person name="Fergelot P."/>
            <person name="Rooryck C."/>
            <person name="Cailley D."/>
            <person name="Arveiler B."/>
            <person name="Lacombe D."/>
            <person name="Vainchenker W."/>
            <person name="Nurden A."/>
            <person name="Goizet C."/>
        </authorList>
    </citation>
    <scope>INVOLVEMENT IN MACROTHROMBOCYTOPENIA</scope>
    <scope>VARIANT LYS-1803</scope>
</reference>
<reference key="46">
    <citation type="journal article" date="2011" name="Sci. Signal.">
        <title>System-wide temporal characterization of the proteome and phosphoproteome of human embryonic stem cell differentiation.</title>
        <authorList>
            <person name="Rigbolt K.T."/>
            <person name="Prokhorova T.A."/>
            <person name="Akimov V."/>
            <person name="Henningsen J."/>
            <person name="Johansen P.T."/>
            <person name="Kratchmarova I."/>
            <person name="Kassem M."/>
            <person name="Mann M."/>
            <person name="Olsen J.V."/>
            <person name="Blagoev B."/>
        </authorList>
    </citation>
    <scope>PHOSPHORYLATION [LARGE SCALE ANALYSIS] AT SER-11; SER-1081; SER-1084; SER-1459; SER-2152 AND SER-2327</scope>
    <scope>IDENTIFICATION BY MASS SPECTROMETRY [LARGE SCALE ANALYSIS]</scope>
</reference>
<reference key="47">
    <citation type="journal article" date="2012" name="Hum. Mol. Genet.">
        <title>A meckelin-filamin A interaction mediates ciliogenesis.</title>
        <authorList>
            <person name="Adams M."/>
            <person name="Simms R.J."/>
            <person name="Abdelhamed Z."/>
            <person name="Dawe H.R."/>
            <person name="Szymanska K."/>
            <person name="Logan C.V."/>
            <person name="Wheway G."/>
            <person name="Pitt E."/>
            <person name="Gull K."/>
            <person name="Knowles M.A."/>
            <person name="Blair E."/>
            <person name="Cross S.H."/>
            <person name="Sayer J.A."/>
            <person name="Johnson C.A."/>
        </authorList>
    </citation>
    <scope>FUNCTION IN CILIOGENESIS</scope>
    <scope>INTERACTION WITH TMEM67 AND MKS1</scope>
</reference>
<reference key="48">
    <citation type="journal article" date="2013" name="Genes Cells">
        <title>Junctional Rab13-binding protein (JRAB) regulates cell spreading via filamins.</title>
        <authorList>
            <person name="Sakane A."/>
            <person name="Alamir Mahmoud Abdallah A."/>
            <person name="Nakano K."/>
            <person name="Honda K."/>
            <person name="Kitamura T."/>
            <person name="Imoto I."/>
            <person name="Matsushita N."/>
            <person name="Sasaki T."/>
        </authorList>
    </citation>
    <scope>INTERACTION WITH MICALL2</scope>
</reference>
<reference key="49">
    <citation type="journal article" date="2013" name="Genet. Med.">
        <title>Congenital short bowel syndrome as the presenting symptom in male patients with FLNA mutations.</title>
        <authorList>
            <person name="van der Werf C.S."/>
            <person name="Sribudiani Y."/>
            <person name="Verheij J.B."/>
            <person name="Carroll M."/>
            <person name="O'Loughlin E."/>
            <person name="Chen C.H."/>
            <person name="Brooks A.S."/>
            <person name="Liszewski M.K."/>
            <person name="Atkinson J.P."/>
            <person name="Hofstra R.M."/>
        </authorList>
    </citation>
    <scope>INVOLVEMENT IN CSBSX</scope>
</reference>
<reference key="50">
    <citation type="journal article" date="2013" name="J. Biol. Chem.">
        <title>ASB2alpha, an E3 ubiquitin ligase specificity subunit, regulates cell spreading and triggers proteasomal degradation of filamins by targeting the filamin calponin homology 1 domain.</title>
        <authorList>
            <person name="Razinia Z."/>
            <person name="Baldassarre M."/>
            <person name="Cantelli G."/>
            <person name="Calderwood D.A."/>
        </authorList>
    </citation>
    <scope>UBIQUITINATION AT LYS-42; LYS-43 AND LYS-135</scope>
    <scope>MUTAGENESIS OF LYS-42; LYS-43 AND LYS-135</scope>
</reference>
<reference key="51">
    <citation type="journal article" date="2013" name="J. Proteome Res.">
        <title>Toward a comprehensive characterization of a human cancer cell phosphoproteome.</title>
        <authorList>
            <person name="Zhou H."/>
            <person name="Di Palma S."/>
            <person name="Preisinger C."/>
            <person name="Peng M."/>
            <person name="Polat A.N."/>
            <person name="Heck A.J."/>
            <person name="Mohammed S."/>
        </authorList>
    </citation>
    <scope>PHOSPHORYLATION [LARGE SCALE ANALYSIS] AT SER-1081; SER-1084; SER-1301; SER-1459; SER-1533; SER-1630; SER-1835; SER-2128; SER-2152; SER-2158; SER-2284; SER-2327; THR-2336; SER-2338 AND SER-2510</scope>
    <scope>IDENTIFICATION BY MASS SPECTROMETRY [LARGE SCALE ANALYSIS]</scope>
    <source>
        <tissue>Cervix carcinoma</tissue>
        <tissue>Erythroleukemia</tissue>
    </source>
</reference>
<reference key="52">
    <citation type="journal article" date="2014" name="J. Proteomics">
        <title>An enzyme assisted RP-RPLC approach for in-depth analysis of human liver phosphoproteome.</title>
        <authorList>
            <person name="Bian Y."/>
            <person name="Song C."/>
            <person name="Cheng K."/>
            <person name="Dong M."/>
            <person name="Wang F."/>
            <person name="Huang J."/>
            <person name="Sun D."/>
            <person name="Wang L."/>
            <person name="Ye M."/>
            <person name="Zou H."/>
        </authorList>
    </citation>
    <scope>PHOSPHORYLATION [LARGE SCALE ANALYSIS] AT SER-1055; SER-1081; SER-1459; SER-1734; SER-1967; SER-2152; SER-2158 AND SER-2163</scope>
    <scope>IDENTIFICATION BY MASS SPECTROMETRY [LARGE SCALE ANALYSIS]</scope>
    <source>
        <tissue>Liver</tissue>
    </source>
</reference>
<reference key="53">
    <citation type="journal article" date="2014" name="Nat. Commun.">
        <title>Amino- and carboxyl-terminal domains of Filamin-A interact with CRMP1 to mediate Sema3A signalling.</title>
        <authorList>
            <person name="Nakamura F."/>
            <person name="Kumeta K."/>
            <person name="Hida T."/>
            <person name="Isono T."/>
            <person name="Nakayama Y."/>
            <person name="Kuramata-Matsuoka E."/>
            <person name="Yamashita N."/>
            <person name="Uchida Y."/>
            <person name="Ogura K."/>
            <person name="Gengyo-Ando K."/>
            <person name="Mitani S."/>
            <person name="Ogino T."/>
            <person name="Goshima Y."/>
        </authorList>
    </citation>
    <scope>FUNCTION</scope>
    <scope>INTERACTION WITH CRMP1; DPYSL3 AND DPYSL4</scope>
</reference>
<reference key="54">
    <citation type="journal article" date="2014" name="Nat. Struct. Mol. Biol.">
        <title>Uncovering global SUMOylation signaling networks in a site-specific manner.</title>
        <authorList>
            <person name="Hendriks I.A."/>
            <person name="D'Souza R.C."/>
            <person name="Yang B."/>
            <person name="Verlaan-de Vries M."/>
            <person name="Mann M."/>
            <person name="Vertegaal A.C."/>
        </authorList>
    </citation>
    <scope>SUMOYLATION [LARGE SCALE ANALYSIS] AT LYS-299</scope>
    <scope>IDENTIFICATION BY MASS SPECTROMETRY [LARGE SCALE ANALYSIS]</scope>
</reference>
<reference key="55">
    <citation type="journal article" date="2014" name="Proc. Natl. Acad. Sci. U.S.A.">
        <title>Mapping of SUMO sites and analysis of SUMOylation changes induced by external stimuli.</title>
        <authorList>
            <person name="Impens F."/>
            <person name="Radoshevich L."/>
            <person name="Cossart P."/>
            <person name="Ribet D."/>
        </authorList>
    </citation>
    <scope>SUMOYLATION [LARGE SCALE ANALYSIS] AT LYS-299</scope>
    <scope>IDENTIFICATION BY MASS SPECTROMETRY [LARGE SCALE ANALYSIS]</scope>
</reference>
<reference key="56">
    <citation type="journal article" date="2015" name="Biochemistry">
        <title>G Protein-Coupled Receptors Directly Bind Filamin A with High Affinity and Promote Filamin Phosphorylation.</title>
        <authorList>
            <person name="Tirupula K.C."/>
            <person name="Ithychanda S.S."/>
            <person name="Mohan M.L."/>
            <person name="Naga Prasad S.V."/>
            <person name="Qin J."/>
            <person name="Karnik S.S."/>
        </authorList>
    </citation>
    <scope>INTERACTION WITH DRD3; MAS1; AGTR1 AND ADRA1D</scope>
    <scope>PHOSPHORYLATION AT SER-2152</scope>
</reference>
<reference key="57">
    <citation type="journal article" date="2015" name="Cell Rep.">
        <title>SUMO-2 orchestrates chromatin modifiers in response to DNA damage.</title>
        <authorList>
            <person name="Hendriks I.A."/>
            <person name="Treffers L.W."/>
            <person name="Verlaan-de Vries M."/>
            <person name="Olsen J.V."/>
            <person name="Vertegaal A.C."/>
        </authorList>
    </citation>
    <scope>SUMOYLATION [LARGE SCALE ANALYSIS] AT LYS-299</scope>
    <scope>IDENTIFICATION BY MASS SPECTROMETRY [LARGE SCALE ANALYSIS]</scope>
</reference>
<reference key="58">
    <citation type="journal article" date="2015" name="J. Biol. Chem.">
        <title>A mechanism of global shape-dependent recognition and phosphorylation of filamin by protein kinase A.</title>
        <authorList>
            <person name="Ithychanda S.S."/>
            <person name="Fang X."/>
            <person name="Mohan M.L."/>
            <person name="Zhu L."/>
            <person name="Tirupula K.C."/>
            <person name="Naga Prasad S.V."/>
            <person name="Wang Y.X."/>
            <person name="Karnik S.S."/>
            <person name="Qin J."/>
        </authorList>
    </citation>
    <scope>PHOSPHORYLATION AT SER-2152 AND THR-2336</scope>
    <scope>REGULATION OF PHOSPHORYLATION AT SER-2152</scope>
    <scope>INTERACTION WITH GP1BA</scope>
    <scope>IDENTIFICATION BY MASS SPECTROMETRY</scope>
</reference>
<reference key="59">
    <citation type="journal article" date="2015" name="Mol. Cell. Proteomics">
        <title>System-wide analysis of SUMOylation dynamics in response to replication stress reveals novel small ubiquitin-like modified target proteins and acceptor lysines relevant for genome stability.</title>
        <authorList>
            <person name="Xiao Z."/>
            <person name="Chang J.G."/>
            <person name="Hendriks I.A."/>
            <person name="Sigurdsson J.O."/>
            <person name="Olsen J.V."/>
            <person name="Vertegaal A.C."/>
        </authorList>
    </citation>
    <scope>SUMOYLATION [LARGE SCALE ANALYSIS] AT LYS-299</scope>
    <scope>IDENTIFICATION BY MASS SPECTROMETRY [LARGE SCALE ANALYSIS]</scope>
</reference>
<reference key="60">
    <citation type="journal article" date="2015" name="Proteomics">
        <title>N-terminome analysis of the human mitochondrial proteome.</title>
        <authorList>
            <person name="Vaca Jacome A.S."/>
            <person name="Rabilloud T."/>
            <person name="Schaeffer-Reiss C."/>
            <person name="Rompais M."/>
            <person name="Ayoub D."/>
            <person name="Lane L."/>
            <person name="Bairoch A."/>
            <person name="Van Dorsselaer A."/>
            <person name="Carapito C."/>
        </authorList>
    </citation>
    <scope>ACETYLATION [LARGE SCALE ANALYSIS] AT SER-2</scope>
    <scope>CLEAVAGE OF INITIATOR METHIONINE [LARGE SCALE ANALYSIS]</scope>
    <scope>IDENTIFICATION BY MASS SPECTROMETRY [LARGE SCALE ANALYSIS]</scope>
</reference>
<reference key="61">
    <citation type="journal article" date="2016" name="Dev. Cell">
        <title>Endothelial RSPO3 controls vascular stability and pruning through non-canonical WNT/Ca(2+)/NFAT signaling.</title>
        <authorList>
            <person name="Scholz B."/>
            <person name="Korn C."/>
            <person name="Wojtarowicz J."/>
            <person name="Mogler C."/>
            <person name="Augustin I."/>
            <person name="Boutros M."/>
            <person name="Niehrs C."/>
            <person name="Augustin H.G."/>
        </authorList>
    </citation>
    <scope>UBIQUITINATION</scope>
</reference>
<reference key="62">
    <citation type="journal article" date="2017" name="Nat. Struct. Mol. Biol.">
        <title>Site-specific mapping of the human SUMO proteome reveals co-modification with phosphorylation.</title>
        <authorList>
            <person name="Hendriks I.A."/>
            <person name="Lyon D."/>
            <person name="Young C."/>
            <person name="Jensen L.J."/>
            <person name="Vertegaal A.C."/>
            <person name="Nielsen M.L."/>
        </authorList>
    </citation>
    <scope>SUMOYLATION [LARGE SCALE ANALYSIS] AT LYS-299</scope>
    <scope>IDENTIFICATION BY MASS SPECTROMETRY [LARGE SCALE ANALYSIS]</scope>
</reference>
<reference key="63">
    <citation type="journal article" date="2019" name="Biochemistry">
        <title>Identification of Filamin A Mechanobinding Partner II: Fimbacin Is a Novel Actin Cross-Linking and Filamin A Binding Protein.</title>
        <authorList>
            <person name="Wang J."/>
            <person name="Nakamura F."/>
        </authorList>
    </citation>
    <scope>INTERACTION WITH LUZP1</scope>
</reference>
<reference key="64">
    <citation type="journal article" date="2018" name="PLoS Genet.">
        <title>De novo mutations in the GTP/GDP-binding region of RALA, a RAS-like small GTPase, cause intellectual disability and developmental delay.</title>
        <authorList>
            <person name="Hiatt S.M."/>
            <person name="Neu M.B."/>
            <person name="Ramaker R.C."/>
            <person name="Hardigan A.A."/>
            <person name="Prokop J.W."/>
            <person name="Hancarova M."/>
            <person name="Prchalova D."/>
            <person name="Havlovicova M."/>
            <person name="Prchal J."/>
            <person name="Stranecky V."/>
            <person name="Yim D.K.C."/>
            <person name="Powis Z."/>
            <person name="Keren B."/>
            <person name="Nava C."/>
            <person name="Mignot C."/>
            <person name="Rio M."/>
            <person name="Revah-Politi A."/>
            <person name="Hemati P."/>
            <person name="Stong N."/>
            <person name="Iglesias A.D."/>
            <person name="Suchy S.F."/>
            <person name="Willaert R."/>
            <person name="Wentzensen I.M."/>
            <person name="Wheeler P.G."/>
            <person name="Brick L."/>
            <person name="Kozenko M."/>
            <person name="Hurst A.C.E."/>
            <person name="Wheless J.W."/>
            <person name="Lacassie Y."/>
            <person name="Myers R.M."/>
            <person name="Barsh G.S."/>
            <person name="Sedlacek Z."/>
            <person name="Cooper G.M."/>
        </authorList>
    </citation>
    <scope>VARIANT LEU-606</scope>
</reference>
<reference key="65">
    <citation type="journal article" date="2007" name="EMBO J.">
        <title>Structure of three tandem filamin domains reveals auto-inhibition of ligand binding.</title>
        <authorList>
            <person name="Lad Y."/>
            <person name="Kiema T."/>
            <person name="Jiang P."/>
            <person name="Pentikainen O.T."/>
            <person name="Coles C.H."/>
            <person name="Campbell I.D."/>
            <person name="Calderwood D.A."/>
            <person name="Ylanne J."/>
        </authorList>
    </citation>
    <scope>X-RAY CRYSTALLOGRAPHY (2.5 ANGSTROMS) OF 2045-2329</scope>
    <scope>DOMAIN</scope>
</reference>
<reference key="66">
    <citation type="journal article" date="2009" name="Acta Crystallogr. D">
        <title>Structure of the human filamin A actin-binding domain.</title>
        <authorList>
            <person name="Ruskamo S."/>
            <person name="Ylanne J."/>
        </authorList>
    </citation>
    <scope>X-RAY CRYSTALLOGRAPHY (3.2 ANGSTROMS) OF 1-278</scope>
    <scope>ACTIN-BINDING REGION</scope>
    <scope>SUBUNIT</scope>
</reference>
<reference key="67">
    <citation type="journal article" date="2009" name="J. Biol. Chem.">
        <title>Atomic structures of two novel immunoglobulin-like domain pairs in the actin cross-linking protein filamin.</title>
        <authorList>
            <person name="Heikkinen O.K."/>
            <person name="Ruskamo S."/>
            <person name="Konarev P.V."/>
            <person name="Svergun D.I."/>
            <person name="Iivanainen T."/>
            <person name="Heikkinen S.M."/>
            <person name="Permi P."/>
            <person name="Koskela H."/>
            <person name="Kilpelainen I."/>
            <person name="Ylanne J."/>
        </authorList>
    </citation>
    <scope>STRUCTURE BY NMR OF 1772-1956 AND 1954-2141</scope>
</reference>
<reference key="68">
    <citation type="journal article" date="2001" name="Hum. Mol. Genet.">
        <title>Mutations in the X-linked filamin 1 gene cause periventricular nodular heterotopia in males as well as in females.</title>
        <authorList>
            <person name="Sheen V.L."/>
            <person name="Dixon P.H."/>
            <person name="Fox J.W."/>
            <person name="Hong S.E."/>
            <person name="Kinton L."/>
            <person name="Sisodiya S.M."/>
            <person name="Duncan J.S."/>
            <person name="Dubeau F."/>
            <person name="Scheffer I.E."/>
            <person name="Schachter S.C."/>
            <person name="Wilner A."/>
            <person name="Henchy R."/>
            <person name="Crino P."/>
            <person name="Kamuro K."/>
            <person name="DiMario F."/>
            <person name="Berg M."/>
            <person name="Kuzniecky R."/>
            <person name="Cole A.J."/>
            <person name="Bromfield E."/>
            <person name="Biber M."/>
            <person name="Schomer D."/>
            <person name="Wheless J."/>
            <person name="Silver K."/>
            <person name="Mochida G.H."/>
            <person name="Berkovic S.F."/>
            <person name="Andermann F."/>
            <person name="Andermann E."/>
            <person name="Dobyns W.B."/>
            <person name="Wood N.W."/>
            <person name="Walsh C.A."/>
        </authorList>
    </citation>
    <scope>VARIANT PVNH1 PHE-656</scope>
    <scope>VARIANT THR-1764</scope>
</reference>
<reference key="69">
    <citation type="journal article" date="2002" name="Acta Neuropathol.">
        <title>Bilateral periventricular nodular heterotopia due to filamin 1 gene mutation: widespread glomeruloid microvascular anomaly and dysplastic cytoarchitecture in the cerebral cortex.</title>
        <authorList>
            <person name="Kakita A."/>
            <person name="Hayashi S."/>
            <person name="Moro F."/>
            <person name="Guerrini R."/>
            <person name="Ozawa T."/>
            <person name="Ono K."/>
            <person name="Kameyama S."/>
            <person name="Walsh C.A."/>
            <person name="Takahashi H."/>
        </authorList>
    </citation>
    <scope>VARIANT MET-528</scope>
</reference>
<reference key="70">
    <citation type="journal article" date="2002" name="Neurology">
        <title>Familial periventricular heterotopia: missense and distal truncating mutations of the FLN1 gene.</title>
        <authorList>
            <person name="Moro F."/>
            <person name="Carrozzo R."/>
            <person name="Veggiotti P."/>
            <person name="Tortorella G."/>
            <person name="Toniolo D."/>
            <person name="Volzone A."/>
            <person name="Guerrini R."/>
        </authorList>
    </citation>
    <scope>VARIANT PVNH1 VAL-82</scope>
</reference>
<reference key="71">
    <citation type="journal article" date="2003" name="Nat. Genet.">
        <title>Localized mutations in the gene encoding the cytoskeletal protein filamin A cause diverse malformations in humans.</title>
        <authorList>
            <person name="Robertson S.P."/>
            <person name="Twigg S.R.F."/>
            <person name="Sutherland-Smith A.J."/>
            <person name="Biancalana V."/>
            <person name="Gorlin R.J."/>
            <person name="Horn D."/>
            <person name="Kenwrick S.J."/>
            <person name="Kim C.A."/>
            <person name="Morava E."/>
            <person name="Newbury-Ecob R."/>
            <person name="Oerstavik K.H."/>
            <person name="Quarrell O.W.J."/>
            <person name="Schwartz C.E."/>
            <person name="Shears D.J."/>
            <person name="Suri M."/>
            <person name="Kendrick-Jones J."/>
            <person name="Wilkie A.O.M."/>
        </authorList>
    </citation>
    <scope>VARIANTS OPD1 PHE-172; TRP-196 AND LEU-207</scope>
    <scope>VARIANTS OPD2 PRO-170; GLY-196; SER-200; LYS-254; PRO-273; LYS-555 AND PHE-1645</scope>
    <scope>VARIANTS FMD1 ALA-1159; LEU-1186 AND ILE-1620 DEL</scope>
    <scope>VARIANTS MNS GLU-1184; THR-1188 AND LEU-1199</scope>
    <scope>VARIANTS MET-429 AND THR-1764</scope>
</reference>
<reference key="72">
    <citation type="journal article" date="2004" name="Neurology">
        <title>Germline and mosaic mutations of FLN1 in men with periventricular heterotopia.</title>
        <authorList>
            <person name="Guerrini R."/>
            <person name="Mei D."/>
            <person name="Sisodiya S.M."/>
            <person name="Sicca F."/>
            <person name="Harding B."/>
            <person name="Takahashi Y."/>
            <person name="Dorn T."/>
            <person name="Yoshida A."/>
            <person name="Campistol J."/>
            <person name="Kraemer G."/>
            <person name="Moro F."/>
            <person name="Dobyns W.B."/>
            <person name="Parrini E."/>
        </authorList>
    </citation>
    <scope>VARIANTS PVNH1 VAL-102 AND PHE-149</scope>
</reference>
<reference key="73">
    <citation type="journal article" date="2005" name="Am. J. Med. Genet. A">
        <title>A novel 9 bp deletion in the filamin A gene causes an otopalatodigital-spectrum disorder with a variable, intermediate phenotype.</title>
        <authorList>
            <person name="Stefanova M."/>
            <person name="Meinecke P."/>
            <person name="Gal A."/>
            <person name="Bolz H."/>
        </authorList>
    </citation>
    <scope>VARIANT OTOPALATODIGITAL SPECTRUM DISORDER 1635-ARG--VAL-1637 DEL</scope>
</reference>
<reference key="74">
    <citation type="journal article" date="2005" name="Am. J. Med. Genet. A">
        <title>A novel filamin A D203Y mutation in a female patient with otopalatodigital type 1 syndrome and extremely skewed X chromosome inactivation.</title>
        <authorList>
            <person name="Hidalgo-Bravo A."/>
            <person name="Pompa-Mera E.N."/>
            <person name="Kofman-Alfaro S."/>
            <person name="Gonzalez-Bonilla C.R."/>
            <person name="Zenteno J.C."/>
        </authorList>
    </citation>
    <scope>VARIANT OPD1 TYR-203</scope>
</reference>
<reference key="75">
    <citation type="journal article" date="2005" name="Neurology">
        <title>Filamin A mutations cause periventricular heterotopia with Ehlers-Danlos syndrome.</title>
        <authorList>
            <person name="Sheen V.L."/>
            <person name="Jansen A."/>
            <person name="Chen M.H."/>
            <person name="Parrini E."/>
            <person name="Morgan T."/>
            <person name="Ravenscroft R."/>
            <person name="Ganesh V."/>
            <person name="Underwood T."/>
            <person name="Wiley J."/>
            <person name="Leventer R."/>
            <person name="Vaid R.R."/>
            <person name="Ruiz D.E."/>
            <person name="Hutchins G.M."/>
            <person name="Menasha J."/>
            <person name="Willner J."/>
            <person name="Geng Y."/>
            <person name="Gripp K.W."/>
            <person name="Nicholson L."/>
            <person name="Berry-Kravis E."/>
            <person name="Bodell A."/>
            <person name="Apse K."/>
            <person name="Hill R.S."/>
            <person name="Dubeau F."/>
            <person name="Andermann F."/>
            <person name="Barkovich J."/>
            <person name="Andermann E."/>
            <person name="Shugart Y.Y."/>
            <person name="Thomas P."/>
            <person name="Viri M."/>
            <person name="Veggiotti P."/>
            <person name="Robertson S."/>
            <person name="Guerrini R."/>
            <person name="Walsh C.A."/>
        </authorList>
    </citation>
    <scope>VARIANT PVNH1 GLY-39</scope>
</reference>
<reference key="76">
    <citation type="journal article" date="2006" name="Am. J. Med. Genet. A">
        <title>Genotype-epigenotype-phenotype correlations in females with frontometaphyseal dysplasia.</title>
        <authorList>
            <person name="Zenker M."/>
            <person name="Naehrlich L."/>
            <person name="Sticht H."/>
            <person name="Reis A."/>
            <person name="Horn D."/>
        </authorList>
    </citation>
    <scope>VARIANTS FMD1 LEU-1186 AND CYS-1728</scope>
</reference>
<reference key="77">
    <citation type="journal article" date="2006" name="J. Med. Genet.">
        <title>Ehlers-Danlos syndrome and periventricular nodular heterotopia in a Spanish family with a single FLNA mutation.</title>
        <authorList>
            <person name="Gomez-Garre P."/>
            <person name="Seijo M."/>
            <person name="Gutierrez-Delicado E."/>
            <person name="Castro del Rio M."/>
            <person name="de la Torre C."/>
            <person name="Gomez-Abad C."/>
            <person name="Morales-Corraliza J."/>
            <person name="Puig M."/>
            <person name="Serratosa J.M."/>
        </authorList>
    </citation>
    <scope>VARIANT PVNH1 VAL-128</scope>
</reference>
<reference key="78">
    <citation type="journal article" date="2007" name="Am. J. Med. Genet. A">
        <title>Otopalatodigital syndrome type 2 in two siblings with a novel filamin A 629G&gt;T mutation: clinical, pathological, and molecular findings.</title>
        <authorList>
            <person name="Marino-Enriquez A."/>
            <person name="Lapunzina P."/>
            <person name="Robertson S.P."/>
            <person name="Rodriguez J.I."/>
        </authorList>
    </citation>
    <scope>VARIANT OPD2 PHE-210</scope>
</reference>
<reference key="79">
    <citation type="journal article" date="2007" name="Am. J. Med. Genet. A">
        <title>Filamin A mutation is one cause of FG syndrome.</title>
        <authorList>
            <person name="Unger S."/>
            <person name="Mainberger A."/>
            <person name="Spitz C."/>
            <person name="Baehr A."/>
            <person name="Zeschnigk C."/>
            <person name="Zabel B."/>
            <person name="Superti-Furga A."/>
            <person name="Morris-Rosendahl D.J."/>
        </authorList>
    </citation>
    <scope>VARIANT FGS2 LEU-1291</scope>
</reference>
<reference key="80">
    <citation type="journal article" date="2007" name="Circulation">
        <title>Mutations in the gene encoding filamin A as a cause for familial cardiac valvular dystrophy.</title>
        <authorList>
            <person name="Kyndt F."/>
            <person name="Gueffet J.P."/>
            <person name="Probst V."/>
            <person name="Jaafar P."/>
            <person name="Legendre A."/>
            <person name="Le Bouffant F."/>
            <person name="Toquet C."/>
            <person name="Roy E."/>
            <person name="McGregor L."/>
            <person name="Lynch S.A."/>
            <person name="Newbury-Ecob R."/>
            <person name="Tran V."/>
            <person name="Young I."/>
            <person name="Trochu J.N."/>
            <person name="Le Marec H."/>
            <person name="Schott J.J."/>
        </authorList>
    </citation>
    <scope>VARIANTS CVDPX ARG-288; GLN-637 AND ASP-711</scope>
</reference>
<reference key="81">
    <citation type="journal article" date="2010" name="Am. J. Hum. Genet.">
        <title>Terminal osseous dysplasia is caused by a single recurrent mutation in the FLNA gene.</title>
        <authorList>
            <person name="Sun Y."/>
            <person name="Almomani R."/>
            <person name="Aten E."/>
            <person name="Celli J."/>
            <person name="van der Heijden J."/>
            <person name="Venselaar H."/>
            <person name="Robertson S.P."/>
            <person name="Baroncini A."/>
            <person name="Franco B."/>
            <person name="Basel-Vanagaite L."/>
            <person name="Horii E."/>
            <person name="Drut R."/>
            <person name="Ariyurek Y."/>
            <person name="den Dunnen J.T."/>
            <person name="Breuning M.H."/>
        </authorList>
    </citation>
    <scope>VARIANT TOD 1724-VAL--THR-1739 DEL</scope>
</reference>
<reference key="82">
    <citation type="journal article" date="2010" name="J. Hum. Genet.">
        <title>FLNA p.V528M substitution is neither associated with bilateral periventricular nodular heterotopia nor with macrothrombocytopenia.</title>
        <authorList>
            <person name="Kunishima S."/>
            <person name="Ito-Yamamura Y."/>
            <person name="Hayakawa A."/>
            <person name="Yamamoto T."/>
            <person name="Saito H."/>
        </authorList>
    </citation>
    <scope>VARIANT MET-528</scope>
</reference>
<reference key="83">
    <citation type="journal article" date="2016" name="J. Hum. Genet.">
        <title>Otopalatodigital spectrum disorders: refinement of the phenotypic and mutational spectrum.</title>
        <authorList>
            <person name="Moutton S."/>
            <person name="Fergelot P."/>
            <person name="Naudion S."/>
            <person name="Cordier M.P."/>
            <person name="Sole G."/>
            <person name="Guerineau E."/>
            <person name="Hubert C."/>
            <person name="Rooryck C."/>
            <person name="Vuillaume M.L."/>
            <person name="Houcinat N."/>
            <person name="Deforges J."/>
            <person name="Bouron J."/>
            <person name="Deves S."/>
            <person name="Le Merrer M."/>
            <person name="David A."/>
            <person name="Genevieve D."/>
            <person name="Giuliano F."/>
            <person name="Journel H."/>
            <person name="Megarbane A."/>
            <person name="Faivre L."/>
            <person name="Chassaing N."/>
            <person name="Francannet C."/>
            <person name="Sarrazin E."/>
            <person name="Stattin E.L."/>
            <person name="Vigneron J."/>
            <person name="Leclair D."/>
            <person name="Abadie C."/>
            <person name="Sarda P."/>
            <person name="Baumann C."/>
            <person name="Delrue M.A."/>
            <person name="Arveiler B."/>
            <person name="Lacombe D."/>
            <person name="Goizet C."/>
            <person name="Coupry I."/>
        </authorList>
    </citation>
    <scope>VARIANTS OPD2 SER-187 AND GLY-196</scope>
    <scope>VARIANTS OPD1 LEU-207; THR-267; ASP-804 AND HIS-2391</scope>
    <scope>VARIANTS FMD1 VAL-1142; LEU-1186 AND ARG-1840</scope>
    <scope>VARIANTS MNS LEU-1163 AND THR-1188</scope>
</reference>
<dbReference type="EMBL" id="X53416">
    <property type="protein sequence ID" value="CAA37495.1"/>
    <property type="molecule type" value="mRNA"/>
</dbReference>
<dbReference type="EMBL" id="L44140">
    <property type="protein sequence ID" value="AAA92644.1"/>
    <property type="molecule type" value="Genomic_DNA"/>
</dbReference>
<dbReference type="EMBL" id="X70082">
    <property type="protein sequence ID" value="CAA49687.1"/>
    <property type="molecule type" value="Genomic_DNA"/>
</dbReference>
<dbReference type="EMBL" id="X70085">
    <property type="protein sequence ID" value="CAA49690.1"/>
    <property type="molecule type" value="Genomic_DNA"/>
</dbReference>
<dbReference type="EMBL" id="GU727643">
    <property type="protein sequence ID" value="ADU87644.1"/>
    <property type="molecule type" value="mRNA"/>
</dbReference>
<dbReference type="EMBL" id="AK090427">
    <property type="protein sequence ID" value="BAC03408.2"/>
    <property type="status" value="ALT_INIT"/>
    <property type="molecule type" value="mRNA"/>
</dbReference>
<dbReference type="EMBL" id="AB593010">
    <property type="protein sequence ID" value="BAJ83965.1"/>
    <property type="molecule type" value="mRNA"/>
</dbReference>
<dbReference type="EMBL" id="BX664723">
    <property type="status" value="NOT_ANNOTATED_CDS"/>
    <property type="molecule type" value="Genomic_DNA"/>
</dbReference>
<dbReference type="EMBL" id="BX936346">
    <property type="status" value="NOT_ANNOTATED_CDS"/>
    <property type="molecule type" value="Genomic_DNA"/>
</dbReference>
<dbReference type="EMBL" id="CH471172">
    <property type="protein sequence ID" value="EAW72745.1"/>
    <property type="molecule type" value="Genomic_DNA"/>
</dbReference>
<dbReference type="EMBL" id="CH471172">
    <property type="protein sequence ID" value="EAW72746.1"/>
    <property type="molecule type" value="Genomic_DNA"/>
</dbReference>
<dbReference type="CCDS" id="CCDS44021.1">
    <molecule id="P21333-2"/>
</dbReference>
<dbReference type="CCDS" id="CCDS48194.1">
    <molecule id="P21333-1"/>
</dbReference>
<dbReference type="PIR" id="A37098">
    <property type="entry name" value="A37098"/>
</dbReference>
<dbReference type="RefSeq" id="NP_001104026.1">
    <molecule id="P21333-1"/>
    <property type="nucleotide sequence ID" value="NM_001110556.2"/>
</dbReference>
<dbReference type="RefSeq" id="NP_001447.2">
    <molecule id="P21333-2"/>
    <property type="nucleotide sequence ID" value="NM_001456.4"/>
</dbReference>
<dbReference type="PDB" id="2AAV">
    <property type="method" value="NMR"/>
    <property type="chains" value="A=1863-1956"/>
</dbReference>
<dbReference type="PDB" id="2BP3">
    <property type="method" value="X-ray"/>
    <property type="resolution" value="2.32 A"/>
    <property type="chains" value="A/B=1863-1956"/>
</dbReference>
<dbReference type="PDB" id="2BRQ">
    <property type="method" value="X-ray"/>
    <property type="resolution" value="2.10 A"/>
    <property type="chains" value="A/B=2236-2329"/>
</dbReference>
<dbReference type="PDB" id="2J3S">
    <property type="method" value="X-ray"/>
    <property type="resolution" value="2.50 A"/>
    <property type="chains" value="A/B=2045-2329"/>
</dbReference>
<dbReference type="PDB" id="2JF1">
    <property type="method" value="X-ray"/>
    <property type="resolution" value="2.20 A"/>
    <property type="chains" value="A=2236-2329"/>
</dbReference>
<dbReference type="PDB" id="2K3T">
    <property type="method" value="NMR"/>
    <property type="chains" value="A=2427-2522"/>
</dbReference>
<dbReference type="PDB" id="2K7P">
    <property type="method" value="NMR"/>
    <property type="chains" value="A=1772-1956"/>
</dbReference>
<dbReference type="PDB" id="2K7Q">
    <property type="method" value="NMR"/>
    <property type="chains" value="A=1954-2141"/>
</dbReference>
<dbReference type="PDB" id="2MTP">
    <property type="method" value="NMR"/>
    <property type="chains" value="A=2236-2330"/>
</dbReference>
<dbReference type="PDB" id="2W0P">
    <property type="method" value="X-ray"/>
    <property type="resolution" value="1.90 A"/>
    <property type="chains" value="A/B=2236-2329"/>
</dbReference>
<dbReference type="PDB" id="2WFN">
    <property type="method" value="X-ray"/>
    <property type="resolution" value="3.20 A"/>
    <property type="chains" value="A/B=1-278"/>
</dbReference>
<dbReference type="PDB" id="3CNK">
    <property type="method" value="X-ray"/>
    <property type="resolution" value="1.65 A"/>
    <property type="chains" value="A/B=2559-2647"/>
</dbReference>
<dbReference type="PDB" id="3HOC">
    <property type="method" value="X-ray"/>
    <property type="resolution" value="2.30 A"/>
    <property type="chains" value="A/B=2-269"/>
</dbReference>
<dbReference type="PDB" id="3HOP">
    <property type="method" value="X-ray"/>
    <property type="resolution" value="2.30 A"/>
    <property type="chains" value="A/B=2-269"/>
</dbReference>
<dbReference type="PDB" id="3HOR">
    <property type="method" value="X-ray"/>
    <property type="resolution" value="2.70 A"/>
    <property type="chains" value="A/B=2-269"/>
</dbReference>
<dbReference type="PDB" id="3ISW">
    <property type="method" value="X-ray"/>
    <property type="resolution" value="2.80 A"/>
    <property type="chains" value="A/B=2236-2329"/>
</dbReference>
<dbReference type="PDB" id="3RGH">
    <property type="method" value="X-ray"/>
    <property type="resolution" value="2.44 A"/>
    <property type="chains" value="A/B=1158-1252"/>
</dbReference>
<dbReference type="PDB" id="4M9P">
    <property type="method" value="X-ray"/>
    <property type="resolution" value="1.72 A"/>
    <property type="chains" value="A=478-766"/>
</dbReference>
<dbReference type="PDB" id="4P3W">
    <property type="method" value="X-ray"/>
    <property type="resolution" value="2.00 A"/>
    <property type="chains" value="A/B/C/D/E/F=2152-2329"/>
</dbReference>
<dbReference type="PDB" id="5XR1">
    <property type="method" value="NMR"/>
    <property type="chains" value="A=2236-2329"/>
</dbReference>
<dbReference type="PDB" id="6D8C">
    <property type="method" value="EM"/>
    <property type="resolution" value="3.54 A"/>
    <property type="chains" value="A/B/C/D/E=1-278"/>
</dbReference>
<dbReference type="PDB" id="6EW1">
    <property type="method" value="X-ray"/>
    <property type="resolution" value="2.31 A"/>
    <property type="chains" value="A=478-766"/>
</dbReference>
<dbReference type="PDB" id="7SC4">
    <property type="method" value="X-ray"/>
    <property type="resolution" value="1.85 A"/>
    <property type="chains" value="A/B=2236-2329"/>
</dbReference>
<dbReference type="PDB" id="7SFT">
    <property type="method" value="NMR"/>
    <property type="chains" value="A=2236-2330"/>
</dbReference>
<dbReference type="PDB" id="9LWX">
    <property type="method" value="X-ray"/>
    <property type="resolution" value="2.29 A"/>
    <property type="chains" value="A/B/C/D=2236-2329"/>
</dbReference>
<dbReference type="PDB" id="9LXG">
    <property type="method" value="X-ray"/>
    <property type="resolution" value="2.46 A"/>
    <property type="chains" value="A=2236-2330"/>
</dbReference>
<dbReference type="PDBsum" id="2AAV"/>
<dbReference type="PDBsum" id="2BP3"/>
<dbReference type="PDBsum" id="2BRQ"/>
<dbReference type="PDBsum" id="2J3S"/>
<dbReference type="PDBsum" id="2JF1"/>
<dbReference type="PDBsum" id="2K3T"/>
<dbReference type="PDBsum" id="2K7P"/>
<dbReference type="PDBsum" id="2K7Q"/>
<dbReference type="PDBsum" id="2MTP"/>
<dbReference type="PDBsum" id="2W0P"/>
<dbReference type="PDBsum" id="2WFN"/>
<dbReference type="PDBsum" id="3CNK"/>
<dbReference type="PDBsum" id="3HOC"/>
<dbReference type="PDBsum" id="3HOP"/>
<dbReference type="PDBsum" id="3HOR"/>
<dbReference type="PDBsum" id="3ISW"/>
<dbReference type="PDBsum" id="3RGH"/>
<dbReference type="PDBsum" id="4M9P"/>
<dbReference type="PDBsum" id="4P3W"/>
<dbReference type="PDBsum" id="5XR1"/>
<dbReference type="PDBsum" id="6D8C"/>
<dbReference type="PDBsum" id="6EW1"/>
<dbReference type="PDBsum" id="7SC4"/>
<dbReference type="PDBsum" id="7SFT"/>
<dbReference type="PDBsum" id="9LWX"/>
<dbReference type="PDBsum" id="9LXG"/>
<dbReference type="EMDB" id="EMD-7831"/>
<dbReference type="EMDB" id="EMD-7832"/>
<dbReference type="EMDB" id="EMD-7833"/>
<dbReference type="SASBDB" id="P21333"/>
<dbReference type="SMR" id="P21333"/>
<dbReference type="BioGRID" id="108605">
    <property type="interactions" value="650"/>
</dbReference>
<dbReference type="ComplexPortal" id="CPX-117">
    <property type="entry name" value="Glycoprotein Ib-IX-V-Filamin-A complex"/>
</dbReference>
<dbReference type="ComplexPortal" id="CPX-122">
    <property type="entry name" value="Filamin A homodimer"/>
</dbReference>
<dbReference type="CORUM" id="P21333"/>
<dbReference type="DIP" id="DIP-1136N"/>
<dbReference type="FunCoup" id="P21333">
    <property type="interactions" value="1923"/>
</dbReference>
<dbReference type="IntAct" id="P21333">
    <property type="interactions" value="357"/>
</dbReference>
<dbReference type="MINT" id="P21333"/>
<dbReference type="STRING" id="9606.ENSP00000358866"/>
<dbReference type="ChEMBL" id="CHEMBL4804243"/>
<dbReference type="DrugBank" id="DB11638">
    <property type="generic name" value="Artenimol"/>
</dbReference>
<dbReference type="DrugBank" id="DB18817">
    <property type="generic name" value="Simufilam"/>
</dbReference>
<dbReference type="MoonDB" id="P21333">
    <property type="type" value="Predicted"/>
</dbReference>
<dbReference type="TCDB" id="8.A.66.1.4">
    <property type="family name" value="the dystrophin (dystrophin) family"/>
</dbReference>
<dbReference type="CarbonylDB" id="P21333"/>
<dbReference type="GlyCosmos" id="P21333">
    <property type="glycosylation" value="4 sites, 2 glycans"/>
</dbReference>
<dbReference type="GlyGen" id="P21333">
    <property type="glycosylation" value="18 sites, 9 N-linked glycans (8 sites), 2 O-linked glycans (8 sites)"/>
</dbReference>
<dbReference type="iPTMnet" id="P21333"/>
<dbReference type="MetOSite" id="P21333"/>
<dbReference type="PhosphoSitePlus" id="P21333"/>
<dbReference type="SwissPalm" id="P21333"/>
<dbReference type="BioMuta" id="FLNA"/>
<dbReference type="DMDM" id="116241365"/>
<dbReference type="OGP" id="P21333"/>
<dbReference type="CPTAC" id="CPTAC-508"/>
<dbReference type="CPTAC" id="CPTAC-509"/>
<dbReference type="jPOST" id="P21333"/>
<dbReference type="MassIVE" id="P21333"/>
<dbReference type="PaxDb" id="9606-ENSP00000358866"/>
<dbReference type="PeptideAtlas" id="P21333"/>
<dbReference type="PRIDE" id="P21333"/>
<dbReference type="ProteomicsDB" id="53859">
    <molecule id="P21333-1"/>
</dbReference>
<dbReference type="ProteomicsDB" id="53860">
    <molecule id="P21333-2"/>
</dbReference>
<dbReference type="Pumba" id="P21333"/>
<dbReference type="ABCD" id="P21333">
    <property type="antibodies" value="3 sequenced antibodies"/>
</dbReference>
<dbReference type="Antibodypedia" id="341">
    <property type="antibodies" value="670 antibodies from 41 providers"/>
</dbReference>
<dbReference type="DNASU" id="2316"/>
<dbReference type="Ensembl" id="ENST00000360319.9">
    <molecule id="P21333-2"/>
    <property type="protein sequence ID" value="ENSP00000353467.4"/>
    <property type="gene ID" value="ENSG00000196924.19"/>
</dbReference>
<dbReference type="Ensembl" id="ENST00000369850.10">
    <molecule id="P21333-1"/>
    <property type="protein sequence ID" value="ENSP00000358866.3"/>
    <property type="gene ID" value="ENSG00000196924.19"/>
</dbReference>
<dbReference type="GeneID" id="2316"/>
<dbReference type="KEGG" id="hsa:2316"/>
<dbReference type="MANE-Select" id="ENST00000369850.10">
    <property type="protein sequence ID" value="ENSP00000358866.3"/>
    <property type="RefSeq nucleotide sequence ID" value="NM_001110556.2"/>
    <property type="RefSeq protein sequence ID" value="NP_001104026.1"/>
</dbReference>
<dbReference type="UCSC" id="uc004fkk.3">
    <molecule id="P21333-1"/>
    <property type="organism name" value="human"/>
</dbReference>
<dbReference type="AGR" id="HGNC:3754"/>
<dbReference type="CTD" id="2316"/>
<dbReference type="DisGeNET" id="2316"/>
<dbReference type="GeneCards" id="FLNA"/>
<dbReference type="GeneReviews" id="FLNA"/>
<dbReference type="HGNC" id="HGNC:3754">
    <property type="gene designation" value="FLNA"/>
</dbReference>
<dbReference type="HPA" id="ENSG00000196924">
    <property type="expression patterns" value="Tissue enhanced (endometrium, intestine)"/>
</dbReference>
<dbReference type="MalaCards" id="FLNA"/>
<dbReference type="MIM" id="300017">
    <property type="type" value="gene"/>
</dbReference>
<dbReference type="MIM" id="300048">
    <property type="type" value="phenotype"/>
</dbReference>
<dbReference type="MIM" id="300049">
    <property type="type" value="phenotype"/>
</dbReference>
<dbReference type="MIM" id="300244">
    <property type="type" value="phenotype"/>
</dbReference>
<dbReference type="MIM" id="300321">
    <property type="type" value="phenotype"/>
</dbReference>
<dbReference type="MIM" id="304120">
    <property type="type" value="phenotype"/>
</dbReference>
<dbReference type="MIM" id="305620">
    <property type="type" value="phenotype"/>
</dbReference>
<dbReference type="MIM" id="309350">
    <property type="type" value="phenotype"/>
</dbReference>
<dbReference type="MIM" id="311300">
    <property type="type" value="phenotype"/>
</dbReference>
<dbReference type="MIM" id="314400">
    <property type="type" value="phenotype"/>
</dbReference>
<dbReference type="neXtProt" id="NX_P21333"/>
<dbReference type="OpenTargets" id="ENSG00000196924"/>
<dbReference type="Orphanet" id="2301">
    <property type="disease" value="Congenital short bowel syndrome"/>
</dbReference>
<dbReference type="Orphanet" id="555877">
    <property type="disease" value="FLNA-related X-linked myxomatous valvular dysplasia"/>
</dbReference>
<dbReference type="Orphanet" id="1826">
    <property type="disease" value="Frontometaphyseal dysplasia"/>
</dbReference>
<dbReference type="Orphanet" id="2484">
    <property type="disease" value="Melnick-Needles syndrome"/>
</dbReference>
<dbReference type="Orphanet" id="99811">
    <property type="disease" value="Neuronal intestinal pseudoobstruction"/>
</dbReference>
<dbReference type="Orphanet" id="90650">
    <property type="disease" value="Otopalatodigital syndrome type 1"/>
</dbReference>
<dbReference type="Orphanet" id="90652">
    <property type="disease" value="Otopalatodigital syndrome type 2"/>
</dbReference>
<dbReference type="Orphanet" id="98892">
    <property type="disease" value="Periventricular nodular heterotopia"/>
</dbReference>
<dbReference type="Orphanet" id="88630">
    <property type="disease" value="Terminal osseous dysplasia-pigmentary defects syndrome"/>
</dbReference>
<dbReference type="Orphanet" id="75497">
    <property type="disease" value="X-linked Ehlers-Danlos syndrome"/>
</dbReference>
<dbReference type="Orphanet" id="482606">
    <property type="disease" value="X-linked keloid scarring-reduced joint mobility-increased optic cup-to-disc ratio syndrome"/>
</dbReference>
<dbReference type="PharmGKB" id="PA28172"/>
<dbReference type="VEuPathDB" id="HostDB:ENSG00000196924"/>
<dbReference type="eggNOG" id="KOG0518">
    <property type="taxonomic scope" value="Eukaryota"/>
</dbReference>
<dbReference type="GeneTree" id="ENSGT00940000153588"/>
<dbReference type="InParanoid" id="P21333"/>
<dbReference type="OMA" id="KWADEHI"/>
<dbReference type="OrthoDB" id="5334309at2759"/>
<dbReference type="PAN-GO" id="P21333">
    <property type="GO annotations" value="0 GO annotations based on evolutionary models"/>
</dbReference>
<dbReference type="PhylomeDB" id="P21333"/>
<dbReference type="TreeFam" id="TF313685"/>
<dbReference type="PathwayCommons" id="P21333"/>
<dbReference type="Reactome" id="R-HSA-114608">
    <property type="pathway name" value="Platelet degranulation"/>
</dbReference>
<dbReference type="Reactome" id="R-HSA-430116">
    <property type="pathway name" value="GP1b-IX-V activation signalling"/>
</dbReference>
<dbReference type="Reactome" id="R-HSA-446353">
    <property type="pathway name" value="Cell-extracellular matrix interactions"/>
</dbReference>
<dbReference type="Reactome" id="R-HSA-5627123">
    <property type="pathway name" value="RHO GTPases activate PAKs"/>
</dbReference>
<dbReference type="Reactome" id="R-HSA-8983711">
    <property type="pathway name" value="OAS antiviral response"/>
</dbReference>
<dbReference type="SignaLink" id="P21333"/>
<dbReference type="SIGNOR" id="P21333"/>
<dbReference type="BioGRID-ORCS" id="2316">
    <property type="hits" value="14 hits in 785 CRISPR screens"/>
</dbReference>
<dbReference type="ChiTaRS" id="FLNA">
    <property type="organism name" value="human"/>
</dbReference>
<dbReference type="EvolutionaryTrace" id="P21333"/>
<dbReference type="GeneWiki" id="FLNA"/>
<dbReference type="GenomeRNAi" id="2316"/>
<dbReference type="Pharos" id="P21333">
    <property type="development level" value="Tbio"/>
</dbReference>
<dbReference type="PRO" id="PR:P21333"/>
<dbReference type="Proteomes" id="UP000005640">
    <property type="component" value="Chromosome X"/>
</dbReference>
<dbReference type="RNAct" id="P21333">
    <property type="molecule type" value="protein"/>
</dbReference>
<dbReference type="Bgee" id="ENSG00000196924">
    <property type="expression patterns" value="Expressed in right coronary artery and 200 other cell types or tissues"/>
</dbReference>
<dbReference type="ExpressionAtlas" id="P21333">
    <property type="expression patterns" value="baseline and differential"/>
</dbReference>
<dbReference type="GO" id="GO:0015629">
    <property type="term" value="C:actin cytoskeleton"/>
    <property type="evidence" value="ECO:0000314"/>
    <property type="project" value="HPA"/>
</dbReference>
<dbReference type="GO" id="GO:0005884">
    <property type="term" value="C:actin filament"/>
    <property type="evidence" value="ECO:0007669"/>
    <property type="project" value="Ensembl"/>
</dbReference>
<dbReference type="GO" id="GO:0097440">
    <property type="term" value="C:apical dendrite"/>
    <property type="evidence" value="ECO:0007669"/>
    <property type="project" value="Ensembl"/>
</dbReference>
<dbReference type="GO" id="GO:0005911">
    <property type="term" value="C:cell-cell junction"/>
    <property type="evidence" value="ECO:0000314"/>
    <property type="project" value="UniProtKB"/>
</dbReference>
<dbReference type="GO" id="GO:0030863">
    <property type="term" value="C:cortical cytoskeleton"/>
    <property type="evidence" value="ECO:0007669"/>
    <property type="project" value="Ensembl"/>
</dbReference>
<dbReference type="GO" id="GO:0005737">
    <property type="term" value="C:cytoplasm"/>
    <property type="evidence" value="ECO:0000314"/>
    <property type="project" value="UniProtKB"/>
</dbReference>
<dbReference type="GO" id="GO:0005829">
    <property type="term" value="C:cytosol"/>
    <property type="evidence" value="ECO:0000314"/>
    <property type="project" value="HPA"/>
</dbReference>
<dbReference type="GO" id="GO:0043198">
    <property type="term" value="C:dendritic shaft"/>
    <property type="evidence" value="ECO:0007669"/>
    <property type="project" value="Ensembl"/>
</dbReference>
<dbReference type="GO" id="GO:0070062">
    <property type="term" value="C:extracellular exosome"/>
    <property type="evidence" value="ECO:0007005"/>
    <property type="project" value="UniProtKB"/>
</dbReference>
<dbReference type="GO" id="GO:0005576">
    <property type="term" value="C:extracellular region"/>
    <property type="evidence" value="ECO:0000304"/>
    <property type="project" value="Reactome"/>
</dbReference>
<dbReference type="GO" id="GO:0005925">
    <property type="term" value="C:focal adhesion"/>
    <property type="evidence" value="ECO:0007005"/>
    <property type="project" value="UniProtKB"/>
</dbReference>
<dbReference type="GO" id="GO:0098978">
    <property type="term" value="C:glutamatergic synapse"/>
    <property type="evidence" value="ECO:0007669"/>
    <property type="project" value="Ensembl"/>
</dbReference>
<dbReference type="GO" id="GO:1990779">
    <property type="term" value="C:glycoprotein Ib-IX-V complex"/>
    <property type="evidence" value="ECO:0000303"/>
    <property type="project" value="ComplexPortal"/>
</dbReference>
<dbReference type="GO" id="GO:0030426">
    <property type="term" value="C:growth cone"/>
    <property type="evidence" value="ECO:0007669"/>
    <property type="project" value="UniProtKB-SubCell"/>
</dbReference>
<dbReference type="GO" id="GO:0016020">
    <property type="term" value="C:membrane"/>
    <property type="evidence" value="ECO:0007005"/>
    <property type="project" value="UniProtKB"/>
</dbReference>
<dbReference type="GO" id="GO:0031523">
    <property type="term" value="C:Myb complex"/>
    <property type="evidence" value="ECO:0000314"/>
    <property type="project" value="MGI"/>
</dbReference>
<dbReference type="GO" id="GO:0005730">
    <property type="term" value="C:nucleolus"/>
    <property type="evidence" value="ECO:0000315"/>
    <property type="project" value="CACAO"/>
</dbReference>
<dbReference type="GO" id="GO:0005634">
    <property type="term" value="C:nucleus"/>
    <property type="evidence" value="ECO:0000314"/>
    <property type="project" value="UniProtKB"/>
</dbReference>
<dbReference type="GO" id="GO:0043204">
    <property type="term" value="C:perikaryon"/>
    <property type="evidence" value="ECO:0007669"/>
    <property type="project" value="UniProtKB-SubCell"/>
</dbReference>
<dbReference type="GO" id="GO:0048471">
    <property type="term" value="C:perinuclear region of cytoplasm"/>
    <property type="evidence" value="ECO:0007669"/>
    <property type="project" value="Ensembl"/>
</dbReference>
<dbReference type="GO" id="GO:0005886">
    <property type="term" value="C:plasma membrane"/>
    <property type="evidence" value="ECO:0000314"/>
    <property type="project" value="BHF-UCL"/>
</dbReference>
<dbReference type="GO" id="GO:0002102">
    <property type="term" value="C:podosome"/>
    <property type="evidence" value="ECO:0000250"/>
    <property type="project" value="UniProtKB"/>
</dbReference>
<dbReference type="GO" id="GO:0098794">
    <property type="term" value="C:postsynapse"/>
    <property type="evidence" value="ECO:0007669"/>
    <property type="project" value="Ensembl"/>
</dbReference>
<dbReference type="GO" id="GO:0030018">
    <property type="term" value="C:Z disc"/>
    <property type="evidence" value="ECO:0000250"/>
    <property type="project" value="BHF-UCL"/>
</dbReference>
<dbReference type="GO" id="GO:0051015">
    <property type="term" value="F:actin filament binding"/>
    <property type="evidence" value="ECO:0000314"/>
    <property type="project" value="BHF-UCL"/>
</dbReference>
<dbReference type="GO" id="GO:0045296">
    <property type="term" value="F:cadherin binding"/>
    <property type="evidence" value="ECO:0007005"/>
    <property type="project" value="BHF-UCL"/>
</dbReference>
<dbReference type="GO" id="GO:0140297">
    <property type="term" value="F:DNA-binding transcription factor binding"/>
    <property type="evidence" value="ECO:0000353"/>
    <property type="project" value="UniProtKB"/>
</dbReference>
<dbReference type="GO" id="GO:0034988">
    <property type="term" value="F:Fc-gamma receptor I complex binding"/>
    <property type="evidence" value="ECO:0000314"/>
    <property type="project" value="BHF-UCL"/>
</dbReference>
<dbReference type="GO" id="GO:0001664">
    <property type="term" value="F:G protein-coupled receptor binding"/>
    <property type="evidence" value="ECO:0000353"/>
    <property type="project" value="UniProtKB"/>
</dbReference>
<dbReference type="GO" id="GO:0051020">
    <property type="term" value="F:GTPase binding"/>
    <property type="evidence" value="ECO:0000353"/>
    <property type="project" value="UniProtKB"/>
</dbReference>
<dbReference type="GO" id="GO:0019900">
    <property type="term" value="F:kinase binding"/>
    <property type="evidence" value="ECO:0000353"/>
    <property type="project" value="UniProtKB"/>
</dbReference>
<dbReference type="GO" id="GO:0015459">
    <property type="term" value="F:potassium channel regulator activity"/>
    <property type="evidence" value="ECO:0000314"/>
    <property type="project" value="BHF-UCL"/>
</dbReference>
<dbReference type="GO" id="GO:0042803">
    <property type="term" value="F:protein homodimerization activity"/>
    <property type="evidence" value="ECO:0000314"/>
    <property type="project" value="BHF-UCL"/>
</dbReference>
<dbReference type="GO" id="GO:0140311">
    <property type="term" value="F:protein sequestering activity"/>
    <property type="evidence" value="ECO:0000315"/>
    <property type="project" value="BHF-UCL"/>
</dbReference>
<dbReference type="GO" id="GO:0003723">
    <property type="term" value="F:RNA binding"/>
    <property type="evidence" value="ECO:0007005"/>
    <property type="project" value="UniProtKB"/>
</dbReference>
<dbReference type="GO" id="GO:0046332">
    <property type="term" value="F:SMAD binding"/>
    <property type="evidence" value="ECO:0007669"/>
    <property type="project" value="Ensembl"/>
</dbReference>
<dbReference type="GO" id="GO:0031267">
    <property type="term" value="F:small GTPase binding"/>
    <property type="evidence" value="ECO:0000314"/>
    <property type="project" value="BHF-UCL"/>
</dbReference>
<dbReference type="GO" id="GO:0044325">
    <property type="term" value="F:transmembrane transporter binding"/>
    <property type="evidence" value="ECO:0000353"/>
    <property type="project" value="BHF-UCL"/>
</dbReference>
<dbReference type="GO" id="GO:0051764">
    <property type="term" value="P:actin crosslink formation"/>
    <property type="evidence" value="ECO:0000314"/>
    <property type="project" value="BHF-UCL"/>
</dbReference>
<dbReference type="GO" id="GO:0030036">
    <property type="term" value="P:actin cytoskeleton organization"/>
    <property type="evidence" value="ECO:0000314"/>
    <property type="project" value="BHF-UCL"/>
</dbReference>
<dbReference type="GO" id="GO:0007195">
    <property type="term" value="P:adenylate cyclase-inhibiting dopamine receptor signaling pathway"/>
    <property type="evidence" value="ECO:0000315"/>
    <property type="project" value="BHF-UCL"/>
</dbReference>
<dbReference type="GO" id="GO:0007597">
    <property type="term" value="P:blood coagulation, intrinsic pathway"/>
    <property type="evidence" value="ECO:0000303"/>
    <property type="project" value="ComplexPortal"/>
</dbReference>
<dbReference type="GO" id="GO:0021987">
    <property type="term" value="P:cerebral cortex development"/>
    <property type="evidence" value="ECO:0007669"/>
    <property type="project" value="Ensembl"/>
</dbReference>
<dbReference type="GO" id="GO:0060271">
    <property type="term" value="P:cilium assembly"/>
    <property type="evidence" value="ECO:0000315"/>
    <property type="project" value="UniProtKB"/>
</dbReference>
<dbReference type="GO" id="GO:0045184">
    <property type="term" value="P:establishment of protein localization"/>
    <property type="evidence" value="ECO:0000314"/>
    <property type="project" value="BHF-UCL"/>
</dbReference>
<dbReference type="GO" id="GO:0097368">
    <property type="term" value="P:establishment of Sertoli cell barrier"/>
    <property type="evidence" value="ECO:0007669"/>
    <property type="project" value="Ensembl"/>
</dbReference>
<dbReference type="GO" id="GO:0021943">
    <property type="term" value="P:formation of radial glial scaffolds"/>
    <property type="evidence" value="ECO:0007669"/>
    <property type="project" value="Ensembl"/>
</dbReference>
<dbReference type="GO" id="GO:0035855">
    <property type="term" value="P:megakaryocyte development"/>
    <property type="evidence" value="ECO:0000303"/>
    <property type="project" value="ComplexPortal"/>
</dbReference>
<dbReference type="GO" id="GO:0090307">
    <property type="term" value="P:mitotic spindle assembly"/>
    <property type="evidence" value="ECO:0000314"/>
    <property type="project" value="MGI"/>
</dbReference>
<dbReference type="GO" id="GO:0042789">
    <property type="term" value="P:mRNA transcription by RNA polymerase II"/>
    <property type="evidence" value="ECO:0007669"/>
    <property type="project" value="Ensembl"/>
</dbReference>
<dbReference type="GO" id="GO:0043066">
    <property type="term" value="P:negative regulation of apoptotic process"/>
    <property type="evidence" value="ECO:0000315"/>
    <property type="project" value="CACAO"/>
</dbReference>
<dbReference type="GO" id="GO:0043433">
    <property type="term" value="P:negative regulation of DNA-binding transcription factor activity"/>
    <property type="evidence" value="ECO:0000314"/>
    <property type="project" value="UniProtKB"/>
</dbReference>
<dbReference type="GO" id="GO:0042177">
    <property type="term" value="P:negative regulation of protein catabolic process"/>
    <property type="evidence" value="ECO:0000315"/>
    <property type="project" value="BHF-UCL"/>
</dbReference>
<dbReference type="GO" id="GO:0016479">
    <property type="term" value="P:negative regulation of transcription by RNA polymerase I"/>
    <property type="evidence" value="ECO:0000314"/>
    <property type="project" value="CACAO"/>
</dbReference>
<dbReference type="GO" id="GO:0070527">
    <property type="term" value="P:platelet aggregation"/>
    <property type="evidence" value="ECO:0007001"/>
    <property type="project" value="UniProtKB"/>
</dbReference>
<dbReference type="GO" id="GO:0032233">
    <property type="term" value="P:positive regulation of actin filament bundle assembly"/>
    <property type="evidence" value="ECO:0007669"/>
    <property type="project" value="Ensembl"/>
</dbReference>
<dbReference type="GO" id="GO:0043123">
    <property type="term" value="P:positive regulation of canonical NF-kappaB signal transduction"/>
    <property type="evidence" value="ECO:0007001"/>
    <property type="project" value="UniProtKB"/>
</dbReference>
<dbReference type="GO" id="GO:2001046">
    <property type="term" value="P:positive regulation of integrin-mediated signaling pathway"/>
    <property type="evidence" value="ECO:0000315"/>
    <property type="project" value="CACAO"/>
</dbReference>
<dbReference type="GO" id="GO:2000179">
    <property type="term" value="P:positive regulation of neural precursor cell proliferation"/>
    <property type="evidence" value="ECO:0007669"/>
    <property type="project" value="Ensembl"/>
</dbReference>
<dbReference type="GO" id="GO:2001224">
    <property type="term" value="P:positive regulation of neuron migration"/>
    <property type="evidence" value="ECO:0007669"/>
    <property type="project" value="Ensembl"/>
</dbReference>
<dbReference type="GO" id="GO:0010572">
    <property type="term" value="P:positive regulation of platelet activation"/>
    <property type="evidence" value="ECO:0000303"/>
    <property type="project" value="ComplexPortal"/>
</dbReference>
<dbReference type="GO" id="GO:1901381">
    <property type="term" value="P:positive regulation of potassium ion transmembrane transport"/>
    <property type="evidence" value="ECO:0000314"/>
    <property type="project" value="BHF-UCL"/>
</dbReference>
<dbReference type="GO" id="GO:0042307">
    <property type="term" value="P:positive regulation of protein import into nucleus"/>
    <property type="evidence" value="ECO:0000315"/>
    <property type="project" value="UniProtKB"/>
</dbReference>
<dbReference type="GO" id="GO:1900026">
    <property type="term" value="P:positive regulation of substrate adhesion-dependent cell spreading"/>
    <property type="evidence" value="ECO:0000315"/>
    <property type="project" value="CACAO"/>
</dbReference>
<dbReference type="GO" id="GO:1902396">
    <property type="term" value="P:protein localization to bicellular tight junction"/>
    <property type="evidence" value="ECO:0007669"/>
    <property type="project" value="Ensembl"/>
</dbReference>
<dbReference type="GO" id="GO:0034394">
    <property type="term" value="P:protein localization to cell surface"/>
    <property type="evidence" value="ECO:0000314"/>
    <property type="project" value="BHF-UCL"/>
</dbReference>
<dbReference type="GO" id="GO:0072659">
    <property type="term" value="P:protein localization to plasma membrane"/>
    <property type="evidence" value="ECO:0000314"/>
    <property type="project" value="BHF-UCL"/>
</dbReference>
<dbReference type="GO" id="GO:0050821">
    <property type="term" value="P:protein stabilization"/>
    <property type="evidence" value="ECO:0000315"/>
    <property type="project" value="BHF-UCL"/>
</dbReference>
<dbReference type="GO" id="GO:0043113">
    <property type="term" value="P:receptor clustering"/>
    <property type="evidence" value="ECO:0000314"/>
    <property type="project" value="BHF-UCL"/>
</dbReference>
<dbReference type="GO" id="GO:0030334">
    <property type="term" value="P:regulation of cell migration"/>
    <property type="evidence" value="ECO:0000314"/>
    <property type="project" value="UniProtKB"/>
</dbReference>
<dbReference type="GO" id="GO:1905000">
    <property type="term" value="P:regulation of membrane repolarization during atrial cardiac muscle cell action potential"/>
    <property type="evidence" value="ECO:0000305"/>
    <property type="project" value="BHF-UCL"/>
</dbReference>
<dbReference type="GO" id="GO:1905031">
    <property type="term" value="P:regulation of membrane repolarization during cardiac muscle cell action potential"/>
    <property type="evidence" value="ECO:0000250"/>
    <property type="project" value="BHF-UCL"/>
</dbReference>
<dbReference type="GO" id="GO:0051209">
    <property type="term" value="P:release of sequestered calcium ion into cytosol"/>
    <property type="evidence" value="ECO:0000303"/>
    <property type="project" value="ComplexPortal"/>
</dbReference>
<dbReference type="GO" id="GO:0071526">
    <property type="term" value="P:semaphorin-plexin signaling pathway"/>
    <property type="evidence" value="ECO:0000316"/>
    <property type="project" value="WormBase"/>
</dbReference>
<dbReference type="GO" id="GO:0090042">
    <property type="term" value="P:tubulin deacetylation"/>
    <property type="evidence" value="ECO:0000315"/>
    <property type="project" value="CACAO"/>
</dbReference>
<dbReference type="GO" id="GO:0044319">
    <property type="term" value="P:wound healing, spreading of cells"/>
    <property type="evidence" value="ECO:0000314"/>
    <property type="project" value="UniProtKB"/>
</dbReference>
<dbReference type="CDD" id="cd21308">
    <property type="entry name" value="CH_FLNA_rpt1"/>
    <property type="match status" value="1"/>
</dbReference>
<dbReference type="CDD" id="cd21312">
    <property type="entry name" value="CH_FLNA_rpt2"/>
    <property type="match status" value="1"/>
</dbReference>
<dbReference type="DisProt" id="DP01950"/>
<dbReference type="FunFam" id="1.10.418.10:FF:000006">
    <property type="entry name" value="Filamin-B isoform A"/>
    <property type="match status" value="1"/>
</dbReference>
<dbReference type="FunFam" id="2.60.40.10:FF:000042">
    <property type="entry name" value="Filamin-B isoform B"/>
    <property type="match status" value="2"/>
</dbReference>
<dbReference type="FunFam" id="2.60.40.10:FF:000092">
    <property type="entry name" value="Filamin-B isoform B"/>
    <property type="match status" value="1"/>
</dbReference>
<dbReference type="FunFam" id="1.10.418.10:FF:000008">
    <property type="entry name" value="Filamin-B isoform C"/>
    <property type="match status" value="1"/>
</dbReference>
<dbReference type="FunFam" id="2.60.40.10:FF:000007">
    <property type="entry name" value="Filamin-B isoform C"/>
    <property type="match status" value="3"/>
</dbReference>
<dbReference type="FunFam" id="2.60.40.10:FF:000079">
    <property type="entry name" value="Filamin-B isoform C"/>
    <property type="match status" value="1"/>
</dbReference>
<dbReference type="FunFam" id="2.60.40.10:FF:000125">
    <property type="entry name" value="filamin-B isoform X1"/>
    <property type="match status" value="1"/>
</dbReference>
<dbReference type="FunFam" id="2.60.40.10:FF:000138">
    <property type="entry name" value="filamin-B isoform X1"/>
    <property type="match status" value="1"/>
</dbReference>
<dbReference type="FunFam" id="2.60.40.10:FF:000154">
    <property type="entry name" value="filamin-B isoform X1"/>
    <property type="match status" value="1"/>
</dbReference>
<dbReference type="FunFam" id="2.60.40.10:FF:000102">
    <property type="entry name" value="filamin-B isoform X2"/>
    <property type="match status" value="1"/>
</dbReference>
<dbReference type="FunFam" id="2.60.40.10:FF:000001">
    <property type="entry name" value="Filamin-C isoform b"/>
    <property type="match status" value="5"/>
</dbReference>
<dbReference type="FunFam" id="2.60.40.10:FF:000105">
    <property type="entry name" value="filamin-C isoform X1"/>
    <property type="match status" value="1"/>
</dbReference>
<dbReference type="FunFam" id="2.60.40.10:FF:000115">
    <property type="entry name" value="filamin-C isoform X1"/>
    <property type="match status" value="1"/>
</dbReference>
<dbReference type="FunFam" id="2.60.40.10:FF:000126">
    <property type="entry name" value="filamin-C isoform X1"/>
    <property type="match status" value="1"/>
</dbReference>
<dbReference type="FunFam" id="2.60.40.10:FF:000157">
    <property type="entry name" value="filamin-C isoform X1"/>
    <property type="match status" value="1"/>
</dbReference>
<dbReference type="FunFam" id="2.60.40.10:FF:000096">
    <property type="entry name" value="filamin-C isoform X2"/>
    <property type="match status" value="1"/>
</dbReference>
<dbReference type="FunFam" id="2.60.40.10:FF:000118">
    <property type="entry name" value="filamin-C isoform X2"/>
    <property type="match status" value="1"/>
</dbReference>
<dbReference type="FunFam" id="2.60.40.10:FF:000122">
    <property type="entry name" value="filamin-C isoform X2"/>
    <property type="match status" value="1"/>
</dbReference>
<dbReference type="FunFam" id="2.60.40.10:FF:000168">
    <property type="entry name" value="filamin-C isoform X2"/>
    <property type="match status" value="1"/>
</dbReference>
<dbReference type="Gene3D" id="1.10.418.10">
    <property type="entry name" value="Calponin-like domain"/>
    <property type="match status" value="2"/>
</dbReference>
<dbReference type="Gene3D" id="2.60.40.10">
    <property type="entry name" value="Immunoglobulins"/>
    <property type="match status" value="24"/>
</dbReference>
<dbReference type="InterPro" id="IPR001589">
    <property type="entry name" value="Actinin_actin-bd_CS"/>
</dbReference>
<dbReference type="InterPro" id="IPR001715">
    <property type="entry name" value="CH_dom"/>
</dbReference>
<dbReference type="InterPro" id="IPR036872">
    <property type="entry name" value="CH_dom_sf"/>
</dbReference>
<dbReference type="InterPro" id="IPR044801">
    <property type="entry name" value="Filamin"/>
</dbReference>
<dbReference type="InterPro" id="IPR017868">
    <property type="entry name" value="Filamin/ABP280_repeat-like"/>
</dbReference>
<dbReference type="InterPro" id="IPR001298">
    <property type="entry name" value="Filamin/ABP280_rpt"/>
</dbReference>
<dbReference type="InterPro" id="IPR013783">
    <property type="entry name" value="Ig-like_fold"/>
</dbReference>
<dbReference type="InterPro" id="IPR014756">
    <property type="entry name" value="Ig_E-set"/>
</dbReference>
<dbReference type="PANTHER" id="PTHR38537:SF8">
    <property type="entry name" value="FILAMIN-A"/>
    <property type="match status" value="1"/>
</dbReference>
<dbReference type="PANTHER" id="PTHR38537">
    <property type="entry name" value="JITTERBUG, ISOFORM N"/>
    <property type="match status" value="1"/>
</dbReference>
<dbReference type="Pfam" id="PF00307">
    <property type="entry name" value="CH"/>
    <property type="match status" value="2"/>
</dbReference>
<dbReference type="Pfam" id="PF00630">
    <property type="entry name" value="Filamin"/>
    <property type="match status" value="24"/>
</dbReference>
<dbReference type="SMART" id="SM00033">
    <property type="entry name" value="CH"/>
    <property type="match status" value="2"/>
</dbReference>
<dbReference type="SMART" id="SM00557">
    <property type="entry name" value="IG_FLMN"/>
    <property type="match status" value="24"/>
</dbReference>
<dbReference type="SUPFAM" id="SSF47576">
    <property type="entry name" value="Calponin-homology domain, CH-domain"/>
    <property type="match status" value="1"/>
</dbReference>
<dbReference type="SUPFAM" id="SSF81296">
    <property type="entry name" value="E set domains"/>
    <property type="match status" value="24"/>
</dbReference>
<dbReference type="PROSITE" id="PS00019">
    <property type="entry name" value="ACTININ_1"/>
    <property type="match status" value="1"/>
</dbReference>
<dbReference type="PROSITE" id="PS00020">
    <property type="entry name" value="ACTININ_2"/>
    <property type="match status" value="1"/>
</dbReference>
<dbReference type="PROSITE" id="PS50021">
    <property type="entry name" value="CH"/>
    <property type="match status" value="2"/>
</dbReference>
<dbReference type="PROSITE" id="PS50194">
    <property type="entry name" value="FILAMIN_REPEAT"/>
    <property type="match status" value="24"/>
</dbReference>